<accession>P35670</accession>
<accession>Q16318</accession>
<accession>Q16319</accession>
<accession>Q4U3V3</accession>
<accession>Q59FJ9</accession>
<accession>Q5T7X7</accession>
<sequence>MPEQERQITAREGASRKILSKLSLPTRAWEPAMKKSFAFDNVGYEGGLDGLGPSSQVATSTVRILGMTCQSCVKSIEDRISNLKGIISMKVSLEQGSATVKYVPSVVCLQQVCHQIGDMGFEASIAEGKAASWPSRSLPAQEAVVKLRVEGMTCQSCVSSIEGKVRKLQGVVRVKVSLSNQEAVITYQPYLIQPEDLRDHVNDMGFEAAIKSKVAPLSLGPIDIERLQSTNPKRPLSSANQNFNNSETLGHQGSHVVTLQLRIDGMHCKSCVLNIEENIGQLLGVQSIQVSLENKTAQVKYDPSCTSPVALQRAIEALPPGNFKVSLPDGAEGSGTDHRSSSSHSPGSPPRNQVQGTCSTTLIAIAGMTCASCVHSIEGMISQLEGVQQISVSLAEGTATVLYNPSVISPEELRAAIEDMGFEASVVSESCSTNPLGNHSAGNSMVQTTDGTPTSVQEVAPHTGRLPANHAPDILAKSPQSTRAVAPQKCFLQIKGMTCASCVSNIERNLQKEAGVLSVLVALMAGKAEIKYDPEVIQPLEIAQFIQDLGFEAAVMEDYAGSDGNIELTITGMTCASCVHNIESKLTRTNGITYASVALATSKALVKFDPEIIGPRDIIKIIEEIGFHASLAQRNPNAHHLDHKMEIKQWKKSFLCSLVFGIPVMALMIYMLIPSNEPHQSMVLDHNIIPGLSILNLIFFILCTFVQLLGGWYFYVQAYKSLRHRSANMDVLIVLATSIAYVYSLVILVVAVAEKAERSPVTFFDTPPMLFVFIALGRWLEHLAKSKTSEALAKLMSLQATEATVVTLGEDNLIIREEQVPMELVQRGDIVKVVPGGKFPVDGKVLEGNTMADESLITGEAMPVTKKPGSTVIAGSINAHGSVLIKATHVGNDTTLAQIVKLVEEAQMSKAPIQQLADRFSGYFVPFIIIMSTLTLVVWIVIGFIDFGVVQRYFPNPNKHISQTEVIIRFAFQTSITVLCIACPCSLGLATPTAVMVGTGVAAQNGILIKGGKPLEMAHKIKTVMFDKTGTITHGVPRVMRVLLLGDVATLPLRKVLAVVGTAEASSEHPLGVAVTKYCKEELGTETLGYCTDFQAVPGCGIGCKVSNVEGILAHSERPLSAPASHLNEAGSLPAEKDAVPQTFSVLIGNREWLRRNGLTISSDVSDAMTDHEMKGQTAILVAIDGVLCGMIAIADAVKQEAALAVHTLQSMGVDVVLITGDNRKTARAIATQVGINKVFAEVLPSHKVAKVQELQNKGKKVAMVGDGVNDSPALAQADMGVAIGTGTDVAIEAADVVLIRNDLLDVVASIHLSKRTVRRIRINLVLALIYNLVGIPIAAGVFMPIGIVLQPWMGSAAMAASSVSVVLSSLQLKCYKKPDLERYEAQAHGHMKPLTASQVSVHIGMDDRWRDSPRATPWDQVSYVSQVSLSSLTSDKPSRHSAAADDDGDKWSLLLNGRDEEQYI</sequence>
<organism>
    <name type="scientific">Homo sapiens</name>
    <name type="common">Human</name>
    <dbReference type="NCBI Taxonomy" id="9606"/>
    <lineage>
        <taxon>Eukaryota</taxon>
        <taxon>Metazoa</taxon>
        <taxon>Chordata</taxon>
        <taxon>Craniata</taxon>
        <taxon>Vertebrata</taxon>
        <taxon>Euteleostomi</taxon>
        <taxon>Mammalia</taxon>
        <taxon>Eutheria</taxon>
        <taxon>Euarchontoglires</taxon>
        <taxon>Primates</taxon>
        <taxon>Haplorrhini</taxon>
        <taxon>Catarrhini</taxon>
        <taxon>Hominidae</taxon>
        <taxon>Homo</taxon>
    </lineage>
</organism>
<feature type="chain" id="PRO_0000046314" description="Copper-transporting ATPase 2">
    <location>
        <begin position="1"/>
        <end position="1465"/>
    </location>
</feature>
<feature type="chain" id="PRO_0000296199" description="WND/140 kDa" evidence="110">
    <location>
        <begin status="unknown"/>
        <end position="1465"/>
    </location>
</feature>
<feature type="topological domain" description="Cytoplasmic" evidence="3">
    <location>
        <begin position="1"/>
        <end position="653"/>
    </location>
</feature>
<feature type="transmembrane region" description="Helical" evidence="3">
    <location>
        <begin position="654"/>
        <end position="675"/>
    </location>
</feature>
<feature type="topological domain" description="Extracellular" evidence="3">
    <location>
        <begin position="676"/>
        <end position="697"/>
    </location>
</feature>
<feature type="transmembrane region" description="Helical" evidence="3">
    <location>
        <begin position="698"/>
        <end position="717"/>
    </location>
</feature>
<feature type="topological domain" description="Cytoplasmic" evidence="3">
    <location>
        <begin position="718"/>
        <end position="724"/>
    </location>
</feature>
<feature type="transmembrane region" description="Helical" evidence="3">
    <location>
        <begin position="725"/>
        <end position="745"/>
    </location>
</feature>
<feature type="topological domain" description="Extracellular" evidence="3">
    <location>
        <begin position="746"/>
        <end position="764"/>
    </location>
</feature>
<feature type="transmembrane region" description="Helical" evidence="3">
    <location>
        <begin position="765"/>
        <end position="785"/>
    </location>
</feature>
<feature type="topological domain" description="Cytoplasmic" evidence="3">
    <location>
        <begin position="786"/>
        <end position="919"/>
    </location>
</feature>
<feature type="transmembrane region" description="Helical" evidence="3">
    <location>
        <begin position="920"/>
        <end position="942"/>
    </location>
</feature>
<feature type="topological domain" description="Extracellular" evidence="3">
    <location>
        <begin position="943"/>
        <end position="972"/>
    </location>
</feature>
<feature type="transmembrane region" description="Helical" evidence="3">
    <location>
        <begin position="973"/>
        <end position="994"/>
    </location>
</feature>
<feature type="topological domain" description="Cytoplasmic" evidence="3">
    <location>
        <begin position="995"/>
        <end position="1322"/>
    </location>
</feature>
<feature type="transmembrane region" description="Helical" evidence="3">
    <location>
        <begin position="1323"/>
        <end position="1340"/>
    </location>
</feature>
<feature type="topological domain" description="Extracellular" evidence="3">
    <location>
        <begin position="1341"/>
        <end position="1351"/>
    </location>
</feature>
<feature type="transmembrane region" description="Helical" evidence="3">
    <location>
        <begin position="1352"/>
        <end position="1371"/>
    </location>
</feature>
<feature type="topological domain" description="Cytoplasmic" evidence="3">
    <location>
        <begin position="1372"/>
        <end position="1465"/>
    </location>
</feature>
<feature type="domain" description="HMA 1" evidence="4">
    <location>
        <begin position="58"/>
        <end position="124"/>
    </location>
</feature>
<feature type="domain" description="HMA 2" evidence="4">
    <location>
        <begin position="143"/>
        <end position="209"/>
    </location>
</feature>
<feature type="domain" description="HMA 3" evidence="4">
    <location>
        <begin position="257"/>
        <end position="323"/>
    </location>
</feature>
<feature type="domain" description="HMA 4" evidence="4">
    <location>
        <begin position="359"/>
        <end position="425"/>
    </location>
</feature>
<feature type="domain" description="HMA 5" evidence="4">
    <location>
        <begin position="488"/>
        <end position="554"/>
    </location>
</feature>
<feature type="domain" description="HMA 6" evidence="4">
    <location>
        <begin position="564"/>
        <end position="630"/>
    </location>
</feature>
<feature type="region of interest" description="Disordered" evidence="5">
    <location>
        <begin position="230"/>
        <end position="249"/>
    </location>
</feature>
<feature type="region of interest" description="Disordered" evidence="5">
    <location>
        <begin position="322"/>
        <end position="355"/>
    </location>
</feature>
<feature type="active site" description="4-aspartylphosphate intermediate" evidence="1">
    <location>
        <position position="1027"/>
    </location>
</feature>
<feature type="binding site" evidence="4 52 54">
    <location>
        <position position="69"/>
    </location>
    <ligand>
        <name>Cu(+)</name>
        <dbReference type="ChEBI" id="CHEBI:49552"/>
        <label>1</label>
    </ligand>
</feature>
<feature type="binding site" evidence="4 52 54">
    <location>
        <position position="72"/>
    </location>
    <ligand>
        <name>Cu(+)</name>
        <dbReference type="ChEBI" id="CHEBI:49552"/>
        <label>1</label>
    </ligand>
</feature>
<feature type="binding site" evidence="4 52 54">
    <location>
        <position position="154"/>
    </location>
    <ligand>
        <name>Cu(+)</name>
        <dbReference type="ChEBI" id="CHEBI:49552"/>
        <label>2</label>
    </ligand>
</feature>
<feature type="binding site" evidence="4 52 54">
    <location>
        <position position="157"/>
    </location>
    <ligand>
        <name>Cu(+)</name>
        <dbReference type="ChEBI" id="CHEBI:49552"/>
        <label>2</label>
    </ligand>
</feature>
<feature type="binding site" evidence="4 52 54">
    <location>
        <position position="268"/>
    </location>
    <ligand>
        <name>Cu(+)</name>
        <dbReference type="ChEBI" id="CHEBI:49552"/>
        <label>3</label>
    </ligand>
</feature>
<feature type="binding site" evidence="4 52 54">
    <location>
        <position position="271"/>
    </location>
    <ligand>
        <name>Cu(+)</name>
        <dbReference type="ChEBI" id="CHEBI:49552"/>
        <label>3</label>
    </ligand>
</feature>
<feature type="binding site" evidence="4 52 54">
    <location>
        <position position="370"/>
    </location>
    <ligand>
        <name>Cu(+)</name>
        <dbReference type="ChEBI" id="CHEBI:49552"/>
        <label>4</label>
    </ligand>
</feature>
<feature type="binding site" evidence="4 52 54">
    <location>
        <position position="373"/>
    </location>
    <ligand>
        <name>Cu(+)</name>
        <dbReference type="ChEBI" id="CHEBI:49552"/>
        <label>4</label>
    </ligand>
</feature>
<feature type="binding site" evidence="4 52 54">
    <location>
        <position position="499"/>
    </location>
    <ligand>
        <name>Cu(+)</name>
        <dbReference type="ChEBI" id="CHEBI:49552"/>
        <label>5</label>
    </ligand>
</feature>
<feature type="binding site" evidence="4 52 54">
    <location>
        <position position="502"/>
    </location>
    <ligand>
        <name>Cu(+)</name>
        <dbReference type="ChEBI" id="CHEBI:49552"/>
        <label>5</label>
    </ligand>
</feature>
<feature type="binding site" evidence="4 52 54">
    <location>
        <position position="575"/>
    </location>
    <ligand>
        <name>Cu(+)</name>
        <dbReference type="ChEBI" id="CHEBI:49552"/>
        <label>6</label>
    </ligand>
</feature>
<feature type="binding site" evidence="4 52 54">
    <location>
        <position position="578"/>
    </location>
    <ligand>
        <name>Cu(+)</name>
        <dbReference type="ChEBI" id="CHEBI:49552"/>
        <label>6</label>
    </ligand>
</feature>
<feature type="binding site">
    <location>
        <position position="1267"/>
    </location>
    <ligand>
        <name>Mg(2+)</name>
        <dbReference type="ChEBI" id="CHEBI:18420"/>
    </ligand>
</feature>
<feature type="binding site">
    <location>
        <position position="1271"/>
    </location>
    <ligand>
        <name>Mg(2+)</name>
        <dbReference type="ChEBI" id="CHEBI:18420"/>
    </ligand>
</feature>
<feature type="modified residue" description="Phosphoserine" evidence="111">
    <location>
        <position position="23"/>
    </location>
</feature>
<feature type="modified residue" description="Phosphoserine" evidence="111">
    <location>
        <position position="478"/>
    </location>
</feature>
<feature type="modified residue" description="Phosphoserine" evidence="2">
    <location>
        <position position="481"/>
    </location>
</feature>
<feature type="modified residue" description="Phosphoserine" evidence="2">
    <location>
        <position position="1398"/>
    </location>
</feature>
<feature type="splice variant" id="VSP_059175" description="In isoform 5." evidence="109">
    <original>RPLSSANQNFNNSETLGHQGSHVVTLQLRIDGMHCKSCVLNIEENIGQLLGVQSIQVSLENKTAQVKYDPSCTSPVALQRAIEALPPGNFKVSLPDGAEGSGTDHRSSSSHSPGSPPRNQVQGTCSTTLIAIAGMTCASCVHSIEGMISQLEGVQQISVSLAEGTATVLYNPSVISPEELRAAIEDMGFEASVVSESCSTNPLGNHSAGNSMVQTTDGTPTSVQEVAPHTGRLPANHAPDILAKSPQSTRAVAPQKCFLQIKGMTCASCVSNIERNLQKEAGVLSVLVALMAGKAEIKYDPEVIQPLEIAQFIQDLGFEAAVMEDYAGSDGNIELTITGMTCASCVHNIESKLTRTNGITYASVALATSKALVKFDPEIIGPRDIIKIIEEIGFHASLAQRNPNAHHLDHKMEIKQWKKSFLCSLVFGIPVMALMIYMLIPSNEPHQSMVLDHNIIPGLSILNLIFFILCTFVQLLGGWYFYVQAYKSLRHRSANMDVLIVLATSIAYVYSLVILVVAVAEKAERSPVTFFDTPPMLFVFIALGRWLEHLAKSKTSEALAKLMSLQATEATVVTLGEDNLIIREEQVPMELVQRGDIVKVVPGGKFPVDGKVLEGNTMADESLITGEAMPVTKKPGSTVIAGSINAHGSVLIKATHVGNDTTLAQIVKLVEEAQMSKAPIQQLADRFSGYFVPFIIIMSTLTLVVWIVIGFIDFGVVQRYFPNPNKHISQTEVIIRFAFQTSITVLCIACPCSLGLATPTAVMVGTGVAAQNGILIKGGKPLEMAHKIKTVMFDKTGTITHGVPRVMRVLLLGDVATLPLRKVLAVVGTAEASSEHPLGVAVTKYCKEELGTETLGYCTDFQAVPGCGIGCKVSNVEGILAHSERPLSAPASHLNEAGSLPAEKDAVPQTFSVLIGNREWLRRNGLTISSDVSDAMTDHEMKGQTAILVAIDGVLCGMIAIADAVKQEAALAVHTLQSMGVDVVLITGDNRKTARAIATQVGINKVFAEVLPSHKVAKVQELQNKGKKVAMVGDGVNDSPALAQADMGVAIGTGTDVAIEAADVVLIRNDLLDVVASIHLSKRTVRRIRINLVLALIYNLVGIPIAAGVFMPIGIVLQPWMGSAAMAASSVSVVLSSLQLKCYKKPDLERYEAQAHGHMKPLTASQVSVHIGMDDRWRDSPRATPWDQVSYVSQVSLSSLTSDKPSRHSAAADDDGDKWSLLLNGRDEEQYI</original>
    <variation>ETFIFC</variation>
    <location>
        <begin position="234"/>
        <end position="1465"/>
    </location>
</feature>
<feature type="splice variant" id="VSP_016559" description="In isoform 3." evidence="107">
    <location>
        <begin position="269"/>
        <end position="379"/>
    </location>
</feature>
<feature type="splice variant" id="VSP_000426" description="In isoform 2." evidence="105">
    <location>
        <begin position="624"/>
        <end position="785"/>
    </location>
</feature>
<feature type="splice variant" id="VSP_000427" description="In isoform 2." evidence="105">
    <location>
        <begin position="911"/>
        <end position="955"/>
    </location>
</feature>
<feature type="splice variant" id="VSP_016560" description="In isoform 4." evidence="104">
    <location>
        <begin position="938"/>
        <end position="955"/>
    </location>
</feature>
<feature type="sequence variant" id="VAR_023010" description="In dbSNP:rs587783319." evidence="32">
    <original>A</original>
    <variation>D</variation>
    <location>
        <position position="14"/>
    </location>
</feature>
<feature type="sequence variant" id="VAR_023011" description="In WD; affects copper-induced relocalization; the mutant is constitutively trafficked to the basolateral membrane instead of staying in the TGN under low copper conditions; does not affect interaction with COMMD1; dbSNP:rs201738967." evidence="33 48 53">
    <original>N</original>
    <variation>S</variation>
    <location>
        <position position="41"/>
    </location>
</feature>
<feature type="sequence variant" id="VAR_076729" description="In WD; uncertain significance; dbSNP:rs1566605396." evidence="66">
    <original>Y</original>
    <variation>N</variation>
    <location>
        <position position="44"/>
    </location>
</feature>
<feature type="sequence variant" id="VAR_000703" description="In WD; decreased copper transport activity; decreased ATPase activity; increased interaction with COMMD1; decreased localization to trans-Golgi network; increased degradation; dbSNP:rs786204643." evidence="32 48 62 97">
    <original>G</original>
    <variation>V</variation>
    <location>
        <position position="85"/>
    </location>
</feature>
<feature type="sequence variant" id="VAR_000704" description="In dbSNP:rs1429553821." evidence="81">
    <original>G</original>
    <variation>D</variation>
    <location>
        <position position="96"/>
    </location>
</feature>
<feature type="sequence variant" id="VAR_076730" description="In WD; uncertain significance; dbSNP:rs1566603189." evidence="59">
    <original>C</original>
    <variation>R</variation>
    <location>
        <position position="108"/>
    </location>
</feature>
<feature type="sequence variant" id="VAR_076693" description="In WD; uncertain significance; dbSNP:rs557577836." evidence="69">
    <original>R</original>
    <variation>W</variation>
    <location>
        <position position="136"/>
    </location>
</feature>
<feature type="sequence variant" id="VAR_076694" description="In WD; uncertain significance; dbSNP:rs373762572." evidence="69">
    <original>R</original>
    <variation>W</variation>
    <location>
        <position position="148"/>
    </location>
</feature>
<feature type="sequence variant" id="VAR_076793" evidence="47">
    <original>V</original>
    <variation>L</variation>
    <location>
        <position position="149"/>
    </location>
</feature>
<feature type="sequence variant" id="VAR_076731" description="In WD; uncertain significance; dbSNP:rs551275663." evidence="66">
    <original>C</original>
    <variation>F</variation>
    <location>
        <position position="157"/>
    </location>
</feature>
<feature type="sequence variant" id="VAR_076810" description="In WD; uncertain significance." evidence="63">
    <original>G</original>
    <variation>V</variation>
    <location>
        <position position="170"/>
    </location>
</feature>
<feature type="sequence variant" id="VAR_044453" evidence="13">
    <original>V</original>
    <variation>L</variation>
    <location>
        <position position="290"/>
    </location>
</feature>
<feature type="sequence variant" id="VAR_076695" description="In WD; uncertain significance; dbSNP:rs774102085." evidence="69">
    <original>S</original>
    <variation>C</variation>
    <location>
        <position position="382"/>
    </location>
</feature>
<feature type="sequence variant" id="VAR_000705" description="In dbSNP:rs770903362." evidence="22 99">
    <original>I</original>
    <variation>V</variation>
    <location>
        <position position="390"/>
    </location>
</feature>
<feature type="sequence variant" id="VAR_000706" description="No effect on copper transport activity; dbSNP:rs1801243." evidence="13 14 22 23 32 38 51 62 68 99 102">
    <original>S</original>
    <variation>A</variation>
    <location>
        <position position="406"/>
    </location>
</feature>
<feature type="sequence variant" id="VAR_000707" description="In dbSNP:rs587783298.">
    <original>V</original>
    <variation>L</variation>
    <location>
        <position position="446"/>
    </location>
</feature>
<feature type="sequence variant" id="VAR_000708" description="Decreased copper transport rates; no effect on ATPase activity; dbSNP:rs1801244." evidence="13 14 22 23 32 38 39 47 51 62 68 75 99 101 102">
    <original>V</original>
    <variation>L</variation>
    <location>
        <position position="456"/>
    </location>
</feature>
<feature type="sequence variant" id="VAR_044454" description="In WD; uncertain significance; does not affect interaction with COMMD1; dbSNP:rs1282624946." evidence="19 48">
    <original>A</original>
    <variation>S</variation>
    <location>
        <position position="486"/>
    </location>
</feature>
<feature type="sequence variant" id="VAR_000710" description="In WD; decreased copper transport activity; decreased ATPase activity; does not affect interaction with COMMD1; dbSNP:rs1566580253." evidence="48 62 97">
    <original>L</original>
    <variation>S</variation>
    <location>
        <position position="492"/>
    </location>
</feature>
<feature type="sequence variant" id="VAR_044455" description="In WD; uncertain significance; no effect on copper transport activity; does not affect interaction with COMMD1." evidence="40 48 50">
    <original>Y</original>
    <variation>H</variation>
    <location>
        <position position="532"/>
    </location>
</feature>
<feature type="sequence variant" id="VAR_058925" description="In WD; likely benign; dbSNP:rs138427376." evidence="51 69">
    <original>V</original>
    <variation>A</variation>
    <location>
        <position position="536"/>
    </location>
</feature>
<feature type="sequence variant" id="VAR_076970" description="In WD; dbSNP:rs572122562." evidence="64">
    <original>P</original>
    <variation>L</variation>
    <location>
        <position position="539"/>
    </location>
</feature>
<feature type="sequence variant" id="VAR_076696" description="In WD; uncertain significance; does not affect interaction with COMMD1; dbSNP:rs187046823." evidence="48 69">
    <original>E</original>
    <variation>K</variation>
    <location>
        <position position="541"/>
    </location>
</feature>
<feature type="sequence variant" id="VAR_067335" description="In WD; uncertain significance; dbSNP:rs1951681205." evidence="60">
    <original>L</original>
    <variation>P</variation>
    <location>
        <position position="549"/>
    </location>
</feature>
<feature type="sequence variant" id="VAR_000711" description="In dbSNP:rs778475094." evidence="94">
    <original>N</original>
    <variation>S</variation>
    <location>
        <position position="565"/>
    </location>
</feature>
<feature type="sequence variant" id="VAR_044456" description="In WD; increased interaction with COMMD1; decreased localization to trans-Glogi network; dbSNP:rs797045402." evidence="40 48">
    <original>G</original>
    <variation>D</variation>
    <location>
        <position position="591"/>
    </location>
</feature>
<feature type="sequence variant" id="VAR_076794" description="In WD; uncertain significance; dbSNP:rs1566559224." evidence="47">
    <original>G</original>
    <variation>S</variation>
    <location>
        <position position="591"/>
    </location>
</feature>
<feature type="sequence variant" id="VAR_076697" description="In WD; uncertain significance; dbSNP:rs760501309." evidence="69">
    <original>V</original>
    <variation>I</variation>
    <location>
        <position position="597"/>
    </location>
</feature>
<feature type="sequence variant" id="VAR_044457" description="In WD; uncertain significance; increased interaction with COMMD1." evidence="40 48">
    <original>A</original>
    <variation>P</variation>
    <location>
        <position position="604"/>
    </location>
</feature>
<feature type="sequence variant" id="VAR_076732" description="In WD; uncertain significance; dbSNP:rs1173050016." evidence="66">
    <original>V</original>
    <variation>G</variation>
    <location>
        <position position="606"/>
    </location>
</feature>
<feature type="sequence variant" id="VAR_010009" description="In WD; uncertain significance." evidence="97">
    <original>FD</original>
    <variation>Y</variation>
    <location>
        <begin position="608"/>
        <end position="609"/>
    </location>
</feature>
<feature type="sequence variant" id="VAR_076698" description="In WD; uncertain significance; dbSNP:rs376565432." evidence="69">
    <original>G</original>
    <variation>C</variation>
    <location>
        <position position="614"/>
    </location>
</feature>
<feature type="sequence variant" id="VAR_009004" description="In WD; uncertain significance; does not affect interaction with COMMD1; dbSNP:rs752850609." evidence="41 42 48">
    <original>R</original>
    <variation>Q</variation>
    <location>
        <position position="616"/>
    </location>
</feature>
<feature type="sequence variant" id="VAR_023012" description="In WD; decreased copper transport activity; increased ATPase activity; does not affect interaction with COMMD1; dbSNP:rs374172791." evidence="23 48 62">
    <original>R</original>
    <variation>W</variation>
    <location>
        <position position="616"/>
    </location>
</feature>
<feature type="sequence variant" id="VAR_000712" description="In WD; uncertain significance; no effect on protein abundance; no effect on protein localization; may have an effect on copper transport activity; no effect on ATPase activity; does not affect interaction with COMMD1; dbSNP:rs587783299." evidence="41 48 50 62 74 85 92">
    <original>G</original>
    <variation>A</variation>
    <location>
        <position position="626"/>
    </location>
</feature>
<feature type="sequence variant" id="VAR_044458" description="In WD; uncertain significance; no effect on protein abundance; no effect on protein localization; no effect on copper transport activity; dbSNP:rs200728096." evidence="42 74">
    <original>H</original>
    <variation>Y</variation>
    <location>
        <position position="639"/>
    </location>
</feature>
<feature type="sequence variant" id="VAR_023013" description="In WD; uncertain significance; no effect on protein abundance; no effect on protein localization; no effect on copper transport activity; does not affect interaction with COMMD1; dbSNP:rs186924074." evidence="39 40 48 69 74">
    <original>L</original>
    <variation>S</variation>
    <location>
        <position position="641"/>
    </location>
</feature>
<feature type="sequence variant" id="VAR_000713" description="In WD; uncertain significance; no effect on protein abundance; no effect on protein localization; no effect on copper transport activity; does not affect interaction with COMMD1; dbSNP:rs72552285." evidence="50 60 74 97">
    <original>D</original>
    <variation>H</variation>
    <location>
        <position position="642"/>
    </location>
</feature>
<feature type="sequence variant" id="VAR_000714" description="In WD; also found in a patient with hypoceruloplasminemia without clinical manifestations of WD in the central nervous system or liver; a liver biopsy of the patient with hypoceruloplasminemia shows no copper or iron accumulation in Kupffer cells or hepatocytes; due to a nucleotide substitution that also results in out-of-frame partial skipping of exon 6, stop gain and reduced expression of the truncated protein; variant R-645 has no effect on protein localization; no effect on copper transport; does not affect interaction with COMMD1; dbSNP:rs121907998." evidence="38 48 49 62 69 70 74 79 92 94 97">
    <original>M</original>
    <variation>R</variation>
    <location>
        <position position="645"/>
    </location>
</feature>
<feature type="sequence variant" id="VAR_044459" description="In WD; uncertain significance; no effect on protein abundance; altered copper-induced relocalization; no effect on copper transport activity." evidence="42 74">
    <original>S</original>
    <variation>Y</variation>
    <location>
        <position position="653"/>
    </location>
</feature>
<feature type="sequence variant" id="VAR_058926" description="In WD; uncertain significance; dbSNP:rs372436901." evidence="51">
    <original>S</original>
    <variation>R</variation>
    <location>
        <position position="657"/>
    </location>
</feature>
<feature type="sequence variant" id="VAR_000715" description="In WD; uncertain significance; dbSNP:rs72552259." evidence="69 97">
    <original>M</original>
    <variation>I</variation>
    <location>
        <position position="665"/>
    </location>
</feature>
<feature type="sequence variant" id="VAR_009005" description="In WD; uncertain significance." evidence="8">
    <location>
        <begin position="670"/>
        <end position="671"/>
    </location>
</feature>
<feature type="sequence variant" id="VAR_023014" description="In WD; dbSNP:rs1555291809." evidence="38">
    <original>P</original>
    <variation>L</variation>
    <location>
        <position position="690"/>
    </location>
</feature>
<feature type="sequence variant" id="VAR_000716" description="In WD; dbSNP:rs121908001." evidence="46 97">
    <original>G</original>
    <variation>R</variation>
    <location>
        <position position="691"/>
    </location>
</feature>
<feature type="sequence variant" id="VAR_023015" description="In WD; dbSNP:rs1212479289." evidence="98">
    <original>S</original>
    <variation>C</variation>
    <location>
        <position position="693"/>
    </location>
</feature>
<feature type="sequence variant" id="VAR_044460" description="In WD; dbSNP:rs767218895." evidence="40 60">
    <original>C</original>
    <variation>Y</variation>
    <location>
        <position position="703"/>
    </location>
</feature>
<feature type="sequence variant" id="VAR_000717" description="In WD; dbSNP:rs121908000." evidence="17 92">
    <original>L</original>
    <variation>P</variation>
    <location>
        <position position="708"/>
    </location>
</feature>
<feature type="sequence variant" id="VAR_010010" description="In WD; dbSNP:rs1555291285." evidence="23 101">
    <original>G</original>
    <variation>A</variation>
    <location>
        <position position="710"/>
    </location>
</feature>
<feature type="sequence variant" id="VAR_000719" description="In WD; decreased copper transport activity; no effect on ATPase activity; dbSNP:rs137853285." evidence="12 23 39 62 64 68 92">
    <original>G</original>
    <variation>S</variation>
    <location>
        <position position="710"/>
    </location>
</feature>
<feature type="sequence variant" id="VAR_044461" description="In WD." evidence="40">
    <original>G</original>
    <variation>V</variation>
    <location>
        <position position="710"/>
    </location>
</feature>
<feature type="sequence variant" id="VAR_000720" description="In WD; dbSNP:rs2139545313." evidence="87">
    <original>G</original>
    <variation>E</variation>
    <location>
        <position position="711"/>
    </location>
</feature>
<feature type="sequence variant" id="VAR_009006" description="In WD; dbSNP:rs1394999756." evidence="12 87">
    <original>G</original>
    <variation>R</variation>
    <location>
        <position position="711"/>
    </location>
</feature>
<feature type="sequence variant" id="VAR_009007" description="In WD; dbSNP:rs1394999756." evidence="11">
    <original>G</original>
    <variation>W</variation>
    <location>
        <position position="711"/>
    </location>
</feature>
<feature type="sequence variant" id="VAR_000721" description="In WD; dbSNP:rs756883878." evidence="87">
    <original>Y</original>
    <variation>C</variation>
    <location>
        <position position="713"/>
    </location>
</feature>
<feature type="sequence variant" id="VAR_023016" description="In WD; dbSNP:rs765667658." evidence="25">
    <original>S</original>
    <variation>P</variation>
    <location>
        <position position="721"/>
    </location>
</feature>
<feature type="sequence variant" id="VAR_000722" evidence="22 94">
    <original>R</original>
    <variation>G</variation>
    <location>
        <position position="723"/>
    </location>
</feature>
<feature type="sequence variant" id="VAR_076733" description="In WD; uncertain significance; dbSNP:rs773447981." evidence="59">
    <original>M</original>
    <variation>V</variation>
    <location>
        <position position="729"/>
    </location>
</feature>
<feature type="sequence variant" id="VAR_076699" description="In WD; uncertain significance." evidence="69">
    <original>V</original>
    <variation>A</variation>
    <location>
        <position position="731"/>
    </location>
</feature>
<feature type="sequence variant" id="VAR_076734" description="In WD; uncertain significance." evidence="66">
    <original>L</original>
    <variation>H</variation>
    <location>
        <position position="732"/>
    </location>
</feature>
<feature type="sequence variant" id="VAR_076735" description="In WD; uncertain significance." evidence="66">
    <original>L</original>
    <variation>P</variation>
    <location>
        <position position="732"/>
    </location>
</feature>
<feature type="sequence variant" id="VAR_023017" description="In WD; uncertain significance." evidence="39">
    <original>T</original>
    <variation>R</variation>
    <location>
        <position position="737"/>
    </location>
</feature>
<feature type="sequence variant" id="VAR_010011" description="In WD; dbSNP:rs770533110." evidence="101">
    <original>Y</original>
    <variation>C</variation>
    <location>
        <position position="741"/>
    </location>
</feature>
<feature type="sequence variant" id="VAR_009008" description="In WD; dbSNP:rs1593726081." evidence="11 60">
    <original>S</original>
    <variation>P</variation>
    <location>
        <position position="744"/>
    </location>
</feature>
<feature type="sequence variant" id="VAR_076700" description="In WD; uncertain significance; dbSNP:rs1362773192." evidence="69">
    <original>L</original>
    <variation>P</variation>
    <location>
        <position position="745"/>
    </location>
</feature>
<feature type="sequence variant" id="VAR_000723" description="In WD." evidence="10 97">
    <original>I</original>
    <variation>F</variation>
    <location>
        <position position="747"/>
    </location>
</feature>
<feature type="sequence variant" id="VAR_044462" description="In WD." evidence="40 66">
    <original>A</original>
    <variation>G</variation>
    <location>
        <position position="756"/>
    </location>
</feature>
<feature type="sequence variant" id="VAR_023018" description="In WD; decreased copper transport activity; increased ATPase activity; dbSNP:rs766907687." evidence="18 23 62">
    <original>P</original>
    <variation>L</variation>
    <location>
        <position position="760"/>
    </location>
</feature>
<feature type="sequence variant" id="VAR_023019" description="In WD; dbSNP:rs1555291147." evidence="32">
    <original>D</original>
    <variation>G</variation>
    <location>
        <position position="765"/>
    </location>
</feature>
<feature type="sequence variant" id="VAR_076811" description="In WD; uncertain significance; dbSNP:rs28942075." evidence="63">
    <original>D</original>
    <variation>H</variation>
    <location>
        <position position="765"/>
    </location>
</feature>
<feature type="sequence variant" id="VAR_000724" description="In WD; decreased copper transport activity; increased ATPase activity; decreased localization to TGN and reduced capacity to redistribute to cytoplasmic vesicles under high-copper levels; dbSNP:rs28942075." evidence="15 23 60 62 68 85 94 100">
    <original>D</original>
    <variation>N</variation>
    <location>
        <position position="765"/>
    </location>
</feature>
<feature type="sequence variant" id="VAR_044463" description="In WD; dbSNP:rs121907997." evidence="40">
    <original>T</original>
    <variation>M</variation>
    <location>
        <position position="766"/>
    </location>
</feature>
<feature type="sequence variant" id="VAR_044464" description="In WD; dbSNP:rs121907997." evidence="34">
    <original>T</original>
    <variation>R</variation>
    <location>
        <position position="766"/>
    </location>
</feature>
<feature type="sequence variant" id="VAR_023020" description="In WD." evidence="27">
    <original>P</original>
    <variation>H</variation>
    <location>
        <position position="768"/>
    </location>
</feature>
<feature type="sequence variant" id="VAR_023021" description="In WD." evidence="14">
    <original>M</original>
    <variation>I</variation>
    <location>
        <position position="769"/>
    </location>
</feature>
<feature type="sequence variant" id="VAR_009009" description="In WD; dbSNP:rs772595172." evidence="11">
    <original>M</original>
    <variation>R</variation>
    <location>
        <position position="769"/>
    </location>
</feature>
<feature type="sequence variant" id="VAR_000725" description="In WD; possible decreased copper transport activity; increased ATPase activity; dbSNP:rs193922103." evidence="22 23 49 62 69 100">
    <original>M</original>
    <variation>V</variation>
    <location>
        <position position="769"/>
    </location>
</feature>
<feature type="sequence variant" id="VAR_044465" description="In WD." evidence="42">
    <original>L</original>
    <variation>P</variation>
    <location>
        <position position="776"/>
    </location>
</feature>
<feature type="sequence variant" id="VAR_000726" description="In WD; uncertain significance; no effect on copper transport activity; decreased localization to TGN and reduced capacity to redistribute to cytoplasmic vesicles under high-copper levels; dbSNP:rs1217463955." evidence="15 100">
    <original>L</original>
    <variation>V</variation>
    <location>
        <position position="776"/>
    </location>
</feature>
<feature type="sequence variant" id="VAR_000727" description="In WD; dbSNP:rs137853284." evidence="19 39 41 42 60 68 85">
    <original>R</original>
    <variation>G</variation>
    <location>
        <position position="778"/>
    </location>
</feature>
<feature type="sequence variant" id="VAR_000728" description="In WD; most common mutation; decreased copper transport activity; extensively localized throughout the cell in the distribution pattern of the endoplasmic reticulum; dbSNP:rs28942074." evidence="9 13 14 15 22 26 27 31 32 44 59 66 75 86 93 95 99 100">
    <original>R</original>
    <variation>L</variation>
    <location>
        <position position="778"/>
    </location>
</feature>
<feature type="sequence variant" id="VAR_000729" description="In WD; decreased copper transport activity; dbSNP:rs28942074." evidence="22 49 59 66 86 99 100">
    <original>R</original>
    <variation>Q</variation>
    <location>
        <position position="778"/>
    </location>
</feature>
<feature type="sequence variant" id="VAR_000730" description="In WD; dbSNP:rs137853284." evidence="10 14 21 41 49 68 69 92 97">
    <original>R</original>
    <variation>W</variation>
    <location>
        <position position="778"/>
    </location>
</feature>
<feature type="sequence variant" id="VAR_076971" description="In WD; dbSNP:rs751798708." evidence="64 65">
    <original>W</original>
    <variation>G</variation>
    <location>
        <position position="779"/>
    </location>
</feature>
<feature type="sequence variant" id="VAR_075336" description="In WD; decreased copper ion transmembrane transporter activity; dbSNP:rs541408630." evidence="68 77">
    <original>T</original>
    <variation>I</variation>
    <location>
        <position position="788"/>
    </location>
</feature>
<feature type="sequence variant" id="VAR_000731" description="In WD; uncertain significance; dbSNP:rs751710854." evidence="66 92">
    <original>L</original>
    <variation>F</variation>
    <location>
        <position position="795"/>
    </location>
</feature>
<feature type="sequence variant" id="VAR_009010" description="In WD." evidence="11">
    <original>L</original>
    <variation>R</variation>
    <location>
        <position position="795"/>
    </location>
</feature>
<feature type="sequence variant" id="VAR_076972" description="In WD; dbSNP:rs1957924589." evidence="64">
    <original>R</original>
    <variation>S</variation>
    <location>
        <position position="816"/>
    </location>
</feature>
<feature type="sequence variant" id="VAR_076795" evidence="47">
    <original>V</original>
    <variation>L</variation>
    <location>
        <position position="825"/>
    </location>
</feature>
<feature type="sequence variant" id="VAR_076765" description="In WD; uncertain significance; dbSNP:rs368589213." evidence="49">
    <original>R</original>
    <variation>P</variation>
    <location>
        <position position="827"/>
    </location>
</feature>
<feature type="sequence variant" id="VAR_076736" description="In WD; yeast complementation assays show that the variant does not rescue iron-uptake deficiency of yeast mutant ccc2; dbSNP:rs539585071." evidence="59">
    <original>R</original>
    <variation>W</variation>
    <location>
        <position position="827"/>
    </location>
</feature>
<feature type="sequence variant" id="VAR_000732" description="Decreased copper transport activity; no effect on ATPase activity; dbSNP:rs1061472." evidence="13 22 23 32 38 39 51 62 68 82 94 95 103">
    <original>K</original>
    <variation>R</variation>
    <location>
        <position position="832"/>
    </location>
</feature>
<feature type="sequence variant" id="VAR_076812" description="In WD; uncertain significance; dbSNP:rs773809011." evidence="63">
    <original>G</original>
    <variation>E</variation>
    <location>
        <position position="836"/>
    </location>
</feature>
<feature type="sequence variant" id="VAR_000733" description="In WD; decreased copper transport activity; increased ATPase activity; dbSNP:rs768671894." evidence="12 97">
    <original>P</original>
    <variation>L</variation>
    <location>
        <position position="840"/>
    </location>
</feature>
<feature type="sequence variant" id="VAR_000734" description="In WD; decreased copper transport activity; increased ATPase activity; dbSNP:rs1057520235." evidence="62 85">
    <original>I</original>
    <variation>T</variation>
    <location>
        <position position="857"/>
    </location>
</feature>
<feature type="sequence variant" id="VAR_076766" description="In WD; uncertain significance; dbSNP:rs2139220914." evidence="49">
    <original>T</original>
    <variation>A</variation>
    <location>
        <position position="858"/>
    </location>
</feature>
<feature type="sequence variant" id="VAR_044466" description="In WD." evidence="40">
    <original>A</original>
    <variation>T</variation>
    <location>
        <position position="861"/>
    </location>
</feature>
<feature type="sequence variant" id="VAR_000735" evidence="95">
    <original>V</original>
    <variation>I</variation>
    <location>
        <position position="864"/>
    </location>
</feature>
<feature type="sequence variant" id="VAR_000736" description="In WD; dbSNP:rs191312027." evidence="38 69 92">
    <original>G</original>
    <variation>R</variation>
    <location>
        <position position="869"/>
    </location>
</feature>
<feature type="sequence variant" id="VAR_009011" description="In WD." evidence="10">
    <original>G</original>
    <variation>V</variation>
    <location>
        <position position="869"/>
    </location>
</feature>
<feature type="sequence variant" id="VAR_076737" description="In WD; uncertain significance; dbSNP:rs376355660." evidence="66">
    <original>A</original>
    <variation>P</variation>
    <location>
        <position position="874"/>
    </location>
</feature>
<feature type="sequence variant" id="VAR_000737" description="In WD; decreased copper transport activity; increased ATPase activity; decreased localization to the TGN; dbSNP:rs121907994." evidence="9 12 13 14 22 26 27 41 49 59 62 66 68 78 93 95">
    <original>A</original>
    <variation>V</variation>
    <location>
        <position position="874"/>
    </location>
</feature>
<feature type="sequence variant" id="VAR_023022" description="Individuals heterozygous for Wilson disease mutations on the R-875 background may manifest the disease phenotype under conditions of copper deficiency; affects protein folding; localized to the ER and absent from TGN under low copper conditions; in response to high copper levels it relocalizes to vesicles and properly cycle back to TGN; dbSNP:rs587783304." evidence="22 57 81 84">
    <original>G</original>
    <variation>R</variation>
    <location>
        <position position="875"/>
    </location>
</feature>
<feature type="sequence variant" id="VAR_023023" description="In WD; dbSNP:rs786204718." evidence="19 32 66">
    <original>V</original>
    <variation>M</variation>
    <location>
        <position position="890"/>
    </location>
</feature>
<feature type="sequence variant" id="VAR_076738" description="In WD; uncertain significance; dbSNP:rs483352684." evidence="59">
    <original>G</original>
    <variation>D</variation>
    <location>
        <position position="891"/>
    </location>
</feature>
<feature type="sequence variant" id="VAR_010012" description="In WD." evidence="87">
    <original>G</original>
    <variation>V</variation>
    <location>
        <position position="891"/>
    </location>
</feature>
<feature type="sequence variant" id="VAR_023024" description="In WD." evidence="21">
    <original>Q</original>
    <variation>R</variation>
    <location>
        <position position="898"/>
    </location>
</feature>
<feature type="sequence variant" id="VAR_076739" description="In WD; uncertain significance." evidence="59 61">
    <location>
        <begin position="899"/>
        <end position="907"/>
    </location>
</feature>
<feature type="sequence variant" id="VAR_076767" description="In WD; uncertain significance." evidence="49">
    <original>I</original>
    <variation>F</variation>
    <location>
        <position position="899"/>
    </location>
</feature>
<feature type="sequence variant" id="VAR_023025" description="In WD." evidence="39">
    <original>D</original>
    <variation>E</variation>
    <location>
        <position position="918"/>
    </location>
</feature>
<feature type="sequence variant" id="VAR_000738" description="In WD; dbSNP:rs540935874." evidence="97">
    <original>D</original>
    <variation>N</variation>
    <location>
        <position position="918"/>
    </location>
</feature>
<feature type="sequence variant" id="VAR_000739" description="In WD; dbSNP:rs121907993." evidence="9 14 22 26 32 59 66 75 93">
    <original>R</original>
    <variation>G</variation>
    <location>
        <position position="919"/>
    </location>
</feature>
<feature type="sequence variant" id="VAR_000740" description="In WD; dbSNP:rs121907993." evidence="49 68 69 97">
    <original>R</original>
    <variation>W</variation>
    <location>
        <position position="919"/>
    </location>
</feature>
<feature type="sequence variant" id="VAR_000741" description="In WD; dbSNP:rs1230241288." evidence="10 97">
    <original>S</original>
    <variation>N</variation>
    <location>
        <position position="921"/>
    </location>
</feature>
<feature type="sequence variant" id="VAR_076740" description="In WD; uncertain significance; dbSNP:rs1052485948." evidence="66">
    <original>S</original>
    <variation>R</variation>
    <location>
        <position position="921"/>
    </location>
</feature>
<feature type="sequence variant" id="VAR_076741" description="In dbSNP:rs534960245." evidence="22 66">
    <original>I</original>
    <variation>V</variation>
    <location>
        <position position="929"/>
    </location>
</feature>
<feature type="sequence variant" id="VAR_000742" description="In WD; uncertain significance; dbSNP:rs1555288410." evidence="97">
    <original>T</original>
    <variation>P</variation>
    <location>
        <position position="933"/>
    </location>
</feature>
<feature type="sequence variant" id="VAR_000743" description="In WD; dbSNP:rs750019452." evidence="22 32 44 49 72 99">
    <original>T</original>
    <variation>M</variation>
    <location>
        <position position="935"/>
    </location>
</feature>
<feature type="sequence variant" id="VAR_076701" description="In WD; uncertain significance; dbSNP:rs367855110." evidence="69">
    <original>L</original>
    <variation>V</variation>
    <location>
        <position position="936"/>
    </location>
</feature>
<feature type="sequence variant" id="VAR_076813" description="In WD; dbSNP:rs1057517310." evidence="63">
    <original>W</original>
    <variation>C</variation>
    <location>
        <position position="939"/>
    </location>
</feature>
<feature type="sequence variant" id="VAR_044468" description="In WD; dbSNP:rs28942076." evidence="40">
    <original>G</original>
    <variation>C</variation>
    <location>
        <position position="943"/>
    </location>
</feature>
<feature type="sequence variant" id="VAR_000744" description="In WD; dbSNP:rs779323689." evidence="22 31 59 66 99">
    <original>G</original>
    <variation>D</variation>
    <location>
        <position position="943"/>
    </location>
</feature>
<feature type="sequence variant" id="VAR_000745" description="In WD; no effect on copper transport activity; normally localized to TGN network but unable to redistribute to cytoplasmic vesicles in response to copper; dbSNP:rs28942076." evidence="15 38 59 68 100">
    <original>G</original>
    <variation>S</variation>
    <location>
        <position position="943"/>
    </location>
</feature>
<feature type="sequence variant" id="VAR_023026" description="In WD; dbSNP:rs1169959260." evidence="33 101">
    <original>V</original>
    <variation>G</variation>
    <location>
        <position position="949"/>
    </location>
</feature>
<feature type="sequence variant" id="VAR_000746" description="In dbSNP:rs732774." evidence="22 51 68 81 83 102">
    <original>R</original>
    <variation>K</variation>
    <location>
        <position position="952"/>
    </location>
</feature>
<feature type="sequence variant" id="VAR_010013" description="In WD; dbSNP:rs60003608." evidence="88">
    <original>I</original>
    <variation>F</variation>
    <location>
        <position position="967"/>
    </location>
</feature>
<feature type="sequence variant" id="VAR_000747" description="In WD; decreased copper transport activity; increased ATPase activity; no effect on localization; dbSNP:rs121907996." evidence="12 19 23 39 41 59 62 68 85 94">
    <original>R</original>
    <variation>Q</variation>
    <location>
        <position position="969"/>
    </location>
</feature>
<feature type="sequence variant" id="VAR_076768" description="In WD; uncertain significance; dbSNP:rs774028495." evidence="49">
    <original>R</original>
    <variation>W</variation>
    <location>
        <position position="969"/>
    </location>
</feature>
<feature type="sequence variant" id="VAR_058927" description="In WD; dbSNP:rs770340441." evidence="51">
    <original>A</original>
    <variation>V</variation>
    <location>
        <position position="971"/>
    </location>
</feature>
<feature type="sequence variant" id="VAR_058928" description="In WD; dbSNP:rs201061621." evidence="51">
    <original>T</original>
    <variation>M</variation>
    <location>
        <position position="974"/>
    </location>
</feature>
<feature type="sequence variant" id="VAR_023027" description="In WD; dbSNP:rs778163447." evidence="32 66">
    <original>S</original>
    <variation>Y</variation>
    <location>
        <position position="975"/>
    </location>
</feature>
<feature type="sequence variant" id="VAR_000748" description="In WD; loss of copper transport activity; dbSNP:rs72552255." evidence="38 39 42 49 59 60 69 88 100">
    <original>T</original>
    <variation>M</variation>
    <location>
        <position position="977"/>
    </location>
</feature>
<feature type="sequence variant" id="VAR_076742" description="In WD; uncertain significance; dbSNP:rs1038582488." evidence="66">
    <original>C</original>
    <variation>Y</variation>
    <location>
        <position position="980"/>
    </location>
</feature>
<feature type="sequence variant" id="VAR_077616" description="In WD; uncertain significance; dbSNP:rs750407121." evidence="72">
    <original>A</original>
    <variation>T</variation>
    <location>
        <position position="982"/>
    </location>
</feature>
<feature type="sequence variant" id="VAR_076769" description="In WD; uncertain significance; dbSNP:rs1487547257." evidence="49">
    <original>A</original>
    <variation>V</variation>
    <location>
        <position position="982"/>
    </location>
</feature>
<feature type="sequence variant" id="VAR_009012" description="In WD." evidence="8">
    <original>C</original>
    <variation>Y</variation>
    <location>
        <position position="985"/>
    </location>
</feature>
<feature type="sequence variant" id="VAR_076743" description="In WD; uncertain significance." evidence="66">
    <original>L</original>
    <variation>P</variation>
    <location>
        <position position="987"/>
    </location>
</feature>
<feature type="sequence variant" id="VAR_044469" description="In WD; dbSNP:rs199623434." evidence="42">
    <original>G</original>
    <variation>R</variation>
    <location>
        <position position="988"/>
    </location>
</feature>
<feature type="sequence variant" id="VAR_076814" description="In WD; uncertain significance." evidence="76">
    <original>A</original>
    <variation>P</variation>
    <location>
        <position position="990"/>
    </location>
</feature>
<feature type="sequence variant" id="VAR_044470" description="In WD; yeast complementation assays show that the variant mildly rescue iron-uptake deficiency of yeast mutant ccc2; dbSNP:rs41292782." evidence="40 49 55 69">
    <original>T</original>
    <variation>M</variation>
    <location>
        <position position="991"/>
    </location>
</feature>
<feature type="sequence variant" id="VAR_044471" description="In WD; dbSNP:rs201038679." evidence="36">
    <original>P</original>
    <variation>H</variation>
    <location>
        <position position="992"/>
    </location>
</feature>
<feature type="sequence variant" id="VAR_000749" description="In WD; common mutation; decreased copper transport activity; no effect on ATPase activity; dbSNP:rs201038679." evidence="23 32 42 44 59 62 66 75 78 97 99 100">
    <original>P</original>
    <variation>L</variation>
    <location>
        <position position="992"/>
    </location>
</feature>
<feature type="sequence variant" id="VAR_000750" description="In WD; uncertain significance; no effect on copper transport activity; dbSNP:rs777791532." evidence="69 100">
    <original>V</original>
    <variation>A</variation>
    <location>
        <position position="995"/>
    </location>
</feature>
<feature type="sequence variant" id="VAR_044472" description="In WD; dbSNP:rs770782111." evidence="40">
    <original>M</original>
    <variation>T</variation>
    <location>
        <position position="996"/>
    </location>
</feature>
<feature type="sequence variant" id="VAR_067336" description="In WD." evidence="60">
    <original>G</original>
    <variation>D</variation>
    <location>
        <position position="998"/>
    </location>
</feature>
<feature type="sequence variant" id="VAR_044473" description="In WD; yeast complementation assays show that the variant does not rescue iron-uptake deficiency of yeast mutant ccc2; dbSNP:rs751078884." evidence="40 55">
    <original>G</original>
    <variation>R</variation>
    <location>
        <position position="1000"/>
    </location>
</feature>
<feature type="sequence variant" id="VAR_000751" description="In WD; dbSNP:rs201497300." evidence="14 36 41 68 97">
    <original>A</original>
    <variation>T</variation>
    <location>
        <position position="1003"/>
    </location>
</feature>
<feature type="sequence variant" id="VAR_009013" description="In WD; dbSNP:rs775055397." evidence="12 68 76">
    <original>A</original>
    <variation>V</variation>
    <location>
        <position position="1003"/>
    </location>
</feature>
<feature type="sequence variant" id="VAR_058929" description="In WD; dbSNP:rs587783307." evidence="51">
    <original>Q</original>
    <variation>P</variation>
    <location>
        <position position="1004"/>
    </location>
</feature>
<feature type="sequence variant" id="VAR_079550" description="In WD; uncertain significance; dbSNP:rs1414727042." evidence="78">
    <original>K</original>
    <variation>E</variation>
    <location>
        <position position="1010"/>
    </location>
</feature>
<feature type="sequence variant" id="VAR_076815" description="In WD; uncertain significance; dbSNP:rs747584649." evidence="76">
    <original>K</original>
    <variation>R</variation>
    <location>
        <position position="1010"/>
    </location>
</feature>
<feature type="sequence variant" id="VAR_076744" description="In WD; yeast complementation assays show that the variant does not rescue iron-uptake deficiency of yeast mutant ccc2; dbSNP:rs747584649." evidence="59">
    <original>K</original>
    <variation>T</variation>
    <location>
        <position position="1010"/>
    </location>
</feature>
<feature type="sequence variant" id="VAR_076770" description="In WD; uncertain significance." evidence="49">
    <original>G</original>
    <variation>R</variation>
    <location>
        <position position="1012"/>
    </location>
</feature>
<feature type="sequence variant" id="VAR_076771" description="In WD; uncertain significance; dbSNP:rs772089544." evidence="49">
    <original>G</original>
    <variation>V</variation>
    <location>
        <position position="1012"/>
    </location>
</feature>
<feature type="sequence variant" id="VAR_076702" description="In WD; uncertain significance; dbSNP:rs755851188." evidence="69">
    <original>M</original>
    <variation>I</variation>
    <location>
        <position position="1017"/>
    </location>
</feature>
<feature type="sequence variant" id="VAR_000752" description="In WD; dbSNP:rs371840514." evidence="10 39 49 97">
    <original>A</original>
    <variation>V</variation>
    <location>
        <position position="1018"/>
    </location>
</feature>
<feature type="sequence variant" id="VAR_076703" description="In WD; uncertain significance; dbSNP:rs776490710." evidence="69">
    <original>I</original>
    <variation>V</variation>
    <location>
        <position position="1021"/>
    </location>
</feature>
<feature type="sequence variant" id="VAR_076745" description="In WD; uncertain significance; dbSNP:rs1416453532." evidence="59">
    <original>V</original>
    <variation>A</variation>
    <location>
        <position position="1024"/>
    </location>
</feature>
<feature type="sequence variant" id="VAR_044474" description="In WD; dbSNP:rs1555286628." evidence="9 59">
    <original>T</original>
    <variation>I</variation>
    <location>
        <position position="1029"/>
    </location>
</feature>
<feature type="sequence variant" id="VAR_076746" description="In WD; uncertain significance." evidence="47 59">
    <original>T</original>
    <variation>A</variation>
    <location>
        <position position="1031"/>
    </location>
</feature>
<feature type="sequence variant" id="VAR_010014" description="In WD." evidence="101">
    <original>T</original>
    <variation>I</variation>
    <location>
        <position position="1031"/>
    </location>
</feature>
<feature type="sequence variant" id="VAR_009014" description="In WD; dbSNP:rs1555286620." evidence="11">
    <original>T</original>
    <variation>A</variation>
    <location>
        <position position="1033"/>
    </location>
</feature>
<feature type="sequence variant" id="VAR_023028" description="In WD." evidence="39">
    <original>T</original>
    <variation>S</variation>
    <location>
        <position position="1033"/>
    </location>
</feature>
<feature type="sequence variant" id="VAR_000753" description="In WD; dbSNP:rs753594031." evidence="9 59 92">
    <original>G</original>
    <variation>V</variation>
    <location>
        <position position="1035"/>
    </location>
</feature>
<feature type="sequence variant" id="VAR_075337" description="In WD; copper ion transmembrane transporter activity; dbSNP:rs761147984." evidence="68 77">
    <original>V</original>
    <variation>I</variation>
    <location>
        <position position="1036"/>
    </location>
</feature>
<feature type="sequence variant" id="VAR_010015" description="In WD; dbSNP:rs59959366." evidence="89">
    <original>R</original>
    <variation>K</variation>
    <location>
        <position position="1038"/>
    </location>
</feature>
<feature type="sequence variant" id="VAR_009015" description="In WD." evidence="7 12 22">
    <original>R</original>
    <variation>P</variation>
    <location>
        <position position="1041"/>
    </location>
</feature>
<feature type="sequence variant" id="VAR_000754" description="In WD; uncertain significance; no effect on copper transport activity; dbSNP:rs746485916." evidence="12 39 50 68 69 76 97">
    <original>R</original>
    <variation>W</variation>
    <location>
        <position position="1041"/>
    </location>
</feature>
<feature type="sequence variant" id="VAR_000755" description="In WD; yeast complementation assays show that the variant does not rescue iron-uptake deficiency of yeast mutant ccc2; dbSNP:rs1412025509." evidence="10 55 76 87">
    <original>L</original>
    <variation>P</variation>
    <location>
        <position position="1043"/>
    </location>
</feature>
<feature type="sequence variant" id="VAR_009016" description="In WD; loss of copper transport activity; no effect on ATPase activity; dbSNP:rs778543794." evidence="11 62">
    <original>P</original>
    <variation>L</variation>
    <location>
        <position position="1052"/>
    </location>
</feature>
<feature type="sequence variant" id="VAR_076704" description="In WD; uncertain significance." evidence="69">
    <original>A</original>
    <variation>V</variation>
    <location>
        <position position="1058"/>
    </location>
</feature>
<feature type="sequence variant" id="VAR_009017" description="In WD; dbSNP:rs764131178." evidence="12 19 38 76">
    <original>G</original>
    <variation>E</variation>
    <location>
        <position position="1061"/>
    </location>
</feature>
<feature type="sequence variant" id="VAR_009018" description="In WD; dbSNP:rs587783309." evidence="12 39 60">
    <original>A</original>
    <variation>V</variation>
    <location>
        <position position="1063"/>
    </location>
</feature>
<feature type="sequence variant" id="VAR_000756" description="In WD; does not bind ATP; the mutant is stable and is properly targeted to the TGN; dbSNP:rs374094065." evidence="56 92 94">
    <original>E</original>
    <variation>A</variation>
    <location>
        <position position="1064"/>
    </location>
</feature>
<feature type="sequence variant" id="VAR_000757" description="In WD; loss of copper transport activity; loss of ATPase activity; dbSNP:rs376910645." evidence="39 49 50 62 85">
    <original>E</original>
    <variation>K</variation>
    <location>
        <position position="1064"/>
    </location>
</feature>
<feature type="sequence variant" id="VAR_009019" description="In WD; common mutation; dbSNP:rs1555286478." evidence="12">
    <original>E</original>
    <variation>G</variation>
    <location>
        <position position="1068"/>
    </location>
</feature>
<feature type="sequence variant" id="VAR_000758" description="In WD; common mutation; decreased copper transport activity; loss of ATPase activity; cannot form an acylphosphate intermediate during catalysis; does not alter the folding of the nucleotide-binding domain; decreased stability; does not localize to late endosomes; dbSNP:rs76151636." evidence="6 10 12 19 20 21 23 28 38 39 41 42 56 60 62 64 68 69 84 92 94 101">
    <original>H</original>
    <variation>Q</variation>
    <location>
        <position position="1069"/>
    </location>
</feature>
<feature type="sequence variant" id="VAR_076705" description="In WD; uncertain significance; dbSNP:rs1423701688." evidence="69">
    <original>P</original>
    <variation>S</variation>
    <location>
        <position position="1070"/>
    </location>
</feature>
<feature type="sequence variant" id="VAR_076706" description="In WD; uncertain significance; dbSNP:rs1206016866." evidence="69">
    <original>A</original>
    <variation>V</variation>
    <location>
        <position position="1074"/>
    </location>
</feature>
<feature type="sequence variant" id="VAR_000759" description="In WD; decreased copper transport activity; no effect on ATPase activity; decreased localization to the TGN; dbSNP:rs1286080173." evidence="14 24 27 50 59 62 95">
    <original>L</original>
    <variation>F</variation>
    <location>
        <position position="1083"/>
    </location>
</feature>
<feature type="sequence variant" id="VAR_000760" description="In WD; dbSNP:rs1555285911." evidence="12 87">
    <original>G</original>
    <variation>E</variation>
    <location>
        <position position="1089"/>
    </location>
</feature>
<feature type="sequence variant" id="VAR_000761" description="In WD." evidence="10 97">
    <original>G</original>
    <variation>V</variation>
    <location>
        <position position="1089"/>
    </location>
</feature>
<feature type="sequence variant" id="VAR_076747" description="In WD; uncertain significance; dbSNP:rs778825095." evidence="59">
    <original>C</original>
    <variation>Y</variation>
    <location>
        <position position="1091"/>
    </location>
</feature>
<feature type="sequence variant" id="VAR_023029" description="In WD; dbSNP:rs1397083296." evidence="33">
    <original>F</original>
    <variation>L</variation>
    <location>
        <position position="1094"/>
    </location>
</feature>
<feature type="sequence variant" id="VAR_009020" description="In WD; dbSNP:rs1555285891." evidence="11 42">
    <original>Q</original>
    <variation>P</variation>
    <location>
        <position position="1095"/>
    </location>
</feature>
<feature type="sequence variant" id="VAR_023030" description="In WD." evidence="32">
    <original>P</original>
    <variation>R</variation>
    <location>
        <position position="1098"/>
    </location>
</feature>
<feature type="sequence variant" id="VAR_023031" description="In WD; dbSNP:rs761632029." evidence="19 38 49">
    <original>G</original>
    <variation>S</variation>
    <location>
        <position position="1099"/>
    </location>
</feature>
<feature type="sequence variant" id="VAR_000762" description="In WD; yeast complementation assays show that the variant does not rescue iron-uptake deficiency of yeast mutant ccc2; dbSNP:rs786204483." evidence="55 76">
    <original>G</original>
    <variation>R</variation>
    <location>
        <position position="1101"/>
    </location>
</feature>
<feature type="sequence variant" id="VAR_000763" description="In WD; yeast complementation assays show that the variant intermediately rescue iron-uptake deficiency of yeast mutant ccc2; dbSNP:rs560952220." evidence="21 36 39 55">
    <original>I</original>
    <variation>T</variation>
    <location>
        <position position="1102"/>
    </location>
</feature>
<feature type="sequence variant" id="VAR_009021" description="In WD." evidence="12">
    <original>C</original>
    <variation>F</variation>
    <location>
        <position position="1104"/>
    </location>
</feature>
<feature type="sequence variant" id="VAR_076816" description="In WD." evidence="76">
    <original>C</original>
    <variation>S</variation>
    <location>
        <position position="1104"/>
    </location>
</feature>
<feature type="sequence variant" id="VAR_044476" description="In WD; dbSNP:rs764041557." evidence="36">
    <original>C</original>
    <variation>Y</variation>
    <location>
        <position position="1104"/>
    </location>
</feature>
<feature type="sequence variant" id="VAR_010017" description="In WD; marked impairment in copper transport; dbSNP:rs775541743." evidence="50 88">
    <original>V</original>
    <variation>D</variation>
    <location>
        <position position="1106"/>
    </location>
</feature>
<feature type="sequence variant" id="VAR_044477" description="In WD; uncertain significance; dbSNP:rs541208827." evidence="22 31 59">
    <original>V</original>
    <variation>I</variation>
    <location>
        <position position="1106"/>
    </location>
</feature>
<feature type="sequence variant" id="VAR_000764" description="In dbSNP:rs759109027." evidence="95">
    <original>V</original>
    <variation>M</variation>
    <location>
        <position position="1109"/>
    </location>
</feature>
<feature type="sequence variant" id="VAR_023032" description="In WD; dbSNP:rs182659444." evidence="39">
    <original>G</original>
    <variation>D</variation>
    <location>
        <position position="1111"/>
    </location>
</feature>
<feature type="sequence variant" id="VAR_076817" description="In WD; uncertain significance." evidence="76">
    <original>L</original>
    <variation>M</variation>
    <location>
        <position position="1113"/>
    </location>
</feature>
<feature type="sequence variant" id="VAR_077617" description="In WD; uncertain significance." evidence="75">
    <original>E</original>
    <variation>K</variation>
    <location>
        <position position="1136"/>
    </location>
</feature>
<feature type="sequence variant" id="VAR_000765" description="No effect on copper transport activity; dbSNP:rs1801249." evidence="13 14 22 31 32 38 39 47 50 51 68 71 94 95 99 101 102 103">
    <original>V</original>
    <variation>A</variation>
    <location>
        <position position="1140"/>
    </location>
</feature>
<feature type="sequence variant" id="VAR_000766" description="In WD; dbSNP:rs778749563." evidence="22 99">
    <original>Q</original>
    <variation>H</variation>
    <location>
        <position position="1142"/>
    </location>
</feature>
<feature type="sequence variant" id="VAR_023033" description="In dbSNP:rs587783313." evidence="32">
    <original>T</original>
    <variation>N</variation>
    <location>
        <position position="1143"/>
    </location>
</feature>
<feature type="sequence variant" id="VAR_000767" description="In WD; dbSNP:rs1213481140." evidence="10 97">
    <original>V</original>
    <variation>M</variation>
    <location>
        <position position="1146"/>
    </location>
</feature>
<feature type="sequence variant" id="VAR_000768" description="In WD; yeast complementation assays show that the variant mildly rescue iron-uptake deficiency of yeast mutant ccc2; dbSNP:rs60431989." evidence="8 19 32 37 39 55 59">
    <original>I</original>
    <variation>T</variation>
    <location>
        <position position="1148"/>
    </location>
</feature>
<feature type="sequence variant" id="VAR_058930" description="In WD; dbSNP:rs1566462533." evidence="51">
    <original>G</original>
    <variation>A</variation>
    <location>
        <position position="1149"/>
    </location>
</feature>
<feature type="sequence variant" id="VAR_077618" description="In WD; uncertain significance." evidence="75">
    <original>G</original>
    <variation>E</variation>
    <location>
        <position position="1149"/>
    </location>
</feature>
<feature type="sequence variant" id="VAR_075338" description="In WD; yeast complementation assays show that the variant does not rescue iron-uptake deficiency of yeast mutant ccc2; dbSNP:rs755554442." evidence="49 59 66 68">
    <original>R</original>
    <variation>C</variation>
    <location>
        <position position="1151"/>
    </location>
</feature>
<feature type="sequence variant" id="VAR_009022" description="In WD; dbSNP:rs377297166." evidence="12">
    <original>R</original>
    <variation>H</variation>
    <location>
        <position position="1151"/>
    </location>
</feature>
<feature type="sequence variant" id="VAR_000769" description="In WD; dbSNP:rs1330620114." evidence="99">
    <original>W</original>
    <variation>C</variation>
    <location>
        <position position="1153"/>
    </location>
</feature>
<feature type="sequence variant" id="VAR_010018" description="In WD." evidence="88">
    <original>W</original>
    <variation>R</variation>
    <location>
        <position position="1153"/>
    </location>
</feature>
<feature type="sequence variant" id="VAR_058931" description="In WD; dbSNP:rs867107727." evidence="51">
    <original>D</original>
    <variation>N</variation>
    <location>
        <position position="1164"/>
    </location>
</feature>
<feature type="sequence variant" id="VAR_023034" description="In WD; dbSNP:rs777879359." evidence="27 59">
    <original>A</original>
    <variation>S</variation>
    <location>
        <position position="1168"/>
    </location>
</feature>
<feature type="sequence variant" id="VAR_009023" description="In WD; dbSNP:rs1555285311." evidence="12">
    <original>M</original>
    <variation>T</variation>
    <location>
        <position position="1169"/>
    </location>
</feature>
<feature type="sequence variant" id="VAR_000770" description="In WD; moderate impairment in copper transport; dbSNP:rs749085322." evidence="50">
    <original>M</original>
    <variation>V</variation>
    <location>
        <position position="1169"/>
    </location>
</feature>
<feature type="sequence variant" id="VAR_058932" description="In WD; yeast complementation assays show that the variant fully rescue iron-uptake deficiency of yeast mutant ccc2." evidence="51 55">
    <original>E</original>
    <variation>G</variation>
    <location>
        <position position="1173"/>
    </location>
</feature>
<feature type="sequence variant" id="VAR_009024" description="In WD; dbSNP:rs756029120." evidence="12 22 32">
    <original>E</original>
    <variation>K</variation>
    <location>
        <position position="1173"/>
    </location>
</feature>
<feature type="sequence variant" id="VAR_044478" description="In WD; yeast complementation assays show that the variant mildly rescue iron-uptake deficiency of yeast mutant ccc2; dbSNP:rs1318758433." evidence="40 55">
    <original>G</original>
    <variation>E</variation>
    <location>
        <position position="1176"/>
    </location>
</feature>
<feature type="sequence variant" id="VAR_010019" description="In WD; dbSNP:rs137853279." evidence="37 39 101">
    <original>G</original>
    <variation>R</variation>
    <location>
        <position position="1176"/>
    </location>
</feature>
<feature type="sequence variant" id="VAR_076748" description="In WD; uncertain significance; dbSNP:rs1387431334." evidence="47 66">
    <original>T</original>
    <variation>A</variation>
    <location>
        <position position="1178"/>
    </location>
</feature>
<feature type="sequence variant" id="VAR_000771" description="In WD; dbSNP:rs587783315." evidence="25 97">
    <original>A</original>
    <variation>G</variation>
    <location>
        <position position="1183"/>
    </location>
</feature>
<feature type="sequence variant" id="VAR_000772" description="In WD; uncertain significance; no effect on copper transport activity; dbSNP:rs2138775370." evidence="50 97">
    <original>A</original>
    <variation>T</variation>
    <location>
        <position position="1183"/>
    </location>
</feature>
<feature type="sequence variant" id="VAR_000773" description="In WD." evidence="92">
    <original>G</original>
    <variation>C</variation>
    <location>
        <position position="1186"/>
    </location>
</feature>
<feature type="sequence variant" id="VAR_000774" description="In WD; uncertain significance; no effect on copper transport activity; dbSNP:rs786204547." evidence="9 14 39 50 59 93">
    <original>G</original>
    <variation>S</variation>
    <location>
        <position position="1186"/>
    </location>
</feature>
<feature type="sequence variant" id="VAR_076749" description="In WD; uncertain significance." evidence="67">
    <original>A</original>
    <variation>G</variation>
    <location>
        <position position="1202"/>
    </location>
</feature>
<feature type="sequence variant" id="VAR_009025" description="In dbSNP:rs7334118." evidence="12 47 60 68">
    <original>H</original>
    <variation>R</variation>
    <location>
        <position position="1207"/>
    </location>
</feature>
<feature type="sequence variant" id="VAR_000775" description="In WD; loss of copper transport activity; no effect on ATPase activity; dbSNP:rs1555284582." evidence="62 94">
    <original>G</original>
    <variation>V</variation>
    <location>
        <position position="1213"/>
    </location>
</feature>
<feature type="sequence variant" id="VAR_000777" description="In WD." evidence="94">
    <location>
        <begin position="1216"/>
        <end position="1217"/>
    </location>
</feature>
<feature type="sequence variant" id="VAR_000776" description="In WD; dbSNP:rs776280797." evidence="31 38 59 97">
    <original>V</original>
    <variation>M</variation>
    <location>
        <position position="1216"/>
    </location>
</feature>
<feature type="sequence variant" id="VAR_044479" description="In WD." evidence="41">
    <location>
        <begin position="1217"/>
        <end position="1218"/>
    </location>
</feature>
<feature type="sequence variant" id="VAR_000778" description="In WD; dbSNP:rs193922107." evidence="42 49 64 87">
    <original>T</original>
    <variation>M</variation>
    <location>
        <position position="1220"/>
    </location>
</feature>
<feature type="sequence variant" id="VAR_044480" description="In WD; dbSNP:rs1486594906." evidence="40">
    <original>G</original>
    <variation>E</variation>
    <location>
        <position position="1221"/>
    </location>
</feature>
<feature type="sequence variant" id="VAR_044481" description="In WD; dbSNP:rs2138663905." evidence="9">
    <original>D</original>
    <variation>N</variation>
    <location>
        <position position="1222"/>
    </location>
</feature>
<feature type="sequence variant" id="VAR_010020" description="In WD; decreased copper transport activity; loss of ATPase activity." evidence="12 62">
    <original>D</original>
    <variation>V</variation>
    <location>
        <position position="1222"/>
    </location>
</feature>
<feature type="sequence variant" id="VAR_000779" description="In WD." evidence="92">
    <original>D</original>
    <variation>Y</variation>
    <location>
        <position position="1222"/>
    </location>
</feature>
<feature type="sequence variant" id="VAR_058933" description="In WD; yeast complementation assays show that the variant fully rescue iron-uptake deficiency of yeast mutant ccc2." evidence="51 55">
    <original>R</original>
    <variation>T</variation>
    <location>
        <position position="1228"/>
    </location>
</feature>
<feature type="sequence variant" id="VAR_058934" description="In WD; dbSNP:rs200911496." evidence="51">
    <original>I</original>
    <variation>V</variation>
    <location>
        <position position="1230"/>
    </location>
</feature>
<feature type="sequence variant" id="VAR_023035" description="In WD; dbSNP:rs568009639." evidence="33 38">
    <original>T</original>
    <variation>P</variation>
    <location>
        <position position="1232"/>
    </location>
</feature>
<feature type="sequence variant" id="VAR_009026" description="In WD; yeast complementation assays show that the variant does not rescue iron-uptake deficiency of yeast mutant ccc2; dbSNP:rs374628199." evidence="11 55">
    <original>V</original>
    <variation>G</variation>
    <location>
        <position position="1239"/>
    </location>
</feature>
<feature type="sequence variant" id="VAR_075339" description="In dbSNP:rs1277243795." evidence="68">
    <original>V</original>
    <variation>L</variation>
    <location>
        <position position="1243"/>
    </location>
</feature>
<feature type="sequence variant" id="VAR_023036" description="In dbSNP:rs587783316." evidence="32">
    <original>P</original>
    <variation>S</variation>
    <location>
        <position position="1245"/>
    </location>
</feature>
<feature type="sequence variant" id="VAR_075340" description="In WD." evidence="68">
    <original>P</original>
    <variation>T</variation>
    <location>
        <position position="1245"/>
    </location>
</feature>
<feature type="sequence variant" id="VAR_023037" description="In WD." evidence="32">
    <original>K</original>
    <variation>N</variation>
    <location>
        <position position="1248"/>
    </location>
</feature>
<feature type="sequence variant" id="VAR_076707" description="In WD; uncertain significance; dbSNP:rs372042739." evidence="69">
    <original>A</original>
    <variation>G</variation>
    <location>
        <position position="1250"/>
    </location>
</feature>
<feature type="sequence variant" id="VAR_023038" description="In WD." evidence="27">
    <original>L</original>
    <variation>I</variation>
    <location>
        <position position="1255"/>
    </location>
</feature>
<feature type="sequence variant" id="VAR_044483" description="In WD; dbSNP:rs1555283946." evidence="36">
    <original>Q</original>
    <variation>R</variation>
    <location>
        <position position="1256"/>
    </location>
</feature>
<feature type="sequence variant" id="VAR_009027" description="In WD; dbSNP:rs769484789." evidence="12">
    <original>V</original>
    <variation>F</variation>
    <location>
        <position position="1262"/>
    </location>
</feature>
<feature type="sequence variant" id="VAR_076750" description="In WD; uncertain significance; dbSNP:rs1566444586." evidence="66">
    <original>G</original>
    <variation>E</variation>
    <location>
        <position position="1266"/>
    </location>
</feature>
<feature type="sequence variant" id="VAR_009028" description="In WD; dbSNP:rs121907992." evidence="11 21 69">
    <original>G</original>
    <variation>R</variation>
    <location>
        <position position="1266"/>
    </location>
</feature>
<feature type="sequence variant" id="VAR_000781" description="In WD; decreased copper transport activity; loss of ATPase activity." evidence="62 92">
    <original>G</original>
    <variation>V</variation>
    <location>
        <position position="1266"/>
    </location>
</feature>
<feature type="sequence variant" id="VAR_000782" description="In WD; dbSNP:rs1555283916." evidence="14 27 59 93">
    <original>D</original>
    <variation>A</variation>
    <location>
        <position position="1267"/>
    </location>
</feature>
<feature type="sequence variant" id="VAR_058935" description="In WD; yeast complementation assays show that the variant does not rescue iron-uptake deficiency of yeast mutant ccc2; dbSNP:rs1555283916." evidence="51 55">
    <original>D</original>
    <variation>V</variation>
    <location>
        <position position="1267"/>
    </location>
</feature>
<feature type="sequence variant" id="VAR_076751" description="In WD; uncertain significance; dbSNP:rs1314712150." evidence="44">
    <original>G</original>
    <variation>R</variation>
    <location>
        <position position="1268"/>
    </location>
</feature>
<feature type="sequence variant" id="VAR_000783" description="In WD; loss of copper transport activity; increased ATPase activity; does not affect localization to late endosomes; dbSNP:rs121907990." evidence="14 20 22 23 27 41 44 59 62 66 68 69 76 84 85 92 93 99">
    <original>N</original>
    <variation>S</variation>
    <location>
        <position position="1270"/>
    </location>
</feature>
<feature type="sequence variant" id="VAR_023039" description="In WD." evidence="39">
    <original>D</original>
    <variation>N</variation>
    <location>
        <position position="1271"/>
    </location>
</feature>
<feature type="sequence variant" id="VAR_000784" description="In WD; decreased copper transport activity; increased ATPase activity; dbSNP:rs758355520." evidence="39 42 59 60 62 66 87">
    <original>P</original>
    <variation>L</variation>
    <location>
        <position position="1273"/>
    </location>
</feature>
<feature type="sequence variant" id="VAR_000785" description="In WD; uncertain significance; dbSNP:rs1375884723." evidence="90">
    <original>A</original>
    <variation>V</variation>
    <location>
        <position position="1278"/>
    </location>
</feature>
<feature type="sequence variant" id="VAR_023040" description="In WD; dbSNP:rs778914828." evidence="16">
    <original>D</original>
    <variation>G</variation>
    <location>
        <position position="1279"/>
    </location>
</feature>
<feature type="sequence variant" id="VAR_044484" description="In WD." evidence="41">
    <original>D</original>
    <variation>Y</variation>
    <location>
        <position position="1279"/>
    </location>
</feature>
<feature type="sequence variant" id="VAR_076818" description="In WD; uncertain significance; dbSNP:rs755202606." evidence="63">
    <original>G</original>
    <variation>D</variation>
    <location>
        <position position="1281"/>
    </location>
</feature>
<feature type="sequence variant" id="VAR_000786" description="In WD." evidence="90">
    <location>
        <begin position="1285"/>
        <end position="1292"/>
    </location>
</feature>
<feature type="sequence variant" id="VAR_044485" description="In WD; yeast complementation assays show that the variant mildly rescue iron-uptake deficiency of yeast mutant ccc2; dbSNP:rs762866453." evidence="40 55">
    <original>G</original>
    <variation>S</variation>
    <location>
        <position position="1287"/>
    </location>
</feature>
<feature type="sequence variant" id="VAR_076772" description="In WD; uncertain significance; dbSNP:rs373748155." evidence="49">
    <original>T</original>
    <variation>M</variation>
    <location>
        <position position="1288"/>
    </location>
</feature>
<feature type="sequence variant" id="VAR_076819" description="In WD; uncertain significance; dbSNP:rs776300396." evidence="63 76">
    <original>E</original>
    <variation>K</variation>
    <location>
        <position position="1293"/>
    </location>
</feature>
<feature type="sequence variant" id="VAR_076752" description="In WD; yeast complementation assays show that the variant does not rescue iron-uptake deficiency of yeast mutant ccc2; dbSNP:rs1340942427." evidence="59">
    <original>A</original>
    <variation>D</variation>
    <location>
        <position position="1295"/>
    </location>
</feature>
<feature type="sequence variant" id="VAR_044486" description="In WD; dbSNP:rs199821556." evidence="24">
    <original>D</original>
    <variation>N</variation>
    <location>
        <position position="1296"/>
    </location>
</feature>
<feature type="sequence variant" id="VAR_009029" description="In dbSNP:rs148399850." evidence="12">
    <original>V</original>
    <variation>I</variation>
    <location>
        <position position="1297"/>
    </location>
</feature>
<feature type="sequence variant" id="VAR_044487" description="In WD." evidence="13">
    <location>
        <position position="1297"/>
    </location>
</feature>
<feature type="sequence variant" id="VAR_076708" description="In WD; uncertain significance; dbSNP:rs753044473." evidence="69">
    <original>V</original>
    <variation>I</variation>
    <location>
        <position position="1298"/>
    </location>
</feature>
<feature type="sequence variant" id="VAR_076709" description="In WD; uncertain significance." evidence="69">
    <original>V</original>
    <variation>L</variation>
    <location>
        <position position="1298"/>
    </location>
</feature>
<feature type="sequence variant" id="VAR_023041" description="In WD; dbSNP:rs377144951." evidence="18 39">
    <original>L</original>
    <variation>P</variation>
    <location>
        <position position="1305"/>
    </location>
</feature>
<feature type="sequence variant" id="VAR_000787" description="In WD; dbSNP:rs749380700." evidence="87">
    <original>S</original>
    <variation>R</variation>
    <location>
        <position position="1310"/>
    </location>
</feature>
<feature type="sequence variant" id="VAR_000788" description="In WD; dbSNP:rs753330854." evidence="49 92">
    <original>R</original>
    <variation>P</variation>
    <location>
        <position position="1322"/>
    </location>
</feature>
<feature type="sequence variant" id="VAR_009030" description="In WD." evidence="12">
    <original>L</original>
    <variation>V</variation>
    <location>
        <position position="1327"/>
    </location>
</feature>
<feature type="sequence variant" id="VAR_058936" description="In WD; dbSNP:rs1333619338." evidence="51">
    <original>A</original>
    <variation>T</variation>
    <location>
        <position position="1328"/>
    </location>
</feature>
<feature type="sequence variant" id="VAR_079551" description="In WD." evidence="78">
    <location>
        <begin position="1331"/>
        <end position="1465"/>
    </location>
</feature>
<feature type="sequence variant" id="VAR_044488" description="In WD; dbSNP:rs1131691741." evidence="40">
    <original>Y</original>
    <variation>S</variation>
    <location>
        <position position="1331"/>
    </location>
</feature>
<feature type="sequence variant" id="VAR_067337" description="In WD." evidence="60">
    <original>N</original>
    <variation>D</variation>
    <location>
        <position position="1332"/>
    </location>
</feature>
<feature type="sequence variant" id="VAR_076773" description="In WD; uncertain significance." evidence="49">
    <original>N</original>
    <variation>K</variation>
    <location>
        <position position="1332"/>
    </location>
</feature>
<feature type="sequence variant" id="VAR_023042" description="In WD; dbSNP:rs1957026103." evidence="14">
    <original>I</original>
    <variation>T</variation>
    <location>
        <position position="1336"/>
    </location>
</feature>
<feature type="sequence variant" id="VAR_000789" description="In WD; dbSNP:rs779494870." evidence="39 41 42 49 60 97">
    <original>G</original>
    <variation>D</variation>
    <location>
        <position position="1341"/>
    </location>
</feature>
<feature type="sequence variant" id="VAR_067338" description="In WD; dbSNP:rs587783317." evidence="60">
    <original>G</original>
    <variation>R</variation>
    <location>
        <position position="1341"/>
    </location>
</feature>
<feature type="sequence variant" id="VAR_044489" description="In WD; dbSNP:rs587783317." evidence="30">
    <original>G</original>
    <variation>S</variation>
    <location>
        <position position="1341"/>
    </location>
</feature>
<feature type="sequence variant" id="VAR_044490" description="In WD; dbSNP:rs779494870." evidence="40">
    <original>G</original>
    <variation>V</variation>
    <location>
        <position position="1341"/>
    </location>
</feature>
<feature type="sequence variant" id="VAR_076973" description="In WD; uncertain significance; dbSNP:rs587783318." evidence="73">
    <original>G</original>
    <variation>S</variation>
    <location>
        <position position="1347"/>
    </location>
</feature>
<feature type="sequence variant" id="VAR_044491" description="In WD; dbSNP:rs1388795855." evidence="41">
    <original>P</original>
    <variation>S</variation>
    <location>
        <position position="1352"/>
    </location>
</feature>
<feature type="sequence variant" id="VAR_000790" description="In WD; dbSNP:rs1160679283." evidence="92">
    <original>W</original>
    <variation>R</variation>
    <location>
        <position position="1353"/>
    </location>
</feature>
<feature type="sequence variant" id="VAR_023043" description="In WD." evidence="39">
    <original>G</original>
    <variation>C</variation>
    <location>
        <position position="1355"/>
    </location>
</feature>
<feature type="sequence variant" id="VAR_010021" description="In WD; dbSNP:rs1555282751." evidence="88">
    <original>G</original>
    <variation>S</variation>
    <location>
        <position position="1355"/>
    </location>
</feature>
<feature type="sequence variant" id="VAR_000791" description="In WD." evidence="97">
    <original>A</original>
    <variation>S</variation>
    <location>
        <position position="1358"/>
    </location>
</feature>
<feature type="sequence variant" id="VAR_058937" description="In WD; dbSNP:rs759551693." evidence="51">
    <original>M</original>
    <variation>I</variation>
    <location>
        <position position="1359"/>
    </location>
</feature>
<feature type="sequence variant" id="VAR_009031" description="In WD; dbSNP:rs776848753." evidence="12">
    <original>S</original>
    <variation>F</variation>
    <location>
        <position position="1363"/>
    </location>
</feature>
<feature type="sequence variant" id="VAR_044492" description="In WD; dbSNP:rs749171049." evidence="41">
    <original>L</original>
    <variation>P</variation>
    <location>
        <position position="1368"/>
    </location>
</feature>
<feature type="sequence variant" id="VAR_076774" description="In WD; uncertain significance; dbSNP:rs1555282678." evidence="49">
    <original>S</original>
    <variation>L</variation>
    <location>
        <position position="1369"/>
    </location>
</feature>
<feature type="sequence variant" id="VAR_023044" description="In WD; increased protein degradation; the mutant has a diffuse cytoplasmic localization pattern and is absent from TGN under conditions of low-copper levels; dbSNP:rs780811477." evidence="14 58">
    <original>L</original>
    <variation>P</variation>
    <location>
        <position position="1373"/>
    </location>
</feature>
<feature type="sequence variant" id="VAR_023045" description="In WD; increased protein degradation; the mutant has a diffuse cytoplasmic localization pattern and is absent from TGN under conditions of low-copper levels; dbSNP:rs780811477." evidence="33 58">
    <original>L</original>
    <variation>R</variation>
    <location>
        <position position="1373"/>
    </location>
</feature>
<feature type="sequence variant" id="VAR_044493" description="In WD; uncertain significance; localized at the TGN as the wild-type under conditions of low-copper levels; dbSNP:rs1365425480." evidence="40 58">
    <original>C</original>
    <variation>S</variation>
    <location>
        <position position="1375"/>
    </location>
</feature>
<feature type="sequence variant" id="VAR_044494" description="In WD; uncertain significance; localized at the TGN as the wild-type under conditions of low-copper levels; dbSNP:rs181250704." evidence="40 58">
    <original>P</original>
    <variation>S</variation>
    <location>
        <position position="1379"/>
    </location>
</feature>
<feature type="sequence variant" id="VAR_044495" description="In dbSNP:rs587783320." evidence="13">
    <original>D</original>
    <variation>E</variation>
    <location>
        <position position="1407"/>
    </location>
</feature>
<feature type="sequence variant" id="VAR_076710" description="In WD; uncertain significance." evidence="69">
    <original>S</original>
    <variation>Y</variation>
    <location>
        <position position="1431"/>
    </location>
</feature>
<feature type="sequence variant" id="VAR_076711" description="In WD; uncertain significance; dbSNP:rs375692175." evidence="69">
    <original>S</original>
    <variation>F</variation>
    <location>
        <position position="1432"/>
    </location>
</feature>
<feature type="sequence variant" id="VAR_009032" description="In WD; uncertain significance; localized at the TGN as the wild-type under conditions of low-copper levels; dbSNP:rs60986317." evidence="12 58">
    <original>T</original>
    <variation>M</variation>
    <location>
        <position position="1434"/>
    </location>
</feature>
<feature type="mutagenesis site" description="Does not affect copper-induced relocalization." evidence="53">
    <location>
        <position position="32"/>
    </location>
</feature>
<feature type="mutagenesis site" description="Altered copper-induced relocalization." evidence="53">
    <original>F</original>
    <variation>A</variation>
    <location>
        <position position="37"/>
    </location>
</feature>
<feature type="mutagenesis site" description="Altered copper-induced relocalization." evidence="53">
    <original>F</original>
    <variation>W</variation>
    <variation>A</variation>
    <location>
        <position position="39"/>
    </location>
</feature>
<feature type="mutagenesis site" description="Does not affect copper-induced relocalization." evidence="53">
    <original>F</original>
    <variation>Y</variation>
    <location>
        <position position="39"/>
    </location>
</feature>
<feature type="mutagenesis site" description="Altered copper-induced relocalization." evidence="53">
    <original>D</original>
    <variation>A</variation>
    <location>
        <position position="40"/>
    </location>
</feature>
<feature type="mutagenesis site" description="Altered copper-induced relocalization." evidence="53">
    <original>N</original>
    <variation>A</variation>
    <location>
        <position position="41"/>
    </location>
</feature>
<feature type="mutagenesis site" description="Altered copper-induced relocalization." evidence="53">
    <original>V</original>
    <variation>A</variation>
    <location>
        <position position="42"/>
    </location>
</feature>
<feature type="mutagenesis site" description="Does not affect copper-induced relocalization." evidence="53">
    <original>V</original>
    <variation>I</variation>
    <location>
        <position position="42"/>
    </location>
</feature>
<feature type="mutagenesis site" description="Altered copper-induced relocalization." evidence="53">
    <original>G</original>
    <variation>A</variation>
    <location>
        <position position="43"/>
    </location>
</feature>
<feature type="mutagenesis site" description="Does not affect copper-induced relocalization." evidence="53">
    <original>Y</original>
    <variation>F</variation>
    <location>
        <position position="44"/>
    </location>
</feature>
<feature type="mutagenesis site" description="Altered copper-induced relocalization." evidence="53">
    <original>Y</original>
    <variation>W</variation>
    <variation>A</variation>
    <location>
        <position position="44"/>
    </location>
</feature>
<feature type="mutagenesis site" description="Altered copper-induced relocalization." evidence="53">
    <original>E</original>
    <variation>A</variation>
    <location>
        <position position="45"/>
    </location>
</feature>
<feature type="mutagenesis site" description="Altered copper-induced relocalization." evidence="74">
    <original>S</original>
    <variation>F</variation>
    <variation>D</variation>
    <variation>E</variation>
    <location>
        <position position="653"/>
    </location>
</feature>
<feature type="mutagenesis site" description="Loss of copper transport activity." evidence="62">
    <original>D</original>
    <variation>A</variation>
    <location>
        <position position="1027"/>
    </location>
</feature>
<feature type="mutagenesis site" description="Decreased copper transport activity with no effect on ATPase activity." evidence="62">
    <original>T</original>
    <variation>S</variation>
    <location>
        <position position="1031"/>
    </location>
</feature>
<feature type="mutagenesis site" description="Loss of ATPase activity. Cannot form an acylphosphate intermediate during catalysis. Does not alter folding of the nucleotide-binding domain." evidence="28">
    <original>H</original>
    <variation>A</variation>
    <variation>C</variation>
    <location>
        <position position="1069"/>
    </location>
</feature>
<feature type="sequence conflict" description="In Ref. 8; AAA16173." evidence="108" ref="8">
    <original>Q</original>
    <variation>G</variation>
    <location>
        <position position="488"/>
    </location>
</feature>
<feature type="sequence conflict" description="In Ref. 8; AAA16173." evidence="108" ref="8">
    <original>N</original>
    <variation>T</variation>
    <location>
        <position position="635"/>
    </location>
</feature>
<feature type="sequence conflict" description="In Ref. 8; AAA16173." evidence="108" ref="8">
    <original>P</original>
    <variation>L</variation>
    <location>
        <position position="767"/>
    </location>
</feature>
<feature type="sequence conflict" description="In Ref. 8; AAA16173." evidence="108" ref="8">
    <original>G</original>
    <variation>A</variation>
    <location>
        <position position="837"/>
    </location>
</feature>
<feature type="strand" evidence="115">
    <location>
        <begin position="58"/>
        <end position="65"/>
    </location>
</feature>
<feature type="helix" evidence="115">
    <location>
        <begin position="69"/>
        <end position="82"/>
    </location>
</feature>
<feature type="strand" evidence="115">
    <location>
        <begin position="88"/>
        <end position="92"/>
    </location>
</feature>
<feature type="turn" evidence="115">
    <location>
        <begin position="93"/>
        <end position="96"/>
    </location>
</feature>
<feature type="strand" evidence="115">
    <location>
        <begin position="97"/>
        <end position="102"/>
    </location>
</feature>
<feature type="turn" evidence="115">
    <location>
        <begin position="104"/>
        <end position="106"/>
    </location>
</feature>
<feature type="helix" evidence="115">
    <location>
        <begin position="109"/>
        <end position="119"/>
    </location>
</feature>
<feature type="strand" evidence="115">
    <location>
        <begin position="122"/>
        <end position="124"/>
    </location>
</feature>
<feature type="strand" evidence="114">
    <location>
        <begin position="143"/>
        <end position="151"/>
    </location>
</feature>
<feature type="helix" evidence="114">
    <location>
        <begin position="157"/>
        <end position="164"/>
    </location>
</feature>
<feature type="helix" evidence="114">
    <location>
        <begin position="165"/>
        <end position="167"/>
    </location>
</feature>
<feature type="strand" evidence="114">
    <location>
        <begin position="173"/>
        <end position="177"/>
    </location>
</feature>
<feature type="turn" evidence="114">
    <location>
        <begin position="178"/>
        <end position="181"/>
    </location>
</feature>
<feature type="strand" evidence="114">
    <location>
        <begin position="182"/>
        <end position="187"/>
    </location>
</feature>
<feature type="turn" evidence="114">
    <location>
        <begin position="189"/>
        <end position="191"/>
    </location>
</feature>
<feature type="helix" evidence="114">
    <location>
        <begin position="194"/>
        <end position="202"/>
    </location>
</feature>
<feature type="strand" evidence="114">
    <location>
        <begin position="208"/>
        <end position="210"/>
    </location>
</feature>
<feature type="strand" evidence="116">
    <location>
        <begin position="258"/>
        <end position="265"/>
    </location>
</feature>
<feature type="helix" evidence="116">
    <location>
        <begin position="266"/>
        <end position="268"/>
    </location>
</feature>
<feature type="helix" evidence="116">
    <location>
        <begin position="271"/>
        <end position="278"/>
    </location>
</feature>
<feature type="strand" evidence="116">
    <location>
        <begin position="285"/>
        <end position="291"/>
    </location>
</feature>
<feature type="turn" evidence="116">
    <location>
        <begin position="292"/>
        <end position="295"/>
    </location>
</feature>
<feature type="strand" evidence="116">
    <location>
        <begin position="296"/>
        <end position="301"/>
    </location>
</feature>
<feature type="turn" evidence="116">
    <location>
        <begin position="303"/>
        <end position="305"/>
    </location>
</feature>
<feature type="helix" evidence="116">
    <location>
        <begin position="308"/>
        <end position="315"/>
    </location>
</feature>
<feature type="strand" evidence="116">
    <location>
        <begin position="318"/>
        <end position="321"/>
    </location>
</feature>
<feature type="strand" evidence="116">
    <location>
        <begin position="323"/>
        <end position="326"/>
    </location>
</feature>
<feature type="strand" evidence="117">
    <location>
        <begin position="359"/>
        <end position="365"/>
    </location>
</feature>
<feature type="helix" evidence="117">
    <location>
        <begin position="371"/>
        <end position="382"/>
    </location>
</feature>
<feature type="strand" evidence="117">
    <location>
        <begin position="387"/>
        <end position="393"/>
    </location>
</feature>
<feature type="turn" evidence="117">
    <location>
        <begin position="394"/>
        <end position="397"/>
    </location>
</feature>
<feature type="strand" evidence="117">
    <location>
        <begin position="398"/>
        <end position="403"/>
    </location>
</feature>
<feature type="turn" evidence="117">
    <location>
        <begin position="405"/>
        <end position="407"/>
    </location>
</feature>
<feature type="helix" evidence="117">
    <location>
        <begin position="410"/>
        <end position="419"/>
    </location>
</feature>
<feature type="strand" evidence="117">
    <location>
        <begin position="424"/>
        <end position="428"/>
    </location>
</feature>
<feature type="strand" evidence="113">
    <location>
        <begin position="488"/>
        <end position="495"/>
    </location>
</feature>
<feature type="strand" evidence="113">
    <location>
        <begin position="499"/>
        <end position="501"/>
    </location>
</feature>
<feature type="helix" evidence="113">
    <location>
        <begin position="502"/>
        <end position="511"/>
    </location>
</feature>
<feature type="strand" evidence="113">
    <location>
        <begin position="519"/>
        <end position="522"/>
    </location>
</feature>
<feature type="turn" evidence="113">
    <location>
        <begin position="523"/>
        <end position="526"/>
    </location>
</feature>
<feature type="strand" evidence="113">
    <location>
        <begin position="527"/>
        <end position="532"/>
    </location>
</feature>
<feature type="turn" evidence="113">
    <location>
        <begin position="534"/>
        <end position="536"/>
    </location>
</feature>
<feature type="helix" evidence="113">
    <location>
        <begin position="539"/>
        <end position="549"/>
    </location>
</feature>
<feature type="strand" evidence="113">
    <location>
        <begin position="552"/>
        <end position="555"/>
    </location>
</feature>
<feature type="strand" evidence="118">
    <location>
        <begin position="566"/>
        <end position="571"/>
    </location>
</feature>
<feature type="strand" evidence="118">
    <location>
        <begin position="575"/>
        <end position="577"/>
    </location>
</feature>
<feature type="helix" evidence="118">
    <location>
        <begin position="578"/>
        <end position="588"/>
    </location>
</feature>
<feature type="strand" evidence="113">
    <location>
        <begin position="589"/>
        <end position="591"/>
    </location>
</feature>
<feature type="strand" evidence="118">
    <location>
        <begin position="592"/>
        <end position="598"/>
    </location>
</feature>
<feature type="turn" evidence="118">
    <location>
        <begin position="599"/>
        <end position="602"/>
    </location>
</feature>
<feature type="strand" evidence="118">
    <location>
        <begin position="603"/>
        <end position="608"/>
    </location>
</feature>
<feature type="turn" evidence="118">
    <location>
        <begin position="610"/>
        <end position="612"/>
    </location>
</feature>
<feature type="helix" evidence="118">
    <location>
        <begin position="615"/>
        <end position="625"/>
    </location>
</feature>
<feature type="strand" evidence="118">
    <location>
        <begin position="628"/>
        <end position="631"/>
    </location>
</feature>
<feature type="helix" evidence="118">
    <location>
        <begin position="638"/>
        <end position="642"/>
    </location>
</feature>
<feature type="helix" evidence="118">
    <location>
        <begin position="644"/>
        <end position="657"/>
    </location>
</feature>
<feature type="helix" evidence="118">
    <location>
        <begin position="658"/>
        <end position="660"/>
    </location>
</feature>
<feature type="helix" evidence="118">
    <location>
        <begin position="662"/>
        <end position="672"/>
    </location>
</feature>
<feature type="strand" evidence="118">
    <location>
        <begin position="679"/>
        <end position="681"/>
    </location>
</feature>
<feature type="helix" evidence="118">
    <location>
        <begin position="683"/>
        <end position="685"/>
    </location>
</feature>
<feature type="strand" evidence="118">
    <location>
        <begin position="687"/>
        <end position="689"/>
    </location>
</feature>
<feature type="helix" evidence="118">
    <location>
        <begin position="694"/>
        <end position="709"/>
    </location>
</feature>
<feature type="helix" evidence="118">
    <location>
        <begin position="712"/>
        <end position="722"/>
    </location>
</feature>
<feature type="turn" evidence="119">
    <location>
        <begin position="723"/>
        <end position="725"/>
    </location>
</feature>
<feature type="helix" evidence="118">
    <location>
        <begin position="730"/>
        <end position="753"/>
    </location>
</feature>
<feature type="helix" evidence="118">
    <location>
        <begin position="767"/>
        <end position="786"/>
    </location>
</feature>
<feature type="turn" evidence="118">
    <location>
        <begin position="787"/>
        <end position="789"/>
    </location>
</feature>
<feature type="helix" evidence="118">
    <location>
        <begin position="790"/>
        <end position="796"/>
    </location>
</feature>
<feature type="strand" evidence="118">
    <location>
        <begin position="803"/>
        <end position="808"/>
    </location>
</feature>
<feature type="strand" evidence="118">
    <location>
        <begin position="810"/>
        <end position="812"/>
    </location>
</feature>
<feature type="strand" evidence="118">
    <location>
        <begin position="814"/>
        <end position="820"/>
    </location>
</feature>
<feature type="turn" evidence="118">
    <location>
        <begin position="822"/>
        <end position="824"/>
    </location>
</feature>
<feature type="strand" evidence="118">
    <location>
        <begin position="830"/>
        <end position="833"/>
    </location>
</feature>
<feature type="strand" evidence="118">
    <location>
        <begin position="841"/>
        <end position="847"/>
    </location>
</feature>
<feature type="strand" evidence="118">
    <location>
        <begin position="850"/>
        <end position="853"/>
    </location>
</feature>
<feature type="turn" evidence="118">
    <location>
        <begin position="855"/>
        <end position="857"/>
    </location>
</feature>
<feature type="strand" evidence="118">
    <location>
        <begin position="864"/>
        <end position="866"/>
    </location>
</feature>
<feature type="strand" evidence="118">
    <location>
        <begin position="883"/>
        <end position="889"/>
    </location>
</feature>
<feature type="helix" evidence="118">
    <location>
        <begin position="891"/>
        <end position="893"/>
    </location>
</feature>
<feature type="helix" evidence="118">
    <location>
        <begin position="895"/>
        <end position="906"/>
    </location>
</feature>
<feature type="helix" evidence="118">
    <location>
        <begin position="912"/>
        <end position="920"/>
    </location>
</feature>
<feature type="helix" evidence="118">
    <location>
        <begin position="925"/>
        <end position="945"/>
    </location>
</feature>
<feature type="helix" evidence="118">
    <location>
        <begin position="947"/>
        <end position="953"/>
    </location>
</feature>
<feature type="strand" evidence="118">
    <location>
        <begin position="959"/>
        <end position="961"/>
    </location>
</feature>
<feature type="helix" evidence="118">
    <location>
        <begin position="964"/>
        <end position="977"/>
    </location>
</feature>
<feature type="turn" evidence="118">
    <location>
        <begin position="978"/>
        <end position="981"/>
    </location>
</feature>
<feature type="helix" evidence="118">
    <location>
        <begin position="984"/>
        <end position="988"/>
    </location>
</feature>
<feature type="helix" evidence="118">
    <location>
        <begin position="990"/>
        <end position="1003"/>
    </location>
</feature>
<feature type="turn" evidence="118">
    <location>
        <begin position="1004"/>
        <end position="1006"/>
    </location>
</feature>
<feature type="strand" evidence="119">
    <location>
        <begin position="1007"/>
        <end position="1009"/>
    </location>
</feature>
<feature type="helix" evidence="118">
    <location>
        <begin position="1013"/>
        <end position="1017"/>
    </location>
</feature>
<feature type="helix" evidence="119">
    <location>
        <begin position="1018"/>
        <end position="1020"/>
    </location>
</feature>
<feature type="strand" evidence="118">
    <location>
        <begin position="1023"/>
        <end position="1028"/>
    </location>
</feature>
<feature type="turn" evidence="118">
    <location>
        <begin position="1029"/>
        <end position="1032"/>
    </location>
</feature>
<feature type="strand" evidence="118">
    <location>
        <begin position="1038"/>
        <end position="1044"/>
    </location>
</feature>
<feature type="strand" evidence="118">
    <location>
        <begin position="1048"/>
        <end position="1051"/>
    </location>
</feature>
<feature type="helix" evidence="118">
    <location>
        <begin position="1053"/>
        <end position="1064"/>
    </location>
</feature>
<feature type="helix" evidence="118">
    <location>
        <begin position="1070"/>
        <end position="1083"/>
    </location>
</feature>
<feature type="strand" evidence="118">
    <location>
        <begin position="1090"/>
        <end position="1097"/>
    </location>
</feature>
<feature type="turn" evidence="118">
    <location>
        <begin position="1098"/>
        <end position="1100"/>
    </location>
</feature>
<feature type="strand" evidence="118">
    <location>
        <begin position="1101"/>
        <end position="1107"/>
    </location>
</feature>
<feature type="helix" evidence="118">
    <location>
        <begin position="1110"/>
        <end position="1113"/>
    </location>
</feature>
<feature type="strand" evidence="112">
    <location>
        <begin position="1127"/>
        <end position="1130"/>
    </location>
</feature>
<feature type="strand" evidence="118">
    <location>
        <begin position="1145"/>
        <end position="1149"/>
    </location>
</feature>
<feature type="helix" evidence="118">
    <location>
        <begin position="1151"/>
        <end position="1156"/>
    </location>
</feature>
<feature type="helix" evidence="118">
    <location>
        <begin position="1163"/>
        <end position="1168"/>
    </location>
</feature>
<feature type="helix" evidence="118">
    <location>
        <begin position="1170"/>
        <end position="1173"/>
    </location>
</feature>
<feature type="turn" evidence="118">
    <location>
        <begin position="1174"/>
        <end position="1176"/>
    </location>
</feature>
<feature type="strand" evidence="118">
    <location>
        <begin position="1178"/>
        <end position="1184"/>
    </location>
</feature>
<feature type="strand" evidence="118">
    <location>
        <begin position="1187"/>
        <end position="1195"/>
    </location>
</feature>
<feature type="helix" evidence="118">
    <location>
        <begin position="1202"/>
        <end position="1211"/>
    </location>
</feature>
<feature type="strand" evidence="118">
    <location>
        <begin position="1215"/>
        <end position="1219"/>
    </location>
</feature>
<feature type="helix" evidence="118">
    <location>
        <begin position="1224"/>
        <end position="1234"/>
    </location>
</feature>
<feature type="strand" evidence="119">
    <location>
        <begin position="1237"/>
        <end position="1240"/>
    </location>
</feature>
<feature type="turn" evidence="118">
    <location>
        <begin position="1245"/>
        <end position="1247"/>
    </location>
</feature>
<feature type="helix" evidence="118">
    <location>
        <begin position="1250"/>
        <end position="1256"/>
    </location>
</feature>
<feature type="strand" evidence="118">
    <location>
        <begin position="1262"/>
        <end position="1266"/>
    </location>
</feature>
<feature type="helix" evidence="119">
    <location>
        <begin position="1269"/>
        <end position="1271"/>
    </location>
</feature>
<feature type="helix" evidence="118">
    <location>
        <begin position="1272"/>
        <end position="1277"/>
    </location>
</feature>
<feature type="strand" evidence="118">
    <location>
        <begin position="1278"/>
        <end position="1283"/>
    </location>
</feature>
<feature type="strand" evidence="118">
    <location>
        <begin position="1296"/>
        <end position="1299"/>
    </location>
</feature>
<feature type="helix" evidence="118">
    <location>
        <begin position="1305"/>
        <end position="1339"/>
    </location>
</feature>
<feature type="turn" evidence="118">
    <location>
        <begin position="1340"/>
        <end position="1347"/>
    </location>
</feature>
<feature type="helix" evidence="118">
    <location>
        <begin position="1352"/>
        <end position="1357"/>
    </location>
</feature>
<feature type="helix" evidence="118">
    <location>
        <begin position="1360"/>
        <end position="1371"/>
    </location>
</feature>
<feature type="helix" evidence="118">
    <location>
        <begin position="1372"/>
        <end position="1374"/>
    </location>
</feature>
<feature type="helix" evidence="118">
    <location>
        <begin position="1381"/>
        <end position="1388"/>
    </location>
</feature>
<feature type="helix" evidence="118">
    <location>
        <begin position="1397"/>
        <end position="1399"/>
    </location>
</feature>
<dbReference type="EC" id="7.2.2.8" evidence="62"/>
<dbReference type="EMBL" id="U11700">
    <property type="protein sequence ID" value="AAA92667.1"/>
    <property type="molecule type" value="mRNA"/>
</dbReference>
<dbReference type="EMBL" id="DQ015922">
    <property type="protein sequence ID" value="AAY41166.1"/>
    <property type="molecule type" value="mRNA"/>
</dbReference>
<dbReference type="EMBL" id="AL138821">
    <property type="status" value="NOT_ANNOTATED_CDS"/>
    <property type="molecule type" value="Genomic_DNA"/>
</dbReference>
<dbReference type="EMBL" id="AL139082">
    <property type="status" value="NOT_ANNOTATED_CDS"/>
    <property type="molecule type" value="Genomic_DNA"/>
</dbReference>
<dbReference type="EMBL" id="AL162377">
    <property type="status" value="NOT_ANNOTATED_CDS"/>
    <property type="molecule type" value="Genomic_DNA"/>
</dbReference>
<dbReference type="EMBL" id="AF034838">
    <property type="protein sequence ID" value="AAD01998.1"/>
    <property type="molecule type" value="Genomic_DNA"/>
</dbReference>
<dbReference type="EMBL" id="U03464">
    <property type="protein sequence ID" value="AAB52902.1"/>
    <property type="molecule type" value="mRNA"/>
</dbReference>
<dbReference type="EMBL" id="L25591">
    <property type="protein sequence ID" value="AAA79211.1"/>
    <property type="status" value="ALT_FRAME"/>
    <property type="molecule type" value="mRNA"/>
</dbReference>
<dbReference type="EMBL" id="L25591">
    <property type="protein sequence ID" value="AAA79212.1"/>
    <property type="status" value="ALT_FRAME"/>
    <property type="molecule type" value="mRNA"/>
</dbReference>
<dbReference type="EMBL" id="L25442">
    <property type="protein sequence ID" value="AAA16173.1"/>
    <property type="status" value="ALT_FRAME"/>
    <property type="molecule type" value="mRNA"/>
</dbReference>
<dbReference type="EMBL" id="AB209461">
    <property type="protein sequence ID" value="BAD92698.1"/>
    <property type="molecule type" value="mRNA"/>
</dbReference>
<dbReference type="EMBL" id="S77446">
    <property type="protein sequence ID" value="AAD14987.1"/>
    <property type="molecule type" value="Genomic_DNA"/>
</dbReference>
<dbReference type="EMBL" id="S77447">
    <property type="protein sequence ID" value="AAB34086.1"/>
    <property type="molecule type" value="Genomic_DNA"/>
</dbReference>
<dbReference type="EMBL" id="S77450">
    <property type="protein sequence ID" value="AAB34087.1"/>
    <property type="molecule type" value="Genomic_DNA"/>
</dbReference>
<dbReference type="CCDS" id="CCDS41892.1">
    <molecule id="P35670-1"/>
</dbReference>
<dbReference type="CCDS" id="CCDS45049.1">
    <molecule id="P35670-2"/>
</dbReference>
<dbReference type="CCDS" id="CCDS58293.1">
    <molecule id="P35670-3"/>
</dbReference>
<dbReference type="PIR" id="I78536">
    <property type="entry name" value="I78536"/>
</dbReference>
<dbReference type="PIR" id="I78537">
    <property type="entry name" value="I78537"/>
</dbReference>
<dbReference type="PIR" id="S78555">
    <property type="entry name" value="S78555"/>
</dbReference>
<dbReference type="RefSeq" id="NP_000044.2">
    <molecule id="P35670-1"/>
    <property type="nucleotide sequence ID" value="NM_000053.4"/>
</dbReference>
<dbReference type="RefSeq" id="NP_001005918.1">
    <molecule id="P35670-2"/>
    <property type="nucleotide sequence ID" value="NM_001005918.3"/>
</dbReference>
<dbReference type="RefSeq" id="NP_001230111.1">
    <molecule id="P35670-3"/>
    <property type="nucleotide sequence ID" value="NM_001243182.2"/>
</dbReference>
<dbReference type="RefSeq" id="NP_001317507.1">
    <property type="nucleotide sequence ID" value="NM_001330578.1"/>
</dbReference>
<dbReference type="RefSeq" id="NP_001317508.1">
    <property type="nucleotide sequence ID" value="NM_001330579.1"/>
</dbReference>
<dbReference type="RefSeq" id="NP_001393440.1">
    <molecule id="P35670-1"/>
    <property type="nucleotide sequence ID" value="NM_001406511.1"/>
</dbReference>
<dbReference type="RefSeq" id="NP_001393441.1">
    <molecule id="P35670-1"/>
    <property type="nucleotide sequence ID" value="NM_001406512.1"/>
</dbReference>
<dbReference type="RefSeq" id="NP_001393444.1">
    <molecule id="P35670-4"/>
    <property type="nucleotide sequence ID" value="NM_001406515.1"/>
</dbReference>
<dbReference type="RefSeq" id="NP_001393445.1">
    <molecule id="P35670-4"/>
    <property type="nucleotide sequence ID" value="NM_001406516.1"/>
</dbReference>
<dbReference type="RefSeq" id="XP_005266487.1">
    <property type="nucleotide sequence ID" value="XM_005266430.4"/>
</dbReference>
<dbReference type="PDB" id="2ARF">
    <property type="method" value="NMR"/>
    <property type="chains" value="A=1032-1196"/>
</dbReference>
<dbReference type="PDB" id="2EW9">
    <property type="method" value="NMR"/>
    <property type="chains" value="A=486-633"/>
</dbReference>
<dbReference type="PDB" id="2KOY">
    <property type="method" value="NMR"/>
    <property type="chains" value="A=1036-1196"/>
</dbReference>
<dbReference type="PDB" id="2LQB">
    <property type="method" value="NMR"/>
    <property type="chains" value="A=141-212"/>
</dbReference>
<dbReference type="PDB" id="2N7Y">
    <property type="method" value="NMR"/>
    <property type="chains" value="A=56-127"/>
</dbReference>
<dbReference type="PDB" id="2ROP">
    <property type="method" value="NMR"/>
    <property type="chains" value="A=238-439"/>
</dbReference>
<dbReference type="PDB" id="6A71">
    <property type="method" value="X-ray"/>
    <property type="resolution" value="1.60 A"/>
    <property type="chains" value="A/B=357-428"/>
</dbReference>
<dbReference type="PDB" id="6A72">
    <property type="method" value="X-ray"/>
    <property type="resolution" value="2.10 A"/>
    <property type="chains" value="A/B=357-428"/>
</dbReference>
<dbReference type="PDB" id="7XUK">
    <property type="method" value="EM"/>
    <property type="resolution" value="3.30 A"/>
    <property type="chains" value="A=1-1465"/>
</dbReference>
<dbReference type="PDB" id="7XUM">
    <property type="method" value="EM"/>
    <property type="resolution" value="3.80 A"/>
    <property type="chains" value="A=1-1465"/>
</dbReference>
<dbReference type="PDB" id="7XUN">
    <property type="method" value="EM"/>
    <property type="resolution" value="3.40 A"/>
    <property type="chains" value="A=1-1465"/>
</dbReference>
<dbReference type="PDB" id="7XUO">
    <property type="method" value="EM"/>
    <property type="resolution" value="3.60 A"/>
    <property type="chains" value="A=1-1465"/>
</dbReference>
<dbReference type="PDB" id="8IOY">
    <property type="method" value="EM"/>
    <property type="resolution" value="4.00 A"/>
    <property type="chains" value="A=1-1465"/>
</dbReference>
<dbReference type="PDBsum" id="2ARF"/>
<dbReference type="PDBsum" id="2EW9"/>
<dbReference type="PDBsum" id="2KOY"/>
<dbReference type="PDBsum" id="2LQB"/>
<dbReference type="PDBsum" id="2N7Y"/>
<dbReference type="PDBsum" id="2ROP"/>
<dbReference type="PDBsum" id="6A71"/>
<dbReference type="PDBsum" id="6A72"/>
<dbReference type="PDBsum" id="7XUK"/>
<dbReference type="PDBsum" id="7XUM"/>
<dbReference type="PDBsum" id="7XUN"/>
<dbReference type="PDBsum" id="7XUO"/>
<dbReference type="PDBsum" id="8IOY"/>
<dbReference type="BMRB" id="P35670"/>
<dbReference type="EMDB" id="EMD-33472"/>
<dbReference type="EMDB" id="EMD-33474"/>
<dbReference type="EMDB" id="EMD-33475"/>
<dbReference type="EMDB" id="EMD-33476"/>
<dbReference type="EMDB" id="EMD-35628"/>
<dbReference type="SMR" id="P35670"/>
<dbReference type="BioGRID" id="107022">
    <property type="interactions" value="49"/>
</dbReference>
<dbReference type="FunCoup" id="P35670">
    <property type="interactions" value="1012"/>
</dbReference>
<dbReference type="IntAct" id="P35670">
    <property type="interactions" value="24"/>
</dbReference>
<dbReference type="STRING" id="9606.ENSP00000242839"/>
<dbReference type="DrugBank" id="DB00958">
    <property type="generic name" value="Carboplatin"/>
</dbReference>
<dbReference type="DrugBank" id="DB00515">
    <property type="generic name" value="Cisplatin"/>
</dbReference>
<dbReference type="DrugBank" id="DB09130">
    <property type="generic name" value="Copper"/>
</dbReference>
<dbReference type="DrugBank" id="DB00526">
    <property type="generic name" value="Oxaliplatin"/>
</dbReference>
<dbReference type="TCDB" id="3.A.3.5.3">
    <property type="family name" value="the p-type atpase (p-atpase) superfamily"/>
</dbReference>
<dbReference type="GlyCosmos" id="P35670">
    <property type="glycosylation" value="1 site, 1 glycan"/>
</dbReference>
<dbReference type="GlyGen" id="P35670">
    <property type="glycosylation" value="1 site, 1 O-linked glycan (1 site)"/>
</dbReference>
<dbReference type="iPTMnet" id="P35670"/>
<dbReference type="PhosphoSitePlus" id="P35670"/>
<dbReference type="SwissPalm" id="P35670"/>
<dbReference type="BioMuta" id="ATP7B"/>
<dbReference type="DMDM" id="239938919"/>
<dbReference type="jPOST" id="P35670"/>
<dbReference type="MassIVE" id="P35670"/>
<dbReference type="PaxDb" id="9606-ENSP00000242839"/>
<dbReference type="PeptideAtlas" id="P35670"/>
<dbReference type="ProteomicsDB" id="55130">
    <molecule id="P35670-1"/>
</dbReference>
<dbReference type="ProteomicsDB" id="55131">
    <molecule id="P35670-2"/>
</dbReference>
<dbReference type="ProteomicsDB" id="55132">
    <molecule id="P35670-3"/>
</dbReference>
<dbReference type="ProteomicsDB" id="55133">
    <molecule id="P35670-4"/>
</dbReference>
<dbReference type="Pumba" id="P35670"/>
<dbReference type="ABCD" id="P35670">
    <property type="antibodies" value="17 sequenced antibodies"/>
</dbReference>
<dbReference type="Antibodypedia" id="2396">
    <property type="antibodies" value="523 antibodies from 37 providers"/>
</dbReference>
<dbReference type="DNASU" id="540"/>
<dbReference type="Ensembl" id="ENST00000242839.10">
    <molecule id="P35670-1"/>
    <property type="protein sequence ID" value="ENSP00000242839.5"/>
    <property type="gene ID" value="ENSG00000123191.18"/>
</dbReference>
<dbReference type="Ensembl" id="ENST00000400366.6">
    <molecule id="P35670-3"/>
    <property type="protein sequence ID" value="ENSP00000383217.3"/>
    <property type="gene ID" value="ENSG00000123191.18"/>
</dbReference>
<dbReference type="Ensembl" id="ENST00000674147.2">
    <molecule id="P35670-2"/>
    <property type="protein sequence ID" value="ENSP00000500964.2"/>
    <property type="gene ID" value="ENSG00000123191.18"/>
</dbReference>
<dbReference type="GeneID" id="540"/>
<dbReference type="KEGG" id="hsa:540"/>
<dbReference type="MANE-Select" id="ENST00000242839.10">
    <property type="protein sequence ID" value="ENSP00000242839.5"/>
    <property type="RefSeq nucleotide sequence ID" value="NM_000053.4"/>
    <property type="RefSeq protein sequence ID" value="NP_000044.2"/>
</dbReference>
<dbReference type="UCSC" id="uc001vfw.4">
    <molecule id="P35670-1"/>
    <property type="organism name" value="human"/>
</dbReference>
<dbReference type="AGR" id="HGNC:870"/>
<dbReference type="CTD" id="540"/>
<dbReference type="DisGeNET" id="540"/>
<dbReference type="GeneCards" id="ATP7B"/>
<dbReference type="GeneReviews" id="ATP7B"/>
<dbReference type="HGNC" id="HGNC:870">
    <property type="gene designation" value="ATP7B"/>
</dbReference>
<dbReference type="HPA" id="ENSG00000123191">
    <property type="expression patterns" value="Low tissue specificity"/>
</dbReference>
<dbReference type="MalaCards" id="ATP7B"/>
<dbReference type="MIM" id="277900">
    <property type="type" value="phenotype"/>
</dbReference>
<dbReference type="MIM" id="606882">
    <property type="type" value="gene"/>
</dbReference>
<dbReference type="neXtProt" id="NX_P35670"/>
<dbReference type="OpenTargets" id="ENSG00000123191"/>
<dbReference type="Orphanet" id="905">
    <property type="disease" value="Wilson disease"/>
</dbReference>
<dbReference type="PharmGKB" id="PA73"/>
<dbReference type="VEuPathDB" id="HostDB:ENSG00000123191"/>
<dbReference type="eggNOG" id="KOG0207">
    <property type="taxonomic scope" value="Eukaryota"/>
</dbReference>
<dbReference type="GeneTree" id="ENSGT00940000155749"/>
<dbReference type="HOGENOM" id="CLU_001771_0_1_1"/>
<dbReference type="InParanoid" id="P35670"/>
<dbReference type="OMA" id="PNSWISG"/>
<dbReference type="OrthoDB" id="432719at2759"/>
<dbReference type="PAN-GO" id="P35670">
    <property type="GO annotations" value="6 GO annotations based on evolutionary models"/>
</dbReference>
<dbReference type="PhylomeDB" id="P35670"/>
<dbReference type="TreeFam" id="TF300460"/>
<dbReference type="BRENDA" id="7.2.2.8">
    <property type="organism ID" value="2681"/>
</dbReference>
<dbReference type="BRENDA" id="7.2.2.9">
    <property type="organism ID" value="2681"/>
</dbReference>
<dbReference type="PathwayCommons" id="P35670"/>
<dbReference type="Reactome" id="R-HSA-936837">
    <property type="pathway name" value="Ion transport by P-type ATPases"/>
</dbReference>
<dbReference type="SignaLink" id="P35670"/>
<dbReference type="SIGNOR" id="P35670"/>
<dbReference type="BioGRID-ORCS" id="540">
    <property type="hits" value="11 hits in 1154 CRISPR screens"/>
</dbReference>
<dbReference type="ChiTaRS" id="ATP7B">
    <property type="organism name" value="human"/>
</dbReference>
<dbReference type="EvolutionaryTrace" id="P35670"/>
<dbReference type="GeneWiki" id="Wilson_disease_protein"/>
<dbReference type="GenomeRNAi" id="540"/>
<dbReference type="Pharos" id="P35670">
    <property type="development level" value="Tbio"/>
</dbReference>
<dbReference type="PRO" id="PR:P35670"/>
<dbReference type="Proteomes" id="UP000005640">
    <property type="component" value="Chromosome 13"/>
</dbReference>
<dbReference type="RNAct" id="P35670">
    <property type="molecule type" value="protein"/>
</dbReference>
<dbReference type="Bgee" id="ENSG00000123191">
    <property type="expression patterns" value="Expressed in nasal cavity epithelium and 123 other cell types or tissues"/>
</dbReference>
<dbReference type="ExpressionAtlas" id="P35670">
    <property type="expression patterns" value="baseline and differential"/>
</dbReference>
<dbReference type="GO" id="GO:0005794">
    <property type="term" value="C:Golgi apparatus"/>
    <property type="evidence" value="ECO:0000314"/>
    <property type="project" value="HPA"/>
</dbReference>
<dbReference type="GO" id="GO:0000139">
    <property type="term" value="C:Golgi membrane"/>
    <property type="evidence" value="ECO:0000304"/>
    <property type="project" value="Reactome"/>
</dbReference>
<dbReference type="GO" id="GO:0005770">
    <property type="term" value="C:late endosome"/>
    <property type="evidence" value="ECO:0000314"/>
    <property type="project" value="UniProtKB"/>
</dbReference>
<dbReference type="GO" id="GO:0016020">
    <property type="term" value="C:membrane"/>
    <property type="evidence" value="ECO:0007005"/>
    <property type="project" value="UniProtKB"/>
</dbReference>
<dbReference type="GO" id="GO:0005739">
    <property type="term" value="C:mitochondrion"/>
    <property type="evidence" value="ECO:0006056"/>
    <property type="project" value="FlyBase"/>
</dbReference>
<dbReference type="GO" id="GO:0005886">
    <property type="term" value="C:plasma membrane"/>
    <property type="evidence" value="ECO:0000318"/>
    <property type="project" value="GO_Central"/>
</dbReference>
<dbReference type="GO" id="GO:0032588">
    <property type="term" value="C:trans-Golgi network membrane"/>
    <property type="evidence" value="ECO:0000314"/>
    <property type="project" value="UniProtKB"/>
</dbReference>
<dbReference type="GO" id="GO:0005524">
    <property type="term" value="F:ATP binding"/>
    <property type="evidence" value="ECO:0000314"/>
    <property type="project" value="UniProtKB"/>
</dbReference>
<dbReference type="GO" id="GO:0016887">
    <property type="term" value="F:ATP hydrolysis activity"/>
    <property type="evidence" value="ECO:0007669"/>
    <property type="project" value="InterPro"/>
</dbReference>
<dbReference type="GO" id="GO:0005507">
    <property type="term" value="F:copper ion binding"/>
    <property type="evidence" value="ECO:0000314"/>
    <property type="project" value="UniProtKB"/>
</dbReference>
<dbReference type="GO" id="GO:0005375">
    <property type="term" value="F:copper ion transmembrane transporter activity"/>
    <property type="evidence" value="ECO:0000314"/>
    <property type="project" value="UniProtKB"/>
</dbReference>
<dbReference type="GO" id="GO:0043682">
    <property type="term" value="F:P-type divalent copper transporter activity"/>
    <property type="evidence" value="ECO:0000315"/>
    <property type="project" value="UniProtKB"/>
</dbReference>
<dbReference type="GO" id="GO:0140581">
    <property type="term" value="F:P-type monovalent copper transporter activity"/>
    <property type="evidence" value="ECO:0007669"/>
    <property type="project" value="UniProtKB-EC"/>
</dbReference>
<dbReference type="GO" id="GO:0060003">
    <property type="term" value="P:copper ion export"/>
    <property type="evidence" value="ECO:0000318"/>
    <property type="project" value="GO_Central"/>
</dbReference>
<dbReference type="GO" id="GO:0015677">
    <property type="term" value="P:copper ion import"/>
    <property type="evidence" value="ECO:0000314"/>
    <property type="project" value="UniProtKB"/>
</dbReference>
<dbReference type="GO" id="GO:0006825">
    <property type="term" value="P:copper ion transport"/>
    <property type="evidence" value="ECO:0000314"/>
    <property type="project" value="UniProtKB"/>
</dbReference>
<dbReference type="GO" id="GO:0051649">
    <property type="term" value="P:establishment of localization in cell"/>
    <property type="evidence" value="ECO:0007669"/>
    <property type="project" value="Ensembl"/>
</dbReference>
<dbReference type="GO" id="GO:0006878">
    <property type="term" value="P:intracellular copper ion homeostasis"/>
    <property type="evidence" value="ECO:0000318"/>
    <property type="project" value="GO_Central"/>
</dbReference>
<dbReference type="GO" id="GO:0006882">
    <property type="term" value="P:intracellular zinc ion homeostasis"/>
    <property type="evidence" value="ECO:0007669"/>
    <property type="project" value="Ensembl"/>
</dbReference>
<dbReference type="GO" id="GO:0007595">
    <property type="term" value="P:lactation"/>
    <property type="evidence" value="ECO:0007669"/>
    <property type="project" value="Ensembl"/>
</dbReference>
<dbReference type="GO" id="GO:0034220">
    <property type="term" value="P:monoatomic ion transmembrane transport"/>
    <property type="evidence" value="ECO:0000304"/>
    <property type="project" value="Reactome"/>
</dbReference>
<dbReference type="GO" id="GO:0051604">
    <property type="term" value="P:protein maturation"/>
    <property type="evidence" value="ECO:0007669"/>
    <property type="project" value="Ensembl"/>
</dbReference>
<dbReference type="GO" id="GO:0046688">
    <property type="term" value="P:response to copper ion"/>
    <property type="evidence" value="ECO:0000314"/>
    <property type="project" value="UniProtKB"/>
</dbReference>
<dbReference type="GO" id="GO:0051208">
    <property type="term" value="P:sequestering of calcium ion"/>
    <property type="evidence" value="ECO:0000314"/>
    <property type="project" value="UniProtKB"/>
</dbReference>
<dbReference type="GO" id="GO:0075523">
    <property type="term" value="P:viral translational frameshifting"/>
    <property type="evidence" value="ECO:0007669"/>
    <property type="project" value="UniProtKB-KW"/>
</dbReference>
<dbReference type="GO" id="GO:1990961">
    <property type="term" value="P:xenobiotic detoxification by transmembrane export across the plasma membrane"/>
    <property type="evidence" value="ECO:0000305"/>
    <property type="project" value="GO_Central"/>
</dbReference>
<dbReference type="CDD" id="cd00371">
    <property type="entry name" value="HMA"/>
    <property type="match status" value="6"/>
</dbReference>
<dbReference type="CDD" id="cd02094">
    <property type="entry name" value="P-type_ATPase_Cu-like"/>
    <property type="match status" value="1"/>
</dbReference>
<dbReference type="FunFam" id="3.30.70.100:FF:000001">
    <property type="entry name" value="ATPase copper transporting beta"/>
    <property type="match status" value="5"/>
</dbReference>
<dbReference type="FunFam" id="3.30.70.100:FF:000009">
    <property type="entry name" value="ATPase copper transporting beta"/>
    <property type="match status" value="1"/>
</dbReference>
<dbReference type="FunFam" id="3.40.1110.10:FF:000015">
    <property type="entry name" value="ATPase copper transporting beta"/>
    <property type="match status" value="1"/>
</dbReference>
<dbReference type="FunFam" id="1.20.1110.10:FF:000022">
    <property type="entry name" value="copper-transporting ATPase 1 isoform X2"/>
    <property type="match status" value="1"/>
</dbReference>
<dbReference type="FunFam" id="3.40.50.1000:FF:000092">
    <property type="entry name" value="copper-transporting ATPase 1 isoform X2"/>
    <property type="match status" value="1"/>
</dbReference>
<dbReference type="FunFam" id="3.40.50.1000:FF:000144">
    <property type="entry name" value="copper-transporting ATPase 1 isoform X2"/>
    <property type="match status" value="1"/>
</dbReference>
<dbReference type="FunFam" id="2.70.150.10:FF:000002">
    <property type="entry name" value="Copper-transporting ATPase 1, putative"/>
    <property type="match status" value="1"/>
</dbReference>
<dbReference type="Gene3D" id="3.30.70.100">
    <property type="match status" value="6"/>
</dbReference>
<dbReference type="Gene3D" id="3.40.1110.10">
    <property type="entry name" value="Calcium-transporting ATPase, cytoplasmic domain N"/>
    <property type="match status" value="1"/>
</dbReference>
<dbReference type="Gene3D" id="2.70.150.10">
    <property type="entry name" value="Calcium-transporting ATPase, cytoplasmic transduction domain A"/>
    <property type="match status" value="1"/>
</dbReference>
<dbReference type="Gene3D" id="3.40.50.1000">
    <property type="entry name" value="HAD superfamily/HAD-like"/>
    <property type="match status" value="1"/>
</dbReference>
<dbReference type="InterPro" id="IPR023299">
    <property type="entry name" value="ATPase_P-typ_cyto_dom_N"/>
</dbReference>
<dbReference type="InterPro" id="IPR018303">
    <property type="entry name" value="ATPase_P-typ_P_site"/>
</dbReference>
<dbReference type="InterPro" id="IPR023298">
    <property type="entry name" value="ATPase_P-typ_TM_dom_sf"/>
</dbReference>
<dbReference type="InterPro" id="IPR008250">
    <property type="entry name" value="ATPase_P-typ_transduc_dom_A_sf"/>
</dbReference>
<dbReference type="InterPro" id="IPR036412">
    <property type="entry name" value="HAD-like_sf"/>
</dbReference>
<dbReference type="InterPro" id="IPR023214">
    <property type="entry name" value="HAD_sf"/>
</dbReference>
<dbReference type="InterPro" id="IPR017969">
    <property type="entry name" value="Heavy-metal-associated_CS"/>
</dbReference>
<dbReference type="InterPro" id="IPR006122">
    <property type="entry name" value="HMA_Cu_ion-bd"/>
</dbReference>
<dbReference type="InterPro" id="IPR006121">
    <property type="entry name" value="HMA_dom"/>
</dbReference>
<dbReference type="InterPro" id="IPR036163">
    <property type="entry name" value="HMA_dom_sf"/>
</dbReference>
<dbReference type="InterPro" id="IPR027256">
    <property type="entry name" value="P-typ_ATPase_IB"/>
</dbReference>
<dbReference type="InterPro" id="IPR001757">
    <property type="entry name" value="P_typ_ATPase"/>
</dbReference>
<dbReference type="InterPro" id="IPR044492">
    <property type="entry name" value="P_typ_ATPase_HD_dom"/>
</dbReference>
<dbReference type="NCBIfam" id="TIGR01525">
    <property type="entry name" value="ATPase-IB_hvy"/>
    <property type="match status" value="1"/>
</dbReference>
<dbReference type="NCBIfam" id="TIGR01494">
    <property type="entry name" value="ATPase_P-type"/>
    <property type="match status" value="2"/>
</dbReference>
<dbReference type="NCBIfam" id="TIGR00003">
    <property type="entry name" value="copper ion binding protein"/>
    <property type="match status" value="6"/>
</dbReference>
<dbReference type="PANTHER" id="PTHR46594">
    <property type="entry name" value="P-TYPE CATION-TRANSPORTING ATPASE"/>
    <property type="match status" value="1"/>
</dbReference>
<dbReference type="PANTHER" id="PTHR46594:SF8">
    <property type="entry name" value="P-TYPE CU(+) TRANSPORTER"/>
    <property type="match status" value="1"/>
</dbReference>
<dbReference type="Pfam" id="PF00122">
    <property type="entry name" value="E1-E2_ATPase"/>
    <property type="match status" value="1"/>
</dbReference>
<dbReference type="Pfam" id="PF00403">
    <property type="entry name" value="HMA"/>
    <property type="match status" value="6"/>
</dbReference>
<dbReference type="Pfam" id="PF00702">
    <property type="entry name" value="Hydrolase"/>
    <property type="match status" value="1"/>
</dbReference>
<dbReference type="PRINTS" id="PR00119">
    <property type="entry name" value="CATATPASE"/>
</dbReference>
<dbReference type="PRINTS" id="PR00942">
    <property type="entry name" value="CUATPASEI"/>
</dbReference>
<dbReference type="SFLD" id="SFLDS00003">
    <property type="entry name" value="Haloacid_Dehalogenase"/>
    <property type="match status" value="1"/>
</dbReference>
<dbReference type="SFLD" id="SFLDF00027">
    <property type="entry name" value="p-type_atpase"/>
    <property type="match status" value="1"/>
</dbReference>
<dbReference type="SUPFAM" id="SSF81653">
    <property type="entry name" value="Calcium ATPase, transduction domain A"/>
    <property type="match status" value="1"/>
</dbReference>
<dbReference type="SUPFAM" id="SSF81665">
    <property type="entry name" value="Calcium ATPase, transmembrane domain M"/>
    <property type="match status" value="1"/>
</dbReference>
<dbReference type="SUPFAM" id="SSF56784">
    <property type="entry name" value="HAD-like"/>
    <property type="match status" value="1"/>
</dbReference>
<dbReference type="SUPFAM" id="SSF55008">
    <property type="entry name" value="HMA, heavy metal-associated domain"/>
    <property type="match status" value="6"/>
</dbReference>
<dbReference type="PROSITE" id="PS00154">
    <property type="entry name" value="ATPASE_E1_E2"/>
    <property type="match status" value="1"/>
</dbReference>
<dbReference type="PROSITE" id="PS01047">
    <property type="entry name" value="HMA_1"/>
    <property type="match status" value="6"/>
</dbReference>
<dbReference type="PROSITE" id="PS50846">
    <property type="entry name" value="HMA_2"/>
    <property type="match status" value="6"/>
</dbReference>
<protein>
    <recommendedName>
        <fullName>Copper-transporting ATPase 2</fullName>
        <ecNumber evidence="62">7.2.2.8</ecNumber>
    </recommendedName>
    <alternativeName>
        <fullName>Copper pump 2</fullName>
    </alternativeName>
    <alternativeName>
        <fullName>Wilson disease-associated protein</fullName>
    </alternativeName>
    <component>
        <recommendedName>
            <fullName evidence="106">WND/140 kDa</fullName>
        </recommendedName>
    </component>
</protein>
<proteinExistence type="evidence at protein level"/>
<gene>
    <name type="primary">ATP7B</name>
    <name type="synonym">PWD</name>
    <name type="synonym">WC1</name>
    <name type="synonym">WND</name>
</gene>
<comment type="function">
    <text evidence="50 62 74 77">Copper ion transmembrane transporter involved in the export of copper out of the cells. It is involved in copper homeostasis in the liver, where it ensures the efflux of copper from hepatocytes into the bile in response to copper overload.</text>
</comment>
<comment type="catalytic activity">
    <reaction evidence="62">
        <text>Cu(+)(in) + ATP + H2O = Cu(+)(out) + ADP + phosphate + H(+)</text>
        <dbReference type="Rhea" id="RHEA:25792"/>
        <dbReference type="ChEBI" id="CHEBI:15377"/>
        <dbReference type="ChEBI" id="CHEBI:15378"/>
        <dbReference type="ChEBI" id="CHEBI:30616"/>
        <dbReference type="ChEBI" id="CHEBI:43474"/>
        <dbReference type="ChEBI" id="CHEBI:49552"/>
        <dbReference type="ChEBI" id="CHEBI:456216"/>
        <dbReference type="EC" id="7.2.2.8"/>
    </reaction>
</comment>
<comment type="subunit">
    <text evidence="29 43 45 48 52">Monomer. Interacts with COMMD1/MURR1 (PubMed:12968035, PubMed:17919502). Interacts with DCTN4, in a copper-dependent manner (PubMed:16554302). Interacts with ATOX1 (PubMed:17919502, PubMed:18558714). Interacts (via C-terminus) with ZBTB16/PLZF (PubMed:16676348).</text>
</comment>
<comment type="interaction">
    <interactant intactId="EBI-11668501">
        <id>P35670</id>
    </interactant>
    <interactant intactId="EBI-10179267">
        <id>O00244</id>
        <label>ATOX1</label>
    </interactant>
    <organismsDiffer>false</organismsDiffer>
    <experiments>3</experiments>
</comment>
<comment type="interaction">
    <interactant intactId="EBI-11668501">
        <id>P35670</id>
    </interactant>
    <interactant intactId="EBI-1550112">
        <id>Q8N668</id>
        <label>COMMD1</label>
    </interactant>
    <organismsDiffer>false</organismsDiffer>
    <experiments>10</experiments>
</comment>
<comment type="subcellular location">
    <subcellularLocation>
        <location evidence="48 53 62 74">Golgi apparatus</location>
        <location evidence="48 53 62 74">trans-Golgi network membrane</location>
        <topology evidence="3">Multi-pass membrane protein</topology>
    </subcellularLocation>
    <subcellularLocation>
        <location evidence="20 35">Late endosome</location>
    </subcellularLocation>
    <text evidence="15 62 74 91">Predominantly found in the trans-Golgi network (TGN). Localized in the trans-Golgi network under low copper conditions, redistributes to cytoplasmic vesicles when cells are exposed to elevated copper levels, and then recycles back to the trans-Golgi network when copper is removed (PubMed:10942420).</text>
</comment>
<comment type="subcellular location">
    <molecule>Isoform 1</molecule>
    <subcellularLocation>
        <location evidence="91">Golgi apparatus membrane</location>
        <topology evidence="91">Multi-pass membrane protein</topology>
    </subcellularLocation>
</comment>
<comment type="subcellular location">
    <molecule>Isoform 2</molecule>
    <subcellularLocation>
        <location evidence="91">Cytoplasm</location>
    </subcellularLocation>
</comment>
<comment type="subcellular location">
    <molecule>WND/140 kDa</molecule>
    <subcellularLocation>
        <location evidence="96">Mitochondrion</location>
    </subcellularLocation>
</comment>
<comment type="alternative products">
    <event type="alternative splicing"/>
    <event type="ribosomal frameshifting"/>
    <isoform>
        <id>P35670-1</id>
        <name>1</name>
        <name>A</name>
        <sequence type="displayed"/>
    </isoform>
    <isoform>
        <id>P35670-2</id>
        <name>2</name>
        <name>B</name>
        <sequence type="described" ref="VSP_000426 VSP_000427"/>
    </isoform>
    <isoform>
        <id>P35670-3</id>
        <name>3</name>
        <sequence type="described" ref="VSP_016559"/>
    </isoform>
    <isoform>
        <id>P35670-4</id>
        <name>4</name>
        <sequence type="described" ref="VSP_016560"/>
    </isoform>
    <isoform>
        <id>P35670-5</id>
        <name>5</name>
        <sequence type="described" ref="VSP_059175"/>
    </isoform>
</comment>
<comment type="tissue specificity">
    <text>Most abundant in liver and kidney and also found in brain. Isoform 2 is expressed in brain but not in liver. The cleaved form WND/140 kDa is found in liver cell lines and other tissues.</text>
</comment>
<comment type="domain">
    <text evidence="54">Each HMA domain can bind a copper ion, they are tightly packed and closely interact with each other. Wild-type ATP7B can usually be loaded with an average 5.5 copper atoms per molecule.</text>
</comment>
<comment type="PTM">
    <text>Isoform 1 may be proteolytically cleaved at the N-terminus to produce the WND/140 kDa form.</text>
</comment>
<comment type="disease" evidence="6 7 8 9 10 11 12 13 14 15 16 17 18 19 20 21 22 23 24 25 26 27 30 31 32 33 34 36 37 38 39 40 41 42 44 46 47 48 49 50 51 53 55 56 58 59 60 61 62 63 64 65 66 67 68 69 70 72 73 74 75 76 77 78 79 80 84 85 86 87 88 89 90 92 93 94 95 97 98 99 100 101">
    <disease id="DI-01146">
        <name>Wilson disease</name>
        <acronym>WD</acronym>
        <description>An autosomal recessive disorder of copper metabolism in which copper cannot be incorporated into ceruloplasmin in liver, and cannot be excreted from the liver into the bile. Copper accumulates in the liver and subsequently in the brain and kidney. The disease is characterized by neurologic manifestations and signs of cirrhosis.</description>
        <dbReference type="MIM" id="277900"/>
    </disease>
    <text>The disease is caused by variants affecting the gene represented in this entry.</text>
</comment>
<comment type="miscellaneous">
    <molecule>Isoform 5</molecule>
    <text evidence="109">May arise by a -1 programmed ribosomal frameshift at codon 233. A nucleotide 'slippery sequence' followed by an mRNA pseudoknot are found downstream of the frameshift site and direct frameshifting of a gene fragment with about 10% efficiency.</text>
</comment>
<comment type="similarity">
    <text evidence="108">Belongs to the cation transport ATPase (P-type) (TC 3.A.3) family. Type IB subfamily.</text>
</comment>
<comment type="sequence caution" evidence="108">
    <conflict type="frameshift">
        <sequence resource="EMBL-CDS" id="AAA16173"/>
    </conflict>
</comment>
<comment type="sequence caution" evidence="108">
    <conflict type="frameshift">
        <sequence resource="EMBL-CDS" id="AAA79211"/>
    </conflict>
</comment>
<comment type="sequence caution" evidence="108">
    <conflict type="frameshift">
        <sequence resource="EMBL-CDS" id="AAA79212"/>
    </conflict>
</comment>
<comment type="online information" name="The ATP7B gene homepage">
    <link uri="http://www.LOVD.nl/ATP7B"/>
</comment>
<reference key="1">
    <citation type="journal article" date="1994" name="Hum. Mol. Genet.">
        <title>Characterization of the Wilson disease gene encoding a P-type copper transporting ATPase: genomic organization, alternative splicing, and structure/function predictions.</title>
        <authorList>
            <person name="Petrukhin K."/>
            <person name="Lutsenko S."/>
            <person name="Chernov I."/>
            <person name="Ross B.M."/>
            <person name="Kaplan J.H."/>
            <person name="Gilliam T.C."/>
        </authorList>
    </citation>
    <scope>NUCLEOTIDE SEQUENCE [MRNA] (ISOFORM 1)</scope>
    <scope>VARIANTS ASP-96; ARG-875 AND LYS-952</scope>
</reference>
<reference key="2">
    <citation type="submission" date="2005-04" db="EMBL/GenBank/DDBJ databases">
        <title>Molecular cloning of mutant ATP7B.</title>
        <authorList>
            <person name="Carlini E.J."/>
            <person name="Booth-Genthe C.L."/>
        </authorList>
    </citation>
    <scope>NUCLEOTIDE SEQUENCE [MRNA] (ISOFORM 3)</scope>
    <scope>VARIANTS ALA-406; LEU-456; LYS-952 AND ALA-1140</scope>
</reference>
<reference key="3">
    <citation type="journal article" date="2004" name="Nature">
        <title>The DNA sequence and analysis of human chromosome 13.</title>
        <authorList>
            <person name="Dunham A."/>
            <person name="Matthews L.H."/>
            <person name="Burton J."/>
            <person name="Ashurst J.L."/>
            <person name="Howe K.L."/>
            <person name="Ashcroft K.J."/>
            <person name="Beare D.M."/>
            <person name="Burford D.C."/>
            <person name="Hunt S.E."/>
            <person name="Griffiths-Jones S."/>
            <person name="Jones M.C."/>
            <person name="Keenan S.J."/>
            <person name="Oliver K."/>
            <person name="Scott C.E."/>
            <person name="Ainscough R."/>
            <person name="Almeida J.P."/>
            <person name="Ambrose K.D."/>
            <person name="Andrews D.T."/>
            <person name="Ashwell R.I.S."/>
            <person name="Babbage A.K."/>
            <person name="Bagguley C.L."/>
            <person name="Bailey J."/>
            <person name="Bannerjee R."/>
            <person name="Barlow K.F."/>
            <person name="Bates K."/>
            <person name="Beasley H."/>
            <person name="Bird C.P."/>
            <person name="Bray-Allen S."/>
            <person name="Brown A.J."/>
            <person name="Brown J.Y."/>
            <person name="Burrill W."/>
            <person name="Carder C."/>
            <person name="Carter N.P."/>
            <person name="Chapman J.C."/>
            <person name="Clamp M.E."/>
            <person name="Clark S.Y."/>
            <person name="Clarke G."/>
            <person name="Clee C.M."/>
            <person name="Clegg S.C."/>
            <person name="Cobley V."/>
            <person name="Collins J.E."/>
            <person name="Corby N."/>
            <person name="Coville G.J."/>
            <person name="Deloukas P."/>
            <person name="Dhami P."/>
            <person name="Dunham I."/>
            <person name="Dunn M."/>
            <person name="Earthrowl M.E."/>
            <person name="Ellington A.G."/>
            <person name="Faulkner L."/>
            <person name="Frankish A.G."/>
            <person name="Frankland J."/>
            <person name="French L."/>
            <person name="Garner P."/>
            <person name="Garnett J."/>
            <person name="Gilbert J.G.R."/>
            <person name="Gilson C.J."/>
            <person name="Ghori J."/>
            <person name="Grafham D.V."/>
            <person name="Gribble S.M."/>
            <person name="Griffiths C."/>
            <person name="Hall R.E."/>
            <person name="Hammond S."/>
            <person name="Harley J.L."/>
            <person name="Hart E.A."/>
            <person name="Heath P.D."/>
            <person name="Howden P.J."/>
            <person name="Huckle E.J."/>
            <person name="Hunt P.J."/>
            <person name="Hunt A.R."/>
            <person name="Johnson C."/>
            <person name="Johnson D."/>
            <person name="Kay M."/>
            <person name="Kimberley A.M."/>
            <person name="King A."/>
            <person name="Laird G.K."/>
            <person name="Langford C.J."/>
            <person name="Lawlor S."/>
            <person name="Leongamornlert D.A."/>
            <person name="Lloyd D.M."/>
            <person name="Lloyd C."/>
            <person name="Loveland J.E."/>
            <person name="Lovell J."/>
            <person name="Martin S."/>
            <person name="Mashreghi-Mohammadi M."/>
            <person name="McLaren S.J."/>
            <person name="McMurray A."/>
            <person name="Milne S."/>
            <person name="Moore M.J.F."/>
            <person name="Nickerson T."/>
            <person name="Palmer S.A."/>
            <person name="Pearce A.V."/>
            <person name="Peck A.I."/>
            <person name="Pelan S."/>
            <person name="Phillimore B."/>
            <person name="Porter K.M."/>
            <person name="Rice C.M."/>
            <person name="Searle S."/>
            <person name="Sehra H.K."/>
            <person name="Shownkeen R."/>
            <person name="Skuce C.D."/>
            <person name="Smith M."/>
            <person name="Steward C.A."/>
            <person name="Sycamore N."/>
            <person name="Tester J."/>
            <person name="Thomas D.W."/>
            <person name="Tracey A."/>
            <person name="Tromans A."/>
            <person name="Tubby B."/>
            <person name="Wall M."/>
            <person name="Wallis J.M."/>
            <person name="West A.P."/>
            <person name="Whitehead S.L."/>
            <person name="Willey D.L."/>
            <person name="Wilming L."/>
            <person name="Wray P.W."/>
            <person name="Wright M.W."/>
            <person name="Young L."/>
            <person name="Coulson A."/>
            <person name="Durbin R.M."/>
            <person name="Hubbard T."/>
            <person name="Sulston J.E."/>
            <person name="Beck S."/>
            <person name="Bentley D.R."/>
            <person name="Rogers J."/>
            <person name="Ross M.T."/>
        </authorList>
    </citation>
    <scope>NUCLEOTIDE SEQUENCE [LARGE SCALE GENOMIC DNA]</scope>
</reference>
<reference key="4">
    <citation type="journal article" date="1999" name="Biochem. Biophys. Res. Commun.">
        <title>Cloning and characterization of the promoter region of the Wilson disease gene.</title>
        <authorList>
            <person name="Oh W.J."/>
            <person name="Kim E.K."/>
            <person name="Park K.D."/>
            <person name="Hahn S.H."/>
            <person name="Yoo O.J."/>
        </authorList>
    </citation>
    <scope>NUCLEOTIDE SEQUENCE [GENOMIC DNA] OF 1-17</scope>
</reference>
<reference key="5">
    <citation type="journal article" date="1993" name="Nat. Genet.">
        <title>The Wilson disease gene is a putative copper transporting P-type ATPase similar to the Menkes gene.</title>
        <authorList>
            <person name="Bull P.C."/>
            <person name="Thomas G.R."/>
            <person name="Rommens J.M."/>
            <person name="Forbes J.R."/>
            <person name="Cox D.W."/>
        </authorList>
    </citation>
    <scope>NUCLEOTIDE SEQUENCE [MRNA] OF 33-1465 (ISOFORM 1)</scope>
    <scope>VARIANT LYS-952</scope>
</reference>
<reference key="6">
    <citation type="submission" date="1997-04" db="EMBL/GenBank/DDBJ databases">
        <authorList>
            <person name="Cox D.W."/>
        </authorList>
    </citation>
    <scope>SEQUENCE REVISION</scope>
</reference>
<reference key="7">
    <citation type="journal article" date="1993" name="Nat. Genet.">
        <title>The Wilson disease gene is a copper transporting ATPase with homology to the Menkes disease gene.</title>
        <authorList>
            <person name="Tanzi R.E."/>
            <person name="Petrukhin K."/>
            <person name="Chernov I."/>
            <person name="Pellequer J.L."/>
            <person name="Wasco W."/>
            <person name="Ross B."/>
            <person name="Romano D.M."/>
            <person name="Parano E."/>
            <person name="Pavone L."/>
            <person name="Brzustowicz L.M."/>
            <person name="Devoto M."/>
            <person name="Peppercorn J."/>
            <person name="Bush A.I."/>
            <person name="Sternlieb I."/>
            <person name="Pirastu M."/>
            <person name="Gusella J.F."/>
            <person name="Evgrafov O."/>
            <person name="Penchaszadeh G.K."/>
            <person name="Honig B."/>
            <person name="Edelman I.S."/>
            <person name="Soares M.B."/>
            <person name="Scheinberg I.H."/>
            <person name="Gilliam T.C."/>
        </authorList>
    </citation>
    <scope>NUCLEOTIDE SEQUENCE [MRNA] OF 149-1465 (ISOFORM 2)</scope>
    <scope>VARIANTS WD GLN-1069 AND SER-1270</scope>
    <scope>VARIANT ARG-875</scope>
</reference>
<reference key="8">
    <citation type="journal article" date="1993" name="Biochem. Biophys. Res. Commun.">
        <title>Isolation and characterization of a human liver cDNA as a candidate gene for Wilson disease.</title>
        <authorList>
            <person name="Yamaguchi Y."/>
            <person name="Heiny M.E."/>
            <person name="Gitlin J.D."/>
        </authorList>
    </citation>
    <scope>NUCLEOTIDE SEQUENCE [MRNA] OF 488-837 (ISOFORM 4)</scope>
    <scope>VARIANT ARG-832</scope>
    <source>
        <tissue>Liver</tissue>
    </source>
</reference>
<reference key="9">
    <citation type="submission" date="2005-03" db="EMBL/GenBank/DDBJ databases">
        <authorList>
            <person name="Totoki Y."/>
            <person name="Toyoda A."/>
            <person name="Takeda T."/>
            <person name="Sakaki Y."/>
            <person name="Tanaka A."/>
            <person name="Yokoyama S."/>
            <person name="Ohara O."/>
            <person name="Nagase T."/>
            <person name="Kikuno R.F."/>
        </authorList>
    </citation>
    <scope>NUCLEOTIDE SEQUENCE [LARGE SCALE MRNA] OF 786-1465</scope>
    <scope>VARIANTS ARG-832 AND ALA-1140</scope>
    <source>
        <tissue>Brain</tissue>
    </source>
</reference>
<reference key="10">
    <citation type="journal article" date="1995" name="Nat. Genet.">
        <title>The Wilson disease gene: spectrum of mutations and their consequences.</title>
        <authorList>
            <person name="Thomas G.R."/>
            <person name="Forbes J.R."/>
            <person name="Roberts E.A."/>
            <person name="Walshe J.M."/>
            <person name="Cox D.W."/>
        </authorList>
    </citation>
    <scope>PARTIAL NUCLEOTIDE SEQUENCE [GENOMIC DNA]</scope>
    <scope>VARIANTS WD</scope>
    <scope>VARIANTS</scope>
</reference>
<reference key="11">
    <citation type="journal article" date="1995" name="Nat. Genet.">
        <authorList>
            <person name="Thomas G.R."/>
            <person name="Forbes J.R."/>
            <person name="Roberts E.A."/>
            <person name="Walshe J.M."/>
            <person name="Cox D.W."/>
        </authorList>
    </citation>
    <scope>ERRATUM OF PUBMED:7626145</scope>
</reference>
<reference key="12">
    <citation type="journal article" date="1997" name="Biochem. J.">
        <title>Two forms of Wilson disease protein produced by alternative splicing are localized in distinct cellular compartments.</title>
        <authorList>
            <person name="Yang X.-L."/>
            <person name="Miura N."/>
            <person name="Kawarada Y."/>
            <person name="Terada K."/>
            <person name="Petrukhin K."/>
            <person name="Gilliam T.C."/>
            <person name="Sugiyama T."/>
        </authorList>
    </citation>
    <scope>ALTERNATIVE SPLICING</scope>
    <scope>SUBCELLULAR LOCATION (ISOFORMS 1 AND 2)</scope>
</reference>
<reference key="13">
    <citation type="journal article" date="2000" name="Hum. Mol. Genet.">
        <title>Copper-dependent trafficking of Wilson disease mutant ATP7B proteins.</title>
        <authorList>
            <person name="Forbes J.R."/>
            <person name="Cox D.W."/>
        </authorList>
    </citation>
    <scope>SUBCELLULAR LOCATION</scope>
    <scope>CHARACTERIZATION OF VARIANTS WD ASN-765; VAL-776; LEU-778 AND SER-943</scope>
</reference>
<reference key="14">
    <citation type="journal article" date="2001" name="Gastroenterology">
        <title>A mutation of the Wilson disease protein, ATP7B, is degraded in the proteasomes and forms protein aggregates.</title>
        <authorList>
            <person name="Harada M."/>
            <person name="Sakisaka S."/>
            <person name="Terada K."/>
            <person name="Kimura R."/>
            <person name="Kawaguchi T."/>
            <person name="Koga H."/>
            <person name="Kim M."/>
            <person name="Taniguchi E."/>
            <person name="Hanada S."/>
            <person name="Suganuma T."/>
            <person name="Furuta K."/>
            <person name="Sugiyama T."/>
            <person name="Sata M."/>
        </authorList>
    </citation>
    <scope>SUBCELLULAR LOCATION</scope>
    <scope>CHARACTERIZATION OF VARIANTS WD GLN-1069 AND SER-1270</scope>
</reference>
<reference key="15">
    <citation type="journal article" date="2003" name="J. Biol. Chem.">
        <title>The role of the invariant His-1069 in folding and function of the Wilson's disease protein, the human copper-transporting ATPase ATP7B.</title>
        <authorList>
            <person name="Tsivkovskii R."/>
            <person name="Efremov R.G."/>
            <person name="Lutsenko S."/>
        </authorList>
    </citation>
    <scope>MUTAGENESIS OF HIS-1069</scope>
    <scope>CHARACTERIZATION OF VARIANT GLN-1069</scope>
</reference>
<reference key="16">
    <citation type="journal article" date="2005" name="Am. J. Pathol.">
        <title>The Wilson disease protein ATP7B resides in the late endosomes with Rab7 and the Niemann-Pick C1 protein.</title>
        <authorList>
            <person name="Harada M."/>
            <person name="Kawaguchi T."/>
            <person name="Kumemura H."/>
            <person name="Terada K."/>
            <person name="Ninomiya H."/>
            <person name="Taniguchi E."/>
            <person name="Hanada S."/>
            <person name="Baba S."/>
            <person name="Maeyama M."/>
            <person name="Koga H."/>
            <person name="Ueno T."/>
            <person name="Furuta K."/>
            <person name="Suganuma T."/>
            <person name="Sugiyama T."/>
            <person name="Sata M."/>
        </authorList>
    </citation>
    <scope>SUBCELLULAR LOCATION</scope>
</reference>
<reference key="17">
    <citation type="journal article" date="2006" name="J. Cell. Biochem.">
        <title>A new hepatocytic isoform of PLZF lacking the BTB domain interacts with ATP7B, the Wilson disease protein, and positively regulates ERK signal transduction.</title>
        <authorList>
            <person name="Ko J.H."/>
            <person name="Son W."/>
            <person name="Bae G.Y."/>
            <person name="Kang J.H."/>
            <person name="Oh W."/>
            <person name="Yoo O.J."/>
        </authorList>
    </citation>
    <scope>INTERACTION WITH ZBTB16</scope>
</reference>
<reference key="18">
    <citation type="journal article" date="2007" name="Gastroenterology">
        <title>Distinct Wilson's disease mutations in ATP7B are associated with enhanced binding to COMMD1 and reduced stability of ATP7B.</title>
        <authorList>
            <person name="de Bie P."/>
            <person name="van de Sluis B."/>
            <person name="Burstein E."/>
            <person name="van de Berghe P.V."/>
            <person name="Muller P."/>
            <person name="Berger R."/>
            <person name="Gitlin J.D."/>
            <person name="Wijmenga C."/>
            <person name="Klomp L.W."/>
        </authorList>
    </citation>
    <scope>SUBCELLULAR LOCATION</scope>
    <scope>INTERACTION WITH COMMD1 AND ATOX1</scope>
    <scope>CHARACTERIZATION OF VARIANTS WD SER-41; VAL-85; SER-486; SER-492; HIS-532; LYS-541; ASP-591; PRO-604; GLN-616; TRP-616; ALA-626; SER-641; HIS-642 AND ARG-645</scope>
</reference>
<reference key="19">
    <citation type="journal article" date="2013" name="J. Proteome Res.">
        <title>Toward a comprehensive characterization of a human cancer cell phosphoproteome.</title>
        <authorList>
            <person name="Zhou H."/>
            <person name="Di Palma S."/>
            <person name="Preisinger C."/>
            <person name="Peng M."/>
            <person name="Polat A.N."/>
            <person name="Heck A.J."/>
            <person name="Mohammed S."/>
        </authorList>
    </citation>
    <scope>PHOSPHORYLATION [LARGE SCALE ANALYSIS] AT SER-23 AND SER-478</scope>
    <scope>IDENTIFICATION BY MASS SPECTROMETRY [LARGE SCALE ANALYSIS]</scope>
    <source>
        <tissue>Erythroleukemia</tissue>
    </source>
</reference>
<reference key="20">
    <citation type="journal article" date="1998" name="Am. J. Hum. Genet.">
        <title>Functional characterization of missense mutations in ATP7B: Wilson disease mutation or normal variant?</title>
        <authorList>
            <person name="Forbes J.R."/>
            <person name="Cox D.W."/>
        </authorList>
    </citation>
    <scope>CHARACTERIZATION OF VARIANTS WD ASN-765; VAL-769; VAL-776; LEU-778; GLN-778; SER-943; MET-977 AND LEU-992</scope>
    <scope>CHARACTERIZATION OF VARIANT ALA-995</scope>
</reference>
<reference key="21">
    <citation type="journal article" date="1998" name="Proc. Natl. Acad. Sci. U.S.A.">
        <title>Localization of the Wilson's disease protein product to mitochondria.</title>
        <authorList>
            <person name="Lutsenko S."/>
            <person name="Cooper M.J."/>
        </authorList>
    </citation>
    <scope>POSSIBLE PROTEOLYTIC CLEAVAGE</scope>
    <scope>SUBCELLULAR LOCATION</scope>
</reference>
<reference key="22">
    <citation type="journal article" date="2003" name="J. Biol. Chem.">
        <title>The copper toxicosis gene product Murr1 directly interacts with the Wilson disease protein.</title>
        <authorList>
            <person name="Tao T.Y."/>
            <person name="Liu F."/>
            <person name="Klomp L."/>
            <person name="Wijmenga C."/>
            <person name="Gitlin J.D."/>
        </authorList>
    </citation>
    <scope>INTERACTION WITH COMMD1</scope>
</reference>
<reference key="23">
    <citation type="journal article" date="2006" name="J. Biol. Chem.">
        <title>Copper-dependent interaction of dynactin subunit p62 with the N terminus of ATP7B but not ATP7A.</title>
        <authorList>
            <person name="Lim C.M."/>
            <person name="Cater M.A."/>
            <person name="Mercer J.F."/>
            <person name="La Fontaine S."/>
        </authorList>
    </citation>
    <scope>INTERACTION WITH DCTN4</scope>
</reference>
<reference key="24">
    <citation type="journal article" date="2010" name="J. Biol. Chem.">
        <title>Interactions between copper-binding sites determine the redox status and conformation of the regulatory N-terminal domain of ATP7B.</title>
        <authorList>
            <person name="LeShane E.S."/>
            <person name="Shinde U."/>
            <person name="Walker J.M."/>
            <person name="Barry A.N."/>
            <person name="Blackburn N.J."/>
            <person name="Ralle M."/>
            <person name="Lutsenko S."/>
        </authorList>
    </citation>
    <scope>COPPER-BINDING SITES</scope>
    <scope>DOMAINS HMA</scope>
</reference>
<reference key="25">
    <citation type="journal article" date="2001" name="Arch. Neurol.">
        <title>Mutation analysis and the correlation between genotype and phenotype of Arg778Leu mutation in chinese patients with Wilson disease.</title>
        <authorList>
            <person name="Wu Z.Y."/>
            <person name="Wang N."/>
            <person name="Lin M.T."/>
            <person name="Fang L."/>
            <person name="Murong S.X."/>
            <person name="Yu L."/>
        </authorList>
    </citation>
    <scope>VARIANTS VAL-390; ALA-406; LEU-456; GLY-723; ARG-832; ARG-875; VAL-929; LYS-952 AND ALA-1140</scope>
    <scope>VARIANTS WD VAL-769; GLN-778; LEU-778; VAL-874; GLY-919; MET-935; ASP-943; PRO-1041; ILE-1106; HIS-1142; LYS-1173 AND SER-1270</scope>
</reference>
<reference key="26">
    <citation type="journal article" date="2006" name="J. Mol. Med.">
        <title>Mutation analysis of 218 Chinese patients with Wilson disease revealed no correlation between the canine copper toxicosis gene MURR1 and Wilson disease.</title>
        <authorList>
            <person name="Wu Z.Y."/>
            <person name="Zhao G.X."/>
            <person name="Chen W.J."/>
            <person name="Wang N."/>
            <person name="Wan B."/>
            <person name="Lin M.T."/>
            <person name="Murong S.X."/>
            <person name="Yu L."/>
        </authorList>
    </citation>
    <scope>VARIANTS WD LEU-778; MET-935; LEU-992; ARG-1268 AND SER-1270</scope>
</reference>
<reference key="27">
    <citation type="journal article" date="2007" name="Cell. Mol. Neurobiol.">
        <title>Molecular pathogenesis of Wilson disease among Indians: a perspective on mutation spectrum in ATP7B gene, prevalent defects, clinical heterogeneity and implication towards diagnosis.</title>
        <authorList>
            <person name="Gupta A."/>
            <person name="Chattopadhyay I."/>
            <person name="Dey S."/>
            <person name="Nasipuri P."/>
            <person name="Das S.K."/>
            <person name="Gangopadhyay P.K."/>
            <person name="Ray K."/>
        </authorList>
    </citation>
    <scope>VARIANTS LEU-149; LEU-456; LEU-825; ALA-1140 AND ARG-1207</scope>
    <scope>VARIANTS WD SER-591; ALA-1031 AND ALA-1178</scope>
</reference>
<reference key="28">
    <citation type="journal article" date="2007" name="Genet. Test.">
        <title>Twenty-four novel mutations in Wilson disease patients of predominantly Italian origin.</title>
        <authorList>
            <person name="Lepori M.B."/>
            <person name="Lovicu M."/>
            <person name="Dessi V."/>
            <person name="Zappu A."/>
            <person name="Incollu S."/>
            <person name="Zancan L."/>
            <person name="Giacchino R."/>
            <person name="Iorio R."/>
            <person name="Vajro P."/>
            <person name="Maggiore G."/>
            <person name="Marcellini M."/>
            <person name="Barbera C."/>
            <person name="Pellecchia M.T."/>
            <person name="Simonetti R."/>
            <person name="Kostic V."/>
            <person name="Farci A.M."/>
            <person name="Solinas A."/>
            <person name="De Virgiliis S."/>
            <person name="Cao A."/>
            <person name="Loudianos G."/>
        </authorList>
    </citation>
    <scope>VARIANTS WD ARG-645; VAL-769; GLN-778; TRP-778; PRO-827; ALA-858; VAL-874; PHE-899; TRP-919; MET-935; TRP-969; MET-977; VAL-982; MET-991; ARG-1012; VAL-1012; VAL-1018; LYS-1064; SER-1099; CYS-1151; MET-1220; MET-1288; PRO-1322; LYS-1332; ASP-1341 AND LEU-1369</scope>
</reference>
<reference key="29">
    <citation type="journal article" date="2009" name="Am. J. Physiol.">
        <title>Apical targeting and Golgi retention signals reside within a 9-amino acid sequence in the copper-ATPase, ATP7B.</title>
        <authorList>
            <person name="Braiterman L."/>
            <person name="Nyasae L."/>
            <person name="Guo Y."/>
            <person name="Bustos R."/>
            <person name="Lutsenko S."/>
            <person name="Hubbard A."/>
        </authorList>
    </citation>
    <scope>CHARACTERIZATION OF VARIANT WD SER-41</scope>
    <scope>SUBCELLULAR LOCATION</scope>
    <scope>MUTAGENESIS OF ALA-32; PHE-37; PHE-39; ASP-40; ASN-41; VAL-42; GLY-43; TYR-44 AND GLU-45</scope>
</reference>
<reference key="30">
    <citation type="journal article" date="2011" name="Am. J. Physiol.">
        <title>Critical roles for the COOH terminus of the Cu-ATPase ATP7B in protein stability, trans-Golgi network retention, copper sensing, and retrograde trafficking.</title>
        <authorList>
            <person name="Braiterman L."/>
            <person name="Nyasae L."/>
            <person name="Leves F."/>
            <person name="Hubbard A.L."/>
        </authorList>
    </citation>
    <scope>CHARACTERIZATION OF VARIANTS WD ARG-1373; PRO-1373; SER-1375; SER-1379 AND MET-1434</scope>
</reference>
<reference key="31">
    <citation type="journal article" date="2011" name="J. Biol. Chem.">
        <title>Difference in stability of the N-domain underlies distinct intracellular properties of the E1064A and H1069Q mutants of copper-transporting ATPase ATP7B.</title>
        <authorList>
            <person name="Dmitriev O.Y."/>
            <person name="Bhattacharjee A."/>
            <person name="Nokhrin S."/>
            <person name="Uhlemann E.M."/>
            <person name="Lutsenko S."/>
        </authorList>
    </citation>
    <scope>CHARACTERIZATION OF VARIANTS WD ALA-1064 AND GLN-1069</scope>
</reference>
<reference key="32">
    <citation type="journal article" date="2011" name="Liver Int.">
        <title>Distinct clinical courses according to presenting phenotypes and their correlations to ATP7B mutations in a large Wilson's disease cohort.</title>
        <authorList>
            <person name="Lee B.H."/>
            <person name="Kim J.H."/>
            <person name="Lee S.Y."/>
            <person name="Jin H.Y."/>
            <person name="Kim K.J."/>
            <person name="Lee J.J."/>
            <person name="Park J.Y."/>
            <person name="Kim G.H."/>
            <person name="Choi J.H."/>
            <person name="Kim K.M."/>
            <person name="Yoo H.W."/>
        </authorList>
    </citation>
    <scope>VARIANTS WD ARG-108; VAL-729; GLN-778; LEU-778; TRP-827; VAL-874; ASP-891; 899-ILE--GLN-907 DEL; GLY-919; ASP-943; SER-943; GLN-969; MET-977; LEU-992; THR-1010; ALA-1024; ILE-1029; ALA-1031; VAL-1035; PHE-1083; TYR-1091; ILE-1106; THR-1148; CYS-1151; SER-1168; SER-1186; MET-1216; ALA-1267; SER-1270; LEU-1273 AND ASP-1295</scope>
    <scope>CHARACTERIZATION OF VARIANTS WD TRP-827; THR-1010; CYS-1151 AND ASP-1295</scope>
</reference>
<reference key="33">
    <citation type="journal article" date="2011" name="Proc. Natl. Acad. Sci. U.S.A.">
        <title>Cellular copper levels determine the phenotype of the Arg875 variant of ATP7B/Wilson disease protein.</title>
        <authorList>
            <person name="Gupta A."/>
            <person name="Bhattacharjee A."/>
            <person name="Dmitriev O.Y."/>
            <person name="Nokhrin S."/>
            <person name="Braiterman L."/>
            <person name="Hubbard A.L."/>
            <person name="Lutsenko S."/>
        </authorList>
    </citation>
    <scope>CHARACTERIZATION OF VARIANT ARG-875</scope>
</reference>
<reference key="34">
    <citation type="journal article" date="2012" name="Gastroenterology">
        <title>Diverse functional properties of Wilson disease ATP7B variants.</title>
        <authorList>
            <person name="Huster D."/>
            <person name="Kuehne A."/>
            <person name="Bhattacharjee A."/>
            <person name="Raines L."/>
            <person name="Jantsch V."/>
            <person name="Noe J."/>
            <person name="Schirrmeister W."/>
            <person name="Sommerer I."/>
            <person name="Sabri O."/>
            <person name="Berr F."/>
            <person name="Moessner J."/>
            <person name="Stieger B."/>
            <person name="Caca K."/>
            <person name="Lutsenko S."/>
        </authorList>
    </citation>
    <scope>CHARACTERIZATION OF VARIANTS WD VAL-85; SER-492; TRP-616; ALA-626; ARG-645; SER-710; LEU-760; ASN-765; VAL-769; LEU-840; THR-857; VAL-874; GLN-969; LEU-992; LEU-1052; LYS-1064; GLN-1069; PHE-1083; VAL-1213; VAL-1222; ARG-1266; SER-1270 AND LEU-1273</scope>
    <scope>CHARACTERIZATION OF VARIANTS ALA-406; LEU-456 AND ARG-832</scope>
    <scope>MUTAGENESIS OF ASP-1027 AND THR-1031</scope>
    <scope>FUNCTION</scope>
    <scope>CATALYTIC ACTIVITY</scope>
    <scope>SUBCELLULAR LOCATION</scope>
</reference>
<reference key="35">
    <citation type="journal article" date="2012" name="J. Hum. Genet.">
        <title>Identification of a novel Wilson disease gene mutation frequent in Upper Austria: a genetic and clinical study.</title>
        <authorList>
            <person name="Hofer H."/>
            <person name="Willheim-Polli C."/>
            <person name="Knoflach P."/>
            <person name="Gabriel C."/>
            <person name="Vogel W."/>
            <person name="Trauner M."/>
            <person name="Mueller T."/>
            <person name="Ferenci P."/>
        </authorList>
    </citation>
    <scope>VARIANTS WD LEU-539; SER-710; GLY-779; SER-816; GLN-1069 AND MET-1220</scope>
</reference>
<reference key="36">
    <citation type="journal article" date="2012" name="J. Neurol. Sci.">
        <title>New novel mutation of the ATP7B gene in a family with Wilson disease.</title>
        <authorList>
            <person name="Lee J.Y."/>
            <person name="Kim Y.H."/>
            <person name="Kim T.W."/>
            <person name="Oh S.Y."/>
            <person name="Kim D.S."/>
            <person name="Shin B.S."/>
        </authorList>
    </citation>
    <scope>VARIANT WD 899-ILE--GLN-907 DEL</scope>
</reference>
<reference key="37">
    <citation type="journal article" date="2012" name="Mol. Cell. Probes">
        <title>Mutation analysis of the ATP7B gene in a new group of Wilson's disease patients: contribution to diagnosis.</title>
        <authorList>
            <person name="Lepori M.B."/>
            <person name="Zappu A."/>
            <person name="Incollu S."/>
            <person name="Dessi V."/>
            <person name="Mameli E."/>
            <person name="Demelia L."/>
            <person name="Nurchi A.M."/>
            <person name="Gheorghe L."/>
            <person name="Maggiore G."/>
            <person name="Sciveres M."/>
            <person name="Leuzzi V."/>
            <person name="Indolfi G."/>
            <person name="Bonafe L."/>
            <person name="Casali C."/>
            <person name="Angeli P."/>
            <person name="Barone P."/>
            <person name="Cao A."/>
            <person name="Loudianos G."/>
        </authorList>
    </citation>
    <scope>VARIANTS WD VAL-170; HIS-765; GLU-836; CYS-939; ASP-1281 AND LYS-1293</scope>
</reference>
<reference key="38">
    <citation type="journal article" date="2013" name="Brain">
        <title>A genetic study of Wilson's disease in the United Kingdom.</title>
        <authorList>
            <person name="Coffey A.J."/>
            <person name="Durkie M."/>
            <person name="Hague S."/>
            <person name="McLay K."/>
            <person name="Emmerson J."/>
            <person name="Lo C."/>
            <person name="Klaffke S."/>
            <person name="Joyce C.J."/>
            <person name="Dhawan A."/>
            <person name="Hadzic N."/>
            <person name="Mieli-Vergani G."/>
            <person name="Kirk R."/>
            <person name="Elizabeth Allen K."/>
            <person name="Nicholl D."/>
            <person name="Wong S."/>
            <person name="Griffiths W."/>
            <person name="Smithson S."/>
            <person name="Giffin N."/>
            <person name="Taha A."/>
            <person name="Connolly S."/>
            <person name="Gillett G.T."/>
            <person name="Tanner S."/>
            <person name="Bonham J."/>
            <person name="Sharrack B."/>
            <person name="Palotie A."/>
            <person name="Rattray M."/>
            <person name="Dalton A."/>
            <person name="Bandmann O."/>
        </authorList>
    </citation>
    <scope>VARIANTS WD TRP-136; TRP-148; CYS-382; ALA-536; LYS-541; ILE-597; CYS-614; SER-641; ARG-645; ILE-665; ALA-731; PRO-745; VAL-769; TRP-778; ARG-869; TRP-919; VAL-936; MET-977; MET-991; ALA-995; ILE-1017; VAL-1021; TRP-1041; VAL-1058; GLN-1069; SER-1070; VAL-1074; GLY-1250; ARG-1266; SER-1270; ILE-1298; LEU-1298; TYR-1431 AND PHE-1432</scope>
</reference>
<reference key="39">
    <citation type="journal article" date="2013" name="Gene">
        <title>A new ATP7B gene mutation with severe condition in two unrelated Iranian families with Wilson disease.</title>
        <authorList>
            <person name="Dastsooz H."/>
            <person name="Dehghani S.M."/>
            <person name="Imanieh M.H."/>
            <person name="Haghighat M."/>
            <person name="Moini M."/>
            <person name="Fardaei M."/>
        </authorList>
    </citation>
    <scope>VARIANT WD GLY-779</scope>
</reference>
<reference key="40">
    <citation type="journal article" date="2013" name="J. Hum. Genet.">
        <title>Mutational analysis of ATP7B in north Chinese patients with Wilson disease.</title>
        <authorList>
            <person name="Li K."/>
            <person name="Zhang W.M."/>
            <person name="Lin S."/>
            <person name="Wen L."/>
            <person name="Wang Z.F."/>
            <person name="Xie D."/>
            <person name="Wei M."/>
            <person name="Qiu Z.Q."/>
            <person name="Dai Y."/>
            <person name="Lin M.C."/>
            <person name="Kung H.F."/>
            <person name="Yao F.X."/>
        </authorList>
    </citation>
    <scope>VARIANTS WD ASN-44; PHE-157; GLY-606; HIS-732; PRO-732; GLY-756; GLN-778; LEU-778; PHE-795; PRO-874; VAL-874; MET-890; GLY-919; ARG-921; ASP-943; TYR-975; TYR-980; PRO-987; LEU-992; CYS-1151; ALA-1178; GLU-1266; SER-1270 AND LEU-1273</scope>
    <scope>VARIANT VAL-929</scope>
</reference>
<reference key="41">
    <citation type="journal article" date="2013" name="World J. Pediatr.">
        <title>Identification of one novel and nine recurrent mutations of the ATP7B gene in 11 children with Wilson disease.</title>
        <authorList>
            <person name="Geng J."/>
            <person name="Wang J."/>
            <person name="Yao R.E."/>
            <person name="Liu X.Q."/>
            <person name="Fu Q.H."/>
        </authorList>
    </citation>
    <scope>VARIANT WD GLY-1202</scope>
</reference>
<reference key="42">
    <citation type="journal article" date="2014" name="BMC Med. Genet.">
        <title>Evidence for synergistic effects of PRNP and ATP7B mutations in severe neuropsychiatric deterioration.</title>
        <authorList>
            <person name="Forbes N."/>
            <person name="Goodwin S."/>
            <person name="Woodward K."/>
            <person name="Morgan D.G."/>
            <person name="Brady L."/>
            <person name="Coulthart M.B."/>
            <person name="Tarnopolsky M.A."/>
        </authorList>
    </citation>
    <scope>VARIANT WD SER-1347</scope>
</reference>
<reference key="43">
    <citation type="journal article" date="2014" name="Proc. Natl. Acad. Sci. U.S.A.">
        <title>Distinct phenotype of a Wilson disease mutation reveals a novel trafficking determinant in the copper transporter ATP7B.</title>
        <authorList>
            <person name="Braiterman L.T."/>
            <person name="Murthy A."/>
            <person name="Jayakanthan S."/>
            <person name="Nyasae L."/>
            <person name="Tzeng E."/>
            <person name="Gromadzka G."/>
            <person name="Woolf T.B."/>
            <person name="Lutsenko S."/>
            <person name="Hubbard A.L."/>
        </authorList>
    </citation>
    <scope>CHARACTERIZATION OF VARIANTS WD ALA-626; TYR-639; SER-641; HIS-642; ARG-645 AND TYR-653</scope>
    <scope>MUTAGENESIS OF SER-653</scope>
    <scope>FUNCTION</scope>
    <scope>SUBCELLULAR LOCATION</scope>
</reference>
<reference key="44">
    <citation type="journal article" date="2008" name="Biochemistry">
        <title>Metal binding domains 3 and 4 of the Wilson disease protein: solution structure and interaction with the copper(I) chaperone HAH1.</title>
        <authorList>
            <person name="Banci L."/>
            <person name="Bertini I."/>
            <person name="Cantini F."/>
            <person name="Rosenzweig A.C."/>
            <person name="Yatsunyk L.A."/>
        </authorList>
    </citation>
    <scope>STRUCTURE BY NMR OF 238-439</scope>
    <scope>COPPER-BINDING SITES</scope>
    <scope>INTERACTION WITH ATOX1</scope>
</reference>
<reference key="45">
    <citation type="journal article" date="1995" name="Am. J. Hum. Genet.">
        <title>Molecular pathology and haplotype analysis of Wilson disease in Mediterranean populations.</title>
        <authorList>
            <person name="Figus A."/>
            <person name="Angius A."/>
            <person name="Loudianos G."/>
            <person name="Bertini C."/>
            <person name="Dessi V."/>
            <person name="Loi A."/>
            <person name="Deiana M."/>
            <person name="Lovicu M."/>
            <person name="Olla N."/>
            <person name="Sole G."/>
            <person name="de Virgiliis S."/>
            <person name="Lilliu F."/>
            <person name="Farci A.M.G."/>
            <person name="Nurchi A."/>
            <person name="Giacchino R."/>
            <person name="Barabino A."/>
            <person name="Marazzi M."/>
            <person name="Zancan L."/>
            <person name="Greggio N.A."/>
            <person name="Macellini M."/>
            <person name="Solinas A."/>
            <person name="Deplano A."/>
            <person name="Barbera C."/>
            <person name="Devoto M."/>
            <person name="Ozsoylu S."/>
            <person name="Kocak N."/>
            <person name="Akar N."/>
            <person name="Karayalcin S."/>
            <person name="Mokini V."/>
            <person name="Cullufi P."/>
            <person name="Balestrieri A."/>
            <person name="Cao A."/>
            <person name="Pirastu M."/>
        </authorList>
    </citation>
    <scope>VARIANTS WD ALA-626; ASN-765; GLY-778; THR-857; GLN-969; LYS-1064 AND SER-1270</scope>
</reference>
<reference key="46">
    <citation type="journal article" date="1996" name="Genomics">
        <title>Efficient detection of mutations in Wilson disease by manifold sequencing.</title>
        <authorList>
            <person name="Waldenstroem E."/>
            <person name="Lagerkvist A."/>
            <person name="Dahlman T."/>
            <person name="Westermark K."/>
            <person name="Landegren U."/>
        </authorList>
    </citation>
    <scope>VARIANTS WD PHE-967; MET-977; ASP-1106; ARG-1153 AND SER-1355</scope>
</reference>
<reference key="47">
    <citation type="journal article" date="1996" name="Hum. Genet.">
        <title>Wilson disease mutations associated with uncommon haplotypes in Mediterranean patients.</title>
        <authorList>
            <person name="Loudianos G."/>
            <person name="Dessi V."/>
            <person name="Angius A."/>
            <person name="Lovicu M."/>
            <person name="Loi A."/>
            <person name="Deiana M."/>
            <person name="Akar N."/>
            <person name="Vajro P."/>
            <person name="Figus A."/>
            <person name="Cao A."/>
            <person name="Pirastu M."/>
        </authorList>
    </citation>
    <scope>VARIANTS WD ARG-711; GLU-711; CYS-713; VAL-891; PRO-1043; GLU-1089; MET-1220; LEU-1273 AND ARG-1310</scope>
</reference>
<reference key="48">
    <citation type="journal article" date="1996" name="J. Med. Genet.">
        <title>High frequency of two mutations in codon 778 in exon 8 of the ATP7B gene in Taiwanese families with Wilson disease.</title>
        <authorList>
            <person name="Chuang L.-M."/>
            <person name="Wu H.-P."/>
            <person name="Jang M.-H."/>
            <person name="Wang T.-R."/>
            <person name="Sue W.-C."/>
            <person name="Lin B.J."/>
            <person name="Cox D.W."/>
            <person name="Tai T.-Y."/>
        </authorList>
    </citation>
    <scope>VARIANTS WD GLN-778 AND LEU-778</scope>
</reference>
<reference key="49">
    <citation type="journal article" date="1997" name="Am. J. Hum. Genet.">
        <title>Identification and analysis of mutations in the Wilson disease gene (ATP7B): population frequencies, genotype-phenotype correlation, and functional analyses.</title>
        <authorList>
            <person name="Shah A.B."/>
            <person name="Chernov I."/>
            <person name="Zhang H.T."/>
            <person name="Ross B.M."/>
            <person name="Das K."/>
            <person name="Lutsenko S."/>
            <person name="Parano E."/>
            <person name="Pavone L."/>
            <person name="Evgrafov O."/>
            <person name="Ivanova-Smolenskaya I.A."/>
            <person name="Anneren G."/>
            <person name="Westermark K."/>
            <person name="Urrutia F.H."/>
            <person name="Penchaszadeh G.K."/>
            <person name="Sternlieb I."/>
            <person name="Scheinberg I.H."/>
            <person name="Gilliam T.C."/>
            <person name="Petrukhin K."/>
        </authorList>
    </citation>
    <scope>VARIANTS WD ALA-626; ARG-645; PRO-708; SER-710; TRP-778; PHE-795; ARG-869; VAL-1035; ALA-1064; GLN-1069; CYS-1186; TYR-1222; VAL-1266; SER-1270; PRO-1322 AND ARG-1353</scope>
</reference>
<reference key="50">
    <citation type="journal article" date="1997" name="Chin. Med. J.">
        <title>Identification of a novel missense mutation in Wilson's disease gene.</title>
        <authorList>
            <person name="Fan Y."/>
            <person name="Yang R."/>
            <person name="Yu L."/>
            <person name="Wu M."/>
            <person name="Shi S."/>
            <person name="Ren M."/>
            <person name="Han Y."/>
            <person name="Hu J."/>
            <person name="Zhao S."/>
        </authorList>
    </citation>
    <scope>VARIANT WD CYS-693</scope>
</reference>
<reference key="51">
    <citation type="journal article" date="1997" name="Hum. Mutat.">
        <title>24 bp deletion and Ala1278 to Val mutation of the ATP7B gene in a Sardinian family with Wilson disease.</title>
        <authorList>
            <person name="Orru S."/>
            <person name="Thomas G."/>
            <person name="Loizedda A."/>
            <person name="Cox D.W."/>
            <person name="Contu L."/>
        </authorList>
    </citation>
    <scope>VARIANTS WD VAL-1278 AND 1285-GLY--ILE-1292 DEL</scope>
</reference>
<reference key="52">
    <citation type="journal article" date="1997" name="J. Invest. Dermatol.">
        <title>A homozygous nonsense mutation and a combination of two mutations of the Wilson disease gene in patients with different lysyl oxidase activities in cultured fibroblasts.</title>
        <authorList>
            <person name="Kemppainen R."/>
            <person name="Palatsi R."/>
            <person name="Kallioinen M."/>
            <person name="Oikarinen A."/>
        </authorList>
    </citation>
    <scope>VARIANT WD LYS-1038</scope>
</reference>
<reference key="53">
    <citation type="journal article" date="1998" name="Eur. J. Hum. Genet.">
        <title>His1069Gln and six novel Wilson disease mutations: analysis of relevance for early diagnosis and phenotype.</title>
        <authorList>
            <person name="Ha-Hao D."/>
            <person name="Hefter H."/>
            <person name="Stremmel W."/>
            <person name="Castaneda-Guillot C."/>
            <person name="Hernandez Hernandez A."/>
            <person name="Cox D.W."/>
            <person name="Auburger G."/>
        </authorList>
    </citation>
    <scope>VARIANTS WD ALA-710; CYS-741; ILE-1031; GLN-1069 AND ARG-1176</scope>
    <scope>VARIANTS LEU-456; GLY-949 AND ALA-1140</scope>
</reference>
<reference key="54">
    <citation type="journal article" date="1998" name="Hum. Mutat.">
        <title>Novel ATP7B mutations causing Wilson disease in several Israeli ethnic groups.</title>
        <authorList>
            <person name="Kalinsky H."/>
            <person name="Funes A."/>
            <person name="Zeldin A."/>
            <person name="Pel-Or Y."/>
            <person name="Korostishevsky M."/>
            <person name="Gershoni-Baruch R."/>
            <person name="Farrer L.A."/>
            <person name="Bonne-Tamir B."/>
        </authorList>
    </citation>
    <scope>VARIANTS WD ARG-645; ASN-765; GLN-969; ALA-1064; GLN-1069; VAL-1213 AND 1216-VAL-VAL-1217 DEL</scope>
    <scope>VARIANTS SER-565; GLY-723; ARG-832 AND ALA-1140</scope>
</reference>
<reference key="55">
    <citation type="journal article" date="1998" name="Hum. Mutat.">
        <title>Identification of three novel mutations and a high frequency of the Arg778Leu mutation in Korean patients with Wilson disease.</title>
        <authorList>
            <person name="Kim E.K."/>
            <person name="Yoo O.J."/>
            <person name="Song K.Y."/>
            <person name="Yoo H.W."/>
            <person name="Choi S.Y."/>
            <person name="Cho S.W."/>
            <person name="Hahn S.H."/>
        </authorList>
    </citation>
    <scope>VARIANTS WD LEU-778; VAL-874 AND PHE-1083</scope>
    <scope>VARIANTS ARG-832; ILE-864; MET-1109 AND ALA-1140</scope>
</reference>
<reference key="56">
    <citation type="journal article" date="1998" name="Hum. Mutat. Suppl.">
        <title>Mutations of ATP7B gene in Wilson disease in Japan: identification of nine mutations and lack of clear founder effect in a Japanese population.</title>
        <authorList>
            <person name="Yamaguchi A."/>
            <person name="Matsuura A."/>
            <person name="Arashima S."/>
            <person name="Kikuchi Y."/>
            <person name="Kikuchi K."/>
        </authorList>
    </citation>
    <scope>VARIANTS WD LEU-778; VAL-874; GLY-919; SER-1186; ALA-1267 AND SER-1270</scope>
</reference>
<reference key="57">
    <citation type="journal article" date="1998" name="Hum. Mutat.">
        <title>Further delineation of the molecular pathology of Wilson disease in the Mediterranean population.</title>
        <authorList>
            <person name="Loudianos G."/>
            <person name="Dessi V."/>
            <person name="Lovicu M."/>
            <person name="Angius A."/>
            <person name="Nurchi A."/>
            <person name="Sturniolo G.C."/>
            <person name="Marcellini M."/>
            <person name="Zancan L."/>
            <person name="Bragetti P."/>
            <person name="Akar N."/>
            <person name="Yagci R."/>
            <person name="Vegnente A."/>
            <person name="Cao A."/>
            <person name="Pirastu M."/>
        </authorList>
    </citation>
    <scope>VARIANTS WD VAL-85; SER-492; 608-PHE-ASP-609 DELINS TYR; HIS-642; ARG-645; ILE-665; ARG-691; PHE-747; TRP-778; LEU-840; ASN-918; TRP-919; ASN-921; PRO-933; LEU-992; THR-1003; VAL-1018; TRP-1041; VAL-1089; MET-1146; GLY-1183; THR-1183; MET-1216; ASP-1341 AND SER-1358</scope>
</reference>
<reference key="58">
    <citation type="journal article" date="1998" name="Hum. Mutat.">
        <title>Mutation analysis of Wilson disease in Taiwan and description of six new mutations.</title>
        <authorList>
            <person name="Tsai C.-H."/>
            <person name="Tsai F.-J."/>
            <person name="Wu J.-Y."/>
            <person name="Chang J.-G."/>
            <person name="Lee C.-C."/>
            <person name="Lin S.-P."/>
            <person name="Yang C.-F."/>
            <person name="Jong Y.-J."/>
            <person name="Lo M.-C."/>
        </authorList>
    </citation>
    <scope>VARIANTS VAL-390; ALA-406; LEU-456; MET-935 AND ALA-1140</scope>
    <scope>VARIANTS WD GLN-778; LEU-778; ASP-943; LEU-992; HIS-1142; CYS-1153 AND SER-1270</scope>
</reference>
<reference key="59">
    <citation type="journal article" date="1999" name="Zhonghua Yi Xue Yi Chuan Xue Za Zhi">
        <title>Missense mutations of exons 14 and 18 of Wilson's disease gene in Chinese patients.</title>
        <authorList>
            <person name="Wu Z."/>
            <person name="Wang N."/>
            <person name="Murong S."/>
            <person name="Lin M."/>
        </authorList>
    </citation>
    <scope>VARIANT WD PRO-1041</scope>
</reference>
<reference key="60">
    <citation type="journal article" date="1999" name="Hum. Mutat.">
        <title>Mutation analysis in patients with Wilson disease: identification of 4 novel mutations.</title>
        <authorList>
            <person name="Haas R."/>
            <person name="Gutierrez-Rivero B."/>
            <person name="Knoche J."/>
            <person name="Boeker K."/>
            <person name="Manns M.P."/>
            <person name="Schmidt H.H.-J."/>
        </authorList>
    </citation>
    <scope>VARIANTS WD 670-TYR-MET-671 DEL; TYR-985 AND THR-1148</scope>
</reference>
<reference key="61">
    <citation type="journal article" date="1999" name="Hum. Mutat.">
        <title>Molecular characterization of Wilson disease in the Sardinian population -- evidence of a founder effect.</title>
        <authorList>
            <person name="Loudianos G."/>
            <person name="Dessi V."/>
            <person name="Lovicu M."/>
            <person name="Angius A."/>
            <person name="Figus A."/>
            <person name="Lilliu F."/>
            <person name="De Virgiliis S."/>
            <person name="Nurchi A.M."/>
            <person name="Deplano A."/>
            <person name="Moi P."/>
            <person name="Pirastu M."/>
            <person name="Cao A."/>
        </authorList>
    </citation>
    <scope>VARIANTS WD PHE-747; TRP-778; VAL-869; ASN-921; VAL-1018; PRO-1043; GLN-1069; VAL-1089 AND MET-1146</scope>
</reference>
<reference key="62">
    <citation type="journal article" date="1999" name="Hum. Mutat.">
        <title>A study of Wilson disease mutations in Britain.</title>
        <authorList>
            <person name="Curtis D."/>
            <person name="Durkie M."/>
            <person name="Balac P."/>
            <person name="Sheard D."/>
            <person name="Goodeve A."/>
            <person name="Peake I."/>
            <person name="Quarrell O."/>
            <person name="Tanner S."/>
        </authorList>
    </citation>
    <scope>VARIANTS WD TRP-711; PRO-744; ARG-769; ARG-795; ALA-1033; LEU-1052; PRO-1095; GLY-1239 AND ARG-1266</scope>
</reference>
<reference key="63">
    <citation type="journal article" date="1999" name="J. Med. Genet.">
        <title>The His1069Gln mutation in the ATP7B gene in Russian patients with Wilson disease.</title>
        <authorList>
            <person name="Ivanova-Smolenskaya I.A."/>
            <person name="Ovchinnikov I.V."/>
            <person name="Karabanov A.V."/>
            <person name="Deineko N.L."/>
            <person name="Poleshchuk V.V."/>
            <person name="Markova E.D."/>
            <person name="Illarioshkin S.N."/>
        </authorList>
    </citation>
    <scope>VARIANT WD GLN-1069</scope>
</reference>
<reference key="64">
    <citation type="journal article" date="1999" name="J. Med. Genet.">
        <title>Mutation analysis in patients of Mediterranean descent with Wilson disease: identification of 19 novel mutations.</title>
        <authorList>
            <person name="Loudianos G."/>
            <person name="Dessi V."/>
            <person name="Lovicu M."/>
            <person name="Angius A."/>
            <person name="Altuntas B."/>
            <person name="Giacchino R."/>
            <person name="Marazzi M."/>
            <person name="Marcellini M."/>
            <person name="Sartorelli M.R."/>
            <person name="Sturniolo G.C."/>
            <person name="Kocak N."/>
            <person name="Yuce A."/>
            <person name="Akar N."/>
            <person name="Pirastu M."/>
            <person name="Cao A."/>
        </authorList>
    </citation>
    <scope>VARIANTS WD SER-710; ARG-711; LEU-840; VAL-874; GLN-969; VAL-1003; TRP-1041; PRO-1041; GLU-1061; VAL-1063; GLY-1068; GLN-1069; GLU-1089; PHE-1104; HIS-1151; THR-1169; LYS-1173; VAL-1222; PHE-1262; VAL-1327; PHE-1363 AND MET-1434</scope>
    <scope>VARIANTS ARG-1207 AND ILE-1297</scope>
</reference>
<reference key="65">
    <citation type="journal article" date="1999" name="Pediatr. Int.">
        <title>Molecular analysis and diagnosis in Japanese patients with Wilson's disease.</title>
        <authorList>
            <person name="Shimizu N."/>
            <person name="Nakazono H."/>
            <person name="Takeshita Y."/>
            <person name="Ikeda C."/>
            <person name="Fujii H."/>
            <person name="Watanabe A."/>
            <person name="Yamaguchi Y."/>
            <person name="Hemmi H."/>
            <person name="Shimatake H."/>
            <person name="Aoki T."/>
        </authorList>
    </citation>
    <scope>VARIANTS WD LEU-778; VAL-874; GLY-919; ILE-1029; VAL-1035; SER-1186 AND ASN-1222</scope>
</reference>
<reference key="66">
    <citation type="journal article" date="2000" name="Genet. Test.">
        <title>Delineation of the spectrum of Wilson disease mutations in the Greek population and the identification of six novel mutations.</title>
        <authorList>
            <person name="Loudianos G."/>
            <person name="Lovicu M."/>
            <person name="Solinas P."/>
            <person name="Kanavakis E."/>
            <person name="Tzetis M."/>
            <person name="Manolaki N."/>
            <person name="Panagiotakaki E."/>
            <person name="Karpathios T."/>
            <person name="Cao A."/>
        </authorList>
    </citation>
    <scope>VARIANTS WD SER-486; GLY-778; MET-890; GLN-969; GLU-1061; GLN-1069; SER-1099 AND THR-1148</scope>
</reference>
<reference key="67">
    <citation type="journal article" date="2000" name="Hepatology">
        <title>High prevalence of the very rare Wilson disease gene mutation Leu708Pro in the Island of Gran Canaria (Canary Islands, Spain): a genetic and clinical study.</title>
        <authorList>
            <person name="Garcia-Villarreal L."/>
            <person name="Daniels S."/>
            <person name="Shaw S.H."/>
            <person name="Cotton D."/>
            <person name="Galvin M."/>
            <person name="Geskes J."/>
            <person name="Bauer P."/>
            <person name="Sierra-Hernandez A."/>
            <person name="Buckler A."/>
            <person name="Tugores A."/>
        </authorList>
    </citation>
    <scope>VARIANT WD PRO-708</scope>
</reference>
<reference key="68">
    <citation type="journal article" date="2000" name="Hum. Mutat.">
        <title>Mutational analysis of ATP7B and genotype-phenotype correlation in Japanese with Wilson's disease.</title>
        <authorList>
            <person name="Okada T."/>
            <person name="Shiono Y."/>
            <person name="Hayashi H."/>
            <person name="Satoh H."/>
            <person name="Sawada T."/>
            <person name="Suzuki A."/>
            <person name="Takeda Y."/>
            <person name="Yano M."/>
            <person name="Michitaka K."/>
            <person name="Onji M."/>
            <person name="Mabuchi H."/>
        </authorList>
    </citation>
    <scope>VARIANTS WD ILE-769; LEU-778; TRP-778; VAL-874; GLY-919; THR-1003; PHE-1083; SER-1186; ALA-1267; SER-1270; THR-1336 AND PRO-1373</scope>
    <scope>VARIANTS ALA-406; LEU-456 AND ALA-1140</scope>
</reference>
<reference key="69">
    <citation type="journal article" date="2000" name="J. Hum. Genet.">
        <title>Novel mutations of the ATP7B gene in Japanese patients with Wilson disease.</title>
        <authorList>
            <person name="Kusuda Y."/>
            <person name="Hamaguchi K."/>
            <person name="Mori T."/>
            <person name="Shin R."/>
            <person name="Seike M."/>
            <person name="Sakata T."/>
        </authorList>
    </citation>
    <scope>VARIANTS WD LEU-778; VAL-874 AND VAL-1297 DEL</scope>
    <scope>VARIANTS LEU-290; ALA-406; LEU-456; ARG-832; ALA-1140 AND GLU-1407</scope>
</reference>
<reference key="70">
    <citation type="journal article" date="2000" name="J. Hum. Genet.">
        <title>Molecular analysis of Wilson disease in Taiwan: identification of one novel mutation and evidence of haplotype-mutation association.</title>
        <authorList>
            <person name="Lee C.C."/>
            <person name="Wu J.Y."/>
            <person name="Tsai F.J."/>
            <person name="Kodama H."/>
            <person name="Abe T."/>
            <person name="Yang C.F."/>
            <person name="Tsai C.H."/>
        </authorList>
    </citation>
    <scope>VARIANT WD GLY-1279</scope>
</reference>
<reference key="71">
    <citation type="journal article" date="2001" name="Hum. Mutat.">
        <title>Three novel mutations (P760L, L1305P, Q1351Stop) causing Wilson disease.</title>
        <authorList>
            <person name="Genschel J."/>
            <person name="Czlonkowska A."/>
            <person name="Sommer G."/>
            <person name="Buettner C."/>
            <person name="Bochow B."/>
            <person name="Lochs H."/>
            <person name="Schmidt H."/>
        </authorList>
    </citation>
    <scope>VARIANTS WD LEU-760 AND PRO-1305</scope>
</reference>
<reference key="72">
    <citation type="journal article" date="2001" name="J. Hepatol.">
        <title>High prevalence of the H1069Q mutation in East German patients with Wilson disease: rapid detection of mutations by limited sequencing and phenotype-genotype analysis.</title>
        <authorList>
            <person name="Caca K."/>
            <person name="Ferenci P."/>
            <person name="Kuehn H.-J."/>
            <person name="Polli C."/>
            <person name="Willgerodt H."/>
            <person name="Kunath B."/>
            <person name="Hermann W."/>
            <person name="Moessner J."/>
            <person name="Berr F."/>
        </authorList>
    </citation>
    <scope>VARIANTS WD TRP-616; ALA-710; SER-710; LEU-760; ASN-765; VAL-769; GLN-969; LEU-992; GLN-1069 AND SER-1270</scope>
    <scope>VARIANTS ALA-406; LEU-456 AND ARG-832</scope>
</reference>
<reference key="73">
    <citation type="journal article" date="2001" name="Mol. Genet. Metab.">
        <title>Molecular diagnosis of Wilson disease.</title>
        <authorList>
            <person name="Butler P."/>
            <person name="McIntyre N."/>
            <person name="Mistry P.K."/>
        </authorList>
    </citation>
    <scope>VARIANTS WD TRP-778; ARG-898; GLN-1069; THR-1102 AND ARG-1266</scope>
</reference>
<reference key="74">
    <citation type="journal article" date="2002" name="Eur. J. Pediatr.">
        <title>Presymptomatic diagnosis of Wilson disease associated with a novel mutation of the ATP7B gene.</title>
        <authorList>
            <person name="Ohya K."/>
            <person name="Abo W."/>
            <person name="Tamaki H."/>
            <person name="Sugawara C."/>
            <person name="Endo T."/>
            <person name="Nomachi S."/>
            <person name="Fukushi M."/>
            <person name="Kinebuchi M."/>
            <person name="Matsuura A."/>
        </authorList>
    </citation>
    <scope>VARIANTS WD PHE-1083 AND ASN-1296</scope>
</reference>
<reference key="75">
    <citation type="journal article" date="2002" name="Genet. Med.">
        <title>Identification of novel mutations and the three most common mutations in the human ATP7B gene of Korean patients with Wilson disease.</title>
        <authorList>
            <person name="Yoo H.-W."/>
        </authorList>
    </citation>
    <scope>VARIANTS WD HIS-768; LEU-778; VAL-874; PHE-1083; SER-1168; ILE-1255; ALA-1267 AND SER-1270</scope>
</reference>
<reference key="76">
    <citation type="journal article" date="2002" name="Hum. Mutat.">
        <title>Abnormal mRNA splicing resulting from consensus sequence splicing mutations of ATP7B.</title>
        <authorList>
            <person name="Loudianos G."/>
            <person name="Lovicu M."/>
            <person name="Dessi V."/>
            <person name="Tzetis M."/>
            <person name="Kanavakis E."/>
            <person name="Zancan L."/>
            <person name="Zelante L."/>
            <person name="Galvez-Galvez C."/>
            <person name="Cao A."/>
        </authorList>
    </citation>
    <scope>VARIANTS WD PRO-721 AND GLY-1183</scope>
</reference>
<reference key="77">
    <citation type="journal article" date="2002" name="J. Hum. Genet.">
        <title>Two families with Wilson disease in which siblings showed different phenotypes.</title>
        <authorList>
            <person name="Takeshita Y."/>
            <person name="Shimizu N."/>
            <person name="Yamaguchi Y."/>
            <person name="Nakazono H."/>
            <person name="Saitou M."/>
            <person name="Fujikawa Y."/>
            <person name="Aoki T."/>
        </authorList>
    </citation>
    <scope>VARIANTS WD LEU-778; VAL-874 AND GLY-919</scope>
</reference>
<reference key="78">
    <citation type="journal article" date="2003" name="Clin. Genet.">
        <title>Mutation spectrum and polymorphisms in ATP7B identified on direct sequencing of all exons in Chinese Han and Hui ethnic patients with Wilson's disease.</title>
        <authorList>
            <person name="Gu Y.-H."/>
            <person name="Kodama H."/>
            <person name="Du S.-L."/>
            <person name="Gu Q.-J."/>
            <person name="Sun H.-J."/>
            <person name="Ushijima H."/>
        </authorList>
    </citation>
    <scope>VARIANTS WD VAL-85; GLY-765; LEU-778; MET-890; GLY-919; MET-935; TYR-975; LEU-992; ARG-1098; THR-1148; LYS-1173 AND ASN-1248</scope>
    <scope>VARIANTS ASP-14; ALA-406; LEU-456; ARG-832; ALA-1140; ASN-1143 AND SER-1245</scope>
</reference>
<reference key="79">
    <citation type="journal article" date="2004" name="Eur. Neurol.">
        <title>A rare homozygous missense mutation in ATP7B exon 19 in a case of Wilson disease.</title>
        <authorList>
            <person name="Majumdar R."/>
            <person name="Al Jumah M."/>
            <person name="Zaidan R."/>
        </authorList>
    </citation>
    <scope>VARIANT WD SER-1341</scope>
</reference>
<reference key="80">
    <citation type="journal article" date="2004" name="Hum. Mutat.">
        <title>Wilson disease: novel mutations in the ATP7B gene and clinical correlation in Brazilian patients.</title>
        <authorList>
            <person name="Deguti M.M."/>
            <person name="Genschel J."/>
            <person name="Cancado E.L.R."/>
            <person name="Barbosa E.R."/>
            <person name="Bochow B."/>
            <person name="Mucenic M."/>
            <person name="Porta G."/>
            <person name="Lochs H."/>
            <person name="Carrilho F.J."/>
            <person name="Schmidt H.H.-J."/>
        </authorList>
    </citation>
    <scope>VARIANTS WD SER-41; GLY-949; LEU-1094; PRO-1232 AND ARG-1373</scope>
</reference>
<reference key="81">
    <citation type="journal article" date="2004" name="Neurology">
        <title>Strokelike presentation of Wilson disease with homozygosity for a novel T766R mutation.</title>
        <authorList>
            <person name="Pendlebury S.T."/>
            <person name="Rothwell P.M."/>
            <person name="Dalton A."/>
            <person name="Burton E.A."/>
        </authorList>
    </citation>
    <scope>VARIANT WD ARG-766</scope>
</reference>
<reference key="82">
    <citation type="journal article" date="2004" name="World J. Gastroenterol.">
        <title>Correlation of ATP7B genotype with phenotype in Chinese patients with Wilson disease.</title>
        <authorList>
            <person name="Liu X.-Q."/>
            <person name="Zhang Y.-F."/>
            <person name="Liu T.-T."/>
            <person name="Hsiao K.-J."/>
            <person name="Zhang J.-M."/>
            <person name="Gu X.-F."/>
            <person name="Bao K.-R."/>
            <person name="Yu L.-H."/>
            <person name="Wang M.-X."/>
        </authorList>
    </citation>
    <scope>VARIANTS WD LEU-778; ASP-943; ILE-1106 AND MET-1216</scope>
    <scope>VARIANT ALA-1140</scope>
</reference>
<reference key="83">
    <citation type="journal article" date="2005" name="Ann. Hum. Genet.">
        <title>Wilson disease: high prevalence in a mountainous area of Crete.</title>
        <authorList>
            <person name="Dedoussis G.V.Z."/>
            <person name="Genschel J."/>
            <person name="Sialvera T.-E."/>
            <person name="Bochow B."/>
            <person name="Manolaki N."/>
            <person name="Manios Y."/>
            <person name="Tsafantakis E."/>
            <person name="Schmidt H."/>
        </authorList>
    </citation>
    <scope>VARIANTS WD THR-1148 AND ARG-1176</scope>
</reference>
<reference key="84">
    <citation type="journal article" date="2005" name="Clin. Genet.">
        <title>Identification and molecular characterization of 18 novel mutations in the ATP7B gene from Indian Wilson disease patients: genotype.</title>
        <authorList>
            <person name="Kumar S."/>
            <person name="Thapa B.R."/>
            <person name="Kaur G."/>
            <person name="Prasad R."/>
        </authorList>
    </citation>
    <scope>VARIANTS WD HIS-992; THR-1003; THR-1102; TYR-1104 AND ARG-1256</scope>
</reference>
<reference key="85">
    <citation type="journal article" date="2005" name="Clin. Genet.">
        <title>Mutation analysis of Wilson disease in the Spanish population -identification of a prevalent substitution and eight novel mutations in the ATP7B gene.</title>
        <authorList>
            <person name="Margarit E."/>
            <person name="Bach V."/>
            <person name="Gomez D."/>
            <person name="Bruguera M."/>
            <person name="Jara P."/>
            <person name="Queralt R."/>
            <person name="Ballesta F."/>
        </authorList>
    </citation>
    <scope>VARIANTS WD ARG-645; LEU-690; ARG-869; SER-943; MET-977; GLU-1061; GLN-1069; SER-1099; MET-1216 AND PRO-1232</scope>
    <scope>VARIANTS ALA-406; LEU-456; ARG-832 AND ALA-1140</scope>
</reference>
<reference key="86">
    <citation type="journal article" date="2005" name="Clin. Genet.">
        <title>Spectrum of mutations in the Wilson disease gene (ATP7B) in the Bulgarian population.</title>
        <authorList>
            <person name="Todorov T."/>
            <person name="Savov A."/>
            <person name="Jelev H."/>
            <person name="Panteleeva E."/>
            <person name="Konstantinova D."/>
            <person name="Krustev Z."/>
            <person name="Mihaylova V."/>
            <person name="Tournev I."/>
            <person name="Tankova L."/>
            <person name="Tzolova N."/>
            <person name="Kremensky I."/>
        </authorList>
    </citation>
    <scope>VARIANTS WD GLN-616; ALA-626; TRP-778; GLY-778; VAL-874; GLN-969; THR-1003; GLN-1069; 1217-VAL-LEU-1218 DEL; SER-1270; TYR-1279; ASP-1341; SER-1352 AND PRO-1368</scope>
</reference>
<reference key="87">
    <citation type="journal article" date="2005" name="Clin. Genet.">
        <title>Frameshift and nonsense mutations in the gene for ATPase7B are associated with severe impairment of copper metabolism and with an early clinical manifestation of Wilson's disease.</title>
        <authorList>
            <person name="Gromadzka G."/>
            <person name="Schmidt H.H.-J."/>
            <person name="Genschel J."/>
            <person name="Bochow B."/>
            <person name="Rodo M."/>
            <person name="Tarnacka B."/>
            <person name="Litwin T."/>
            <person name="Chabik G."/>
            <person name="Czlonkowska A."/>
        </authorList>
    </citation>
    <scope>VARIANTS WD GLN-616; TYR-639; TYR-653; PRO-776; GLY-778; MET-977; ARG-988; LEU-992; GLN-1069; PRO-1095; MET-1220; LEU-1273 AND ASP-1341</scope>
</reference>
<reference key="88">
    <citation type="journal article" date="2005" name="Hum. Mutat.">
        <title>Twenty-four novel mutations in Wilson disease patients of predominantly European ancestry.</title>
        <authorList>
            <person name="Cox D.W."/>
            <person name="Prat L."/>
            <person name="Walshe J.M."/>
            <person name="Heathcote J."/>
            <person name="Gaffney D."/>
        </authorList>
    </citation>
    <scope>VARIANTS WD HIS-532; ASP-591; PRO-604; SER-641; TYR-703; VAL-710; GLY-756; MET-766; THR-861; CYS-943; MET-991; THR-996; ARG-1000; GLU-1176; GLU-1221; SER-1287; SER-1331; VAL-1341; SER-1375 AND SER-1379</scope>
</reference>
<reference key="89">
    <citation type="journal article" date="2005" name="Mol. Genet. Metab.">
        <title>Mutation analysis of the ATP7B gene and genotype/phenotype correlation in 227 patients with Wilson disease.</title>
        <authorList>
            <person name="Vrabelova S."/>
            <person name="Letocha O."/>
            <person name="Borsky M."/>
            <person name="Kozak L."/>
        </authorList>
    </citation>
    <scope>VARIANTS WD SER-641; SER-710; ARG-737; GLY-778; GLU-918; GLN-969; MET-977; VAL-1018; SER-1033; TRP-1041; VAL-1063; LYS-1064; GLN-1069; THR-1102; ASP-1111; THR-1148; ARG-1176; SER-1186; ASN-1271; LEU-1273; PRO-1305; ASP-1341 AND CYS-1355</scope>
    <scope>VARIANTS LEU-456; ARG-832 AND ALA-1140</scope>
</reference>
<reference key="90">
    <citation type="journal article" date="2007" name="Clin. Genet.">
        <title>Early and severe liver disease associated with homozygosity for an exon 7 mutation, G691R, in Wilson's disease.</title>
        <authorList>
            <person name="Barada K."/>
            <person name="Nemer G."/>
            <person name="ElHajj I.I."/>
            <person name="Touma J."/>
            <person name="Cortas N."/>
            <person name="Boustany R.-M."/>
            <person name="Usta J."/>
        </authorList>
    </citation>
    <scope>VARIANT WD ARG-691</scope>
</reference>
<reference key="91">
    <citation type="journal article" date="2008" name="Genet. Test.">
        <title>New mutations in the Wilson disease gene, ATP7B: implications for molecular testing.</title>
        <authorList>
            <person name="Davies L.P."/>
            <person name="Macintyre G."/>
            <person name="Cox D.W."/>
        </authorList>
    </citation>
    <scope>VARIANTS WD ALA-536; ARG-657; VAL-971; MET-974; PRO-1004; ALA-1149; ASN-1164; GLY-1173; THR-1228; VAL-1230; VAL-1267; THR-1328 AND ILE-1359</scope>
    <scope>VARIANTS ALA-406; LEU-456; ARG-832; LYS-952 AND ALA-1140</scope>
</reference>
<reference key="92">
    <citation type="journal article" date="2008" name="Hum. Mutat.">
        <title>Sequence variation in the ATP-binding domain of the Wilson disease transporter, ATP7B, affects copper transport in a yeast model system.</title>
        <authorList>
            <person name="Hsi G."/>
            <person name="Cullen L.M."/>
            <person name="Macintyre G."/>
            <person name="Chen M.M."/>
            <person name="Glerum D.M."/>
            <person name="Cox D.W."/>
        </authorList>
    </citation>
    <scope>CHARACTERIZATION OF VARIANTS WD HIS-532; ALA-626; HIS-642; TRP-1041; LYS-1064; PHE-1083; ASP-1106; VAL-1169; THR-1183 AND SER-1186</scope>
    <scope>CHARACTERIZATION OF VARIANT ALA-1140</scope>
    <scope>FUNCTION</scope>
</reference>
<reference key="93">
    <citation type="journal article" date="2010" name="Hum. Mutat.">
        <title>Functional analysis of mutations in the ATP loop of the Wilson disease copper transporter, ATP7B.</title>
        <authorList>
            <person name="Luoma L.M."/>
            <person name="Deeb T.M."/>
            <person name="Macintyre G."/>
            <person name="Cox D.W."/>
        </authorList>
    </citation>
    <scope>VARIANTS WD MET-991; ARG-1000; PRO-1043; ARG-1101; THR-1102; THR-1148; GLY-1173; GLU-1176; THR-1228; GLY-1239; VAL-1267 AND SER-1287</scope>
    <scope>CHARACTERIZATION OF VARIANTS WD MET-991; ARG-1000; PRO-1043; ARG-1101; THR-1102; THR-1148; GLY-1173; GLU-1176; THR-1228; GLY-1239; VAL-1267 AND SER-1287</scope>
</reference>
<reference key="94">
    <citation type="journal article" date="2011" name="BMC Pediatr.">
        <title>Phenotypic and genetic characterization of a cohort of pediatric Wilson disease patients.</title>
        <authorList>
            <person name="Abdel Ghaffar T.Y."/>
            <person name="Elsayed S.M."/>
            <person name="Elnaghy S."/>
            <person name="Shadeed A."/>
            <person name="Elsobky E.S."/>
            <person name="Schmidt H."/>
        </authorList>
    </citation>
    <scope>VARIANTS WD PRO-549; HIS-642; TYR-703; PRO-744; ASN-765; GLY-778; MET-977; ASP-998; VAL-1063; GLN-1069; ARG-1207; LEU-1273; ASP-1332; ARG-1341 AND ASP-1341</scope>
</reference>
<reference key="95">
    <citation type="journal article" date="2013" name="Eur. J. Med. Genet.">
        <title>Mutation analysis of ATP7B gene in Turkish Wilson disease patients: identification of five novel mutations.</title>
        <authorList>
            <person name="Simsek Papur O."/>
            <person name="Akman S.A."/>
            <person name="Cakmur R."/>
            <person name="Terzioglu O."/>
        </authorList>
    </citation>
    <scope>VARIANTS WD SER-710; ASN-765; GLY-778; TRP-778; ILE-788; VAL-874; TRP-919; SER-943; GLN-969; THR-1003; VAL-1003; ILE-1036; TRP-1041; GLN-1069; CYS-1151; THR-1245 AND SER-1270</scope>
    <scope>VARIANTS ALA-406; LEU-456; ARG-832; LYS-952; ALA-1140; ARG-1207 AND LEU-1243</scope>
</reference>
<reference key="96">
    <citation type="journal article" date="2013" name="World J. Hepatol.">
        <title>Diagnostic challenges of Wilson's disease presenting as acute pancreatitis, cholangitis, and jaundice.</title>
        <authorList>
            <person name="Nussinson E."/>
            <person name="Shahbari A."/>
            <person name="Shibli F."/>
            <person name="Chervinsky E."/>
            <person name="Trougouboff P."/>
            <person name="Markel A."/>
        </authorList>
    </citation>
    <scope>VARIANT ALA-1140</scope>
</reference>
<reference key="97">
    <citation type="journal article" date="2014" name="Gene">
        <title>A novel ATP7B gene mutation in a liver failure patient with normal ceruloplasmin and low serum alkaline phosphatase.</title>
        <authorList>
            <person name="Chen L."/>
            <person name="Li X."/>
            <person name="Zheng Z."/>
            <person name="Lu X."/>
            <person name="Lin M."/>
            <person name="Pan C."/>
            <person name="Liu J."/>
        </authorList>
    </citation>
    <scope>VARIANTS WD MET-935 AND THR-982</scope>
</reference>
<reference key="98">
    <citation type="journal article" date="2014" name="J. Clin. Neurosci.">
        <title>Pathogenic compound heterozygous ATP7B mutations with hypoceruloplasminaemia without clinical features of Wilson's disease.</title>
        <authorList>
            <person name="Arruda W.O."/>
            <person name="Munhoz R.P."/>
            <person name="de Bem R.S."/>
            <person name="Deguti M.M."/>
            <person name="Barbosa E.R."/>
            <person name="Zavala J.A."/>
            <person name="Teive H.A."/>
        </authorList>
    </citation>
    <scope>VARIANT WD ARG-645</scope>
</reference>
<reference key="99">
    <citation type="journal article" date="2015" name="Arch. Med. Res.">
        <title>Genetic and clinical analysis in a cohort of patients with Wilson's disease in southwestern China.</title>
        <authorList>
            <person name="Liu Y."/>
            <person name="Zhou H."/>
            <person name="Guo H."/>
            <person name="Bai Y."/>
        </authorList>
    </citation>
    <scope>VARIANTS WD LEU-778; GLY-919; LEU-992; LYS-1136 AND GLU-1149</scope>
    <scope>VARIANT LEU-456</scope>
</reference>
<reference key="100">
    <citation type="journal article" date="2015" name="Gene">
        <title>Spectrum of mutations in the ATP binding domain of ATP7B gene of Wilson Disease in a regional Indian cohort.</title>
        <authorList>
            <person name="Guggilla S.R."/>
            <person name="Senagari J.R."/>
            <person name="Rao P.N."/>
            <person name="Madireddi S."/>
        </authorList>
    </citation>
    <scope>VARIANTS WD PRO-990; VAL-1003; ARG-1010; TRP-1041; PRO-1043; GLU-1061; ARG-1101; SER-1104; MET-1113; SER-1270 AND LYS-1293</scope>
</reference>
<reference key="101">
    <citation type="journal article" date="2015" name="J. Trace Elem. Med. Biol.">
        <title>Functional characterization of new mutations in Wilson disease gene (ATP7B) using the yeast model.</title>
        <authorList>
            <person name="Papur O.S."/>
            <person name="Terzioglu O."/>
            <person name="Koc A."/>
        </authorList>
    </citation>
    <scope>VARIANTS WD ILE-788 AND ILE-1036</scope>
    <scope>CHARACTERIZATION OF VARIANTS WD ILE-788 AND ILE-1036</scope>
    <scope>FUNCTION</scope>
</reference>
<reference key="102">
    <citation type="journal article" date="2017" name="Mol. Cell">
        <title>Programmed ribosomal frameshifting generates a copper transporter and a copper chaperone from the same gene.</title>
        <authorList>
            <person name="Meydan S."/>
            <person name="Klepacki D."/>
            <person name="Karthikeyan S."/>
            <person name="Margus T."/>
            <person name="Thomas P."/>
            <person name="Jones J.E."/>
            <person name="Khan Y."/>
            <person name="Briggs J."/>
            <person name="Dinman J.D."/>
            <person name="Vazquez-Laslop N."/>
            <person name="Mankin A.S."/>
        </authorList>
    </citation>
    <scope>POSSIBLE RIBOSOMAL FRAMESHIFT TO TRANSLATE ISOFORM COPZ(A)</scope>
</reference>
<reference key="103">
    <citation type="journal article" date="2017" name="World J. Pediatr.">
        <title>Identification of two novel mutations in the ATP7B gene that cause Wilson's disease.</title>
        <authorList>
            <person name="Zhu H.W."/>
            <person name="Tao Z.B."/>
            <person name="Su G."/>
            <person name="Jin Q.Y."/>
            <person name="Zhao L.T."/>
            <person name="Zhu J.R."/>
            <person name="Yan J."/>
            <person name="Yu T.Y."/>
            <person name="Ding J.X."/>
            <person name="Li Y.M."/>
        </authorList>
    </citation>
    <scope>VARIANTS WD VAL-874; LEU-992; GLU-1010 AND 1331-TYR--ILE-1465 DEL</scope>
</reference>
<reference key="104">
    <citation type="journal article" date="2020" name="NPJ Genom. Med.">
        <title>ATP7B variant c.1934T &gt; G p.Met645Arg causes Wilson disease by promoting exon 6 skipping.</title>
        <authorList>
            <person name="Merico D."/>
            <person name="Spickett C."/>
            <person name="O'Hara M."/>
            <person name="Kakaradov B."/>
            <person name="Deshwar A.G."/>
            <person name="Fradkin P."/>
            <person name="Gandhi S."/>
            <person name="Gao J."/>
            <person name="Grant S."/>
            <person name="Kron K."/>
            <person name="Schmitges F.W."/>
            <person name="Shalev Z."/>
            <person name="Sun M."/>
            <person name="Verby M."/>
            <person name="Cahill M."/>
            <person name="Dowling J.J."/>
            <person name="Fransson J."/>
            <person name="Wienholds E."/>
            <person name="Frey B.J."/>
        </authorList>
    </citation>
    <scope>CHARACTERIZATION OF VARIANT WD ARG-645</scope>
</reference>
<name>ATP7B_HUMAN</name>
<evidence type="ECO:0000250" key="1"/>
<evidence type="ECO:0000250" key="2">
    <source>
        <dbReference type="UniProtKB" id="Q64535"/>
    </source>
</evidence>
<evidence type="ECO:0000255" key="3"/>
<evidence type="ECO:0000255" key="4">
    <source>
        <dbReference type="PROSITE-ProRule" id="PRU00280"/>
    </source>
</evidence>
<evidence type="ECO:0000256" key="5">
    <source>
        <dbReference type="SAM" id="MobiDB-lite"/>
    </source>
</evidence>
<evidence type="ECO:0000269" key="6">
    <source>
    </source>
</evidence>
<evidence type="ECO:0000269" key="7">
    <source>
    </source>
</evidence>
<evidence type="ECO:0000269" key="8">
    <source>
    </source>
</evidence>
<evidence type="ECO:0000269" key="9">
    <source>
    </source>
</evidence>
<evidence type="ECO:0000269" key="10">
    <source>
    </source>
</evidence>
<evidence type="ECO:0000269" key="11">
    <source>
    </source>
</evidence>
<evidence type="ECO:0000269" key="12">
    <source>
    </source>
</evidence>
<evidence type="ECO:0000269" key="13">
    <source>
    </source>
</evidence>
<evidence type="ECO:0000269" key="14">
    <source>
    </source>
</evidence>
<evidence type="ECO:0000269" key="15">
    <source>
    </source>
</evidence>
<evidence type="ECO:0000269" key="16">
    <source>
    </source>
</evidence>
<evidence type="ECO:0000269" key="17">
    <source>
    </source>
</evidence>
<evidence type="ECO:0000269" key="18">
    <source>
    </source>
</evidence>
<evidence type="ECO:0000269" key="19">
    <source>
    </source>
</evidence>
<evidence type="ECO:0000269" key="20">
    <source>
    </source>
</evidence>
<evidence type="ECO:0000269" key="21">
    <source>
    </source>
</evidence>
<evidence type="ECO:0000269" key="22">
    <source>
    </source>
</evidence>
<evidence type="ECO:0000269" key="23">
    <source>
    </source>
</evidence>
<evidence type="ECO:0000269" key="24">
    <source>
    </source>
</evidence>
<evidence type="ECO:0000269" key="25">
    <source>
    </source>
</evidence>
<evidence type="ECO:0000269" key="26">
    <source>
    </source>
</evidence>
<evidence type="ECO:0000269" key="27">
    <source>
    </source>
</evidence>
<evidence type="ECO:0000269" key="28">
    <source>
    </source>
</evidence>
<evidence type="ECO:0000269" key="29">
    <source>
    </source>
</evidence>
<evidence type="ECO:0000269" key="30">
    <source>
    </source>
</evidence>
<evidence type="ECO:0000269" key="31">
    <source>
    </source>
</evidence>
<evidence type="ECO:0000269" key="32">
    <source>
    </source>
</evidence>
<evidence type="ECO:0000269" key="33">
    <source>
    </source>
</evidence>
<evidence type="ECO:0000269" key="34">
    <source>
    </source>
</evidence>
<evidence type="ECO:0000269" key="35">
    <source>
    </source>
</evidence>
<evidence type="ECO:0000269" key="36">
    <source>
    </source>
</evidence>
<evidence type="ECO:0000269" key="37">
    <source>
    </source>
</evidence>
<evidence type="ECO:0000269" key="38">
    <source>
    </source>
</evidence>
<evidence type="ECO:0000269" key="39">
    <source>
    </source>
</evidence>
<evidence type="ECO:0000269" key="40">
    <source>
    </source>
</evidence>
<evidence type="ECO:0000269" key="41">
    <source>
    </source>
</evidence>
<evidence type="ECO:0000269" key="42">
    <source>
    </source>
</evidence>
<evidence type="ECO:0000269" key="43">
    <source>
    </source>
</evidence>
<evidence type="ECO:0000269" key="44">
    <source>
    </source>
</evidence>
<evidence type="ECO:0000269" key="45">
    <source>
    </source>
</evidence>
<evidence type="ECO:0000269" key="46">
    <source>
    </source>
</evidence>
<evidence type="ECO:0000269" key="47">
    <source>
    </source>
</evidence>
<evidence type="ECO:0000269" key="48">
    <source>
    </source>
</evidence>
<evidence type="ECO:0000269" key="49">
    <source>
    </source>
</evidence>
<evidence type="ECO:0000269" key="50">
    <source>
    </source>
</evidence>
<evidence type="ECO:0000269" key="51">
    <source>
    </source>
</evidence>
<evidence type="ECO:0000269" key="52">
    <source>
    </source>
</evidence>
<evidence type="ECO:0000269" key="53">
    <source>
    </source>
</evidence>
<evidence type="ECO:0000269" key="54">
    <source>
    </source>
</evidence>
<evidence type="ECO:0000269" key="55">
    <source>
    </source>
</evidence>
<evidence type="ECO:0000269" key="56">
    <source>
    </source>
</evidence>
<evidence type="ECO:0000269" key="57">
    <source>
    </source>
</evidence>
<evidence type="ECO:0000269" key="58">
    <source>
    </source>
</evidence>
<evidence type="ECO:0000269" key="59">
    <source>
    </source>
</evidence>
<evidence type="ECO:0000269" key="60">
    <source>
    </source>
</evidence>
<evidence type="ECO:0000269" key="61">
    <source>
    </source>
</evidence>
<evidence type="ECO:0000269" key="62">
    <source>
    </source>
</evidence>
<evidence type="ECO:0000269" key="63">
    <source>
    </source>
</evidence>
<evidence type="ECO:0000269" key="64">
    <source>
    </source>
</evidence>
<evidence type="ECO:0000269" key="65">
    <source>
    </source>
</evidence>
<evidence type="ECO:0000269" key="66">
    <source>
    </source>
</evidence>
<evidence type="ECO:0000269" key="67">
    <source>
    </source>
</evidence>
<evidence type="ECO:0000269" key="68">
    <source>
    </source>
</evidence>
<evidence type="ECO:0000269" key="69">
    <source>
    </source>
</evidence>
<evidence type="ECO:0000269" key="70">
    <source>
    </source>
</evidence>
<evidence type="ECO:0000269" key="71">
    <source>
    </source>
</evidence>
<evidence type="ECO:0000269" key="72">
    <source>
    </source>
</evidence>
<evidence type="ECO:0000269" key="73">
    <source>
    </source>
</evidence>
<evidence type="ECO:0000269" key="74">
    <source>
    </source>
</evidence>
<evidence type="ECO:0000269" key="75">
    <source>
    </source>
</evidence>
<evidence type="ECO:0000269" key="76">
    <source>
    </source>
</evidence>
<evidence type="ECO:0000269" key="77">
    <source>
    </source>
</evidence>
<evidence type="ECO:0000269" key="78">
    <source>
    </source>
</evidence>
<evidence type="ECO:0000269" key="79">
    <source>
    </source>
</evidence>
<evidence type="ECO:0000269" key="80">
    <source>
    </source>
</evidence>
<evidence type="ECO:0000269" key="81">
    <source>
    </source>
</evidence>
<evidence type="ECO:0000269" key="82">
    <source>
    </source>
</evidence>
<evidence type="ECO:0000269" key="83">
    <source>
    </source>
</evidence>
<evidence type="ECO:0000269" key="84">
    <source>
    </source>
</evidence>
<evidence type="ECO:0000269" key="85">
    <source>
    </source>
</evidence>
<evidence type="ECO:0000269" key="86">
    <source>
    </source>
</evidence>
<evidence type="ECO:0000269" key="87">
    <source>
    </source>
</evidence>
<evidence type="ECO:0000269" key="88">
    <source>
    </source>
</evidence>
<evidence type="ECO:0000269" key="89">
    <source>
    </source>
</evidence>
<evidence type="ECO:0000269" key="90">
    <source>
    </source>
</evidence>
<evidence type="ECO:0000269" key="91">
    <source>
    </source>
</evidence>
<evidence type="ECO:0000269" key="92">
    <source>
    </source>
</evidence>
<evidence type="ECO:0000269" key="93">
    <source>
    </source>
</evidence>
<evidence type="ECO:0000269" key="94">
    <source>
    </source>
</evidence>
<evidence type="ECO:0000269" key="95">
    <source>
    </source>
</evidence>
<evidence type="ECO:0000269" key="96">
    <source>
    </source>
</evidence>
<evidence type="ECO:0000269" key="97">
    <source>
    </source>
</evidence>
<evidence type="ECO:0000269" key="98">
    <source>
    </source>
</evidence>
<evidence type="ECO:0000269" key="99">
    <source>
    </source>
</evidence>
<evidence type="ECO:0000269" key="100">
    <source>
    </source>
</evidence>
<evidence type="ECO:0000269" key="101">
    <source>
    </source>
</evidence>
<evidence type="ECO:0000269" key="102">
    <source ref="2"/>
</evidence>
<evidence type="ECO:0000269" key="103">
    <source ref="9"/>
</evidence>
<evidence type="ECO:0000303" key="104">
    <source>
    </source>
</evidence>
<evidence type="ECO:0000303" key="105">
    <source>
    </source>
</evidence>
<evidence type="ECO:0000303" key="106">
    <source>
    </source>
</evidence>
<evidence type="ECO:0000303" key="107">
    <source ref="2"/>
</evidence>
<evidence type="ECO:0000305" key="108"/>
<evidence type="ECO:0000305" key="109">
    <source>
    </source>
</evidence>
<evidence type="ECO:0000305" key="110">
    <source>
    </source>
</evidence>
<evidence type="ECO:0007744" key="111">
    <source>
    </source>
</evidence>
<evidence type="ECO:0007829" key="112">
    <source>
        <dbReference type="PDB" id="2ARF"/>
    </source>
</evidence>
<evidence type="ECO:0007829" key="113">
    <source>
        <dbReference type="PDB" id="2EW9"/>
    </source>
</evidence>
<evidence type="ECO:0007829" key="114">
    <source>
        <dbReference type="PDB" id="2LQB"/>
    </source>
</evidence>
<evidence type="ECO:0007829" key="115">
    <source>
        <dbReference type="PDB" id="2N7Y"/>
    </source>
</evidence>
<evidence type="ECO:0007829" key="116">
    <source>
        <dbReference type="PDB" id="2ROP"/>
    </source>
</evidence>
<evidence type="ECO:0007829" key="117">
    <source>
        <dbReference type="PDB" id="6A71"/>
    </source>
</evidence>
<evidence type="ECO:0007829" key="118">
    <source>
        <dbReference type="PDB" id="7XUK"/>
    </source>
</evidence>
<evidence type="ECO:0007829" key="119">
    <source>
        <dbReference type="PDB" id="7XUN"/>
    </source>
</evidence>
<keyword id="KW-0002">3D-structure</keyword>
<keyword id="KW-0025">Alternative splicing</keyword>
<keyword id="KW-0067">ATP-binding</keyword>
<keyword id="KW-0186">Copper</keyword>
<keyword id="KW-0187">Copper transport</keyword>
<keyword id="KW-0963">Cytoplasm</keyword>
<keyword id="KW-0225">Disease variant</keyword>
<keyword id="KW-0967">Endosome</keyword>
<keyword id="KW-0333">Golgi apparatus</keyword>
<keyword id="KW-0406">Ion transport</keyword>
<keyword id="KW-0460">Magnesium</keyword>
<keyword id="KW-0472">Membrane</keyword>
<keyword id="KW-0479">Metal-binding</keyword>
<keyword id="KW-0496">Mitochondrion</keyword>
<keyword id="KW-0547">Nucleotide-binding</keyword>
<keyword id="KW-0597">Phosphoprotein</keyword>
<keyword id="KW-1267">Proteomics identification</keyword>
<keyword id="KW-1185">Reference proteome</keyword>
<keyword id="KW-0677">Repeat</keyword>
<keyword id="KW-0688">Ribosomal frameshifting</keyword>
<keyword id="KW-1278">Translocase</keyword>
<keyword id="KW-0812">Transmembrane</keyword>
<keyword id="KW-1133">Transmembrane helix</keyword>
<keyword id="KW-0813">Transport</keyword>